<comment type="function">
    <molecule>Gag-Pol polyprotein</molecule>
    <text evidence="1">Mediates, with Gag polyprotein, the essential events in virion assembly, including binding the plasma membrane, making the protein-protein interactions necessary to create spherical particles, recruiting the viral Env proteins, and packaging the genomic RNA via direct interactions with the RNA packaging sequence (Psi). Gag-Pol polyprotein may regulate its own translation, by the binding genomic RNA in the 5'-UTR. At low concentration, the polyprotein would promote translation, whereas at high concentration, the polyprotein would encapsidate genomic RNA and then shut off translation.</text>
</comment>
<comment type="function">
    <molecule>Matrix protein p17</molecule>
    <text evidence="4">Targets the polyprotein to the plasma membrane via a multipartite membrane-binding signal, that includes its myristoylated N-terminus. Matrix protein is part of the pre-integration complex. Implicated in the release from host cell mediated by Vpu. Binds to RNA.</text>
</comment>
<comment type="function">
    <molecule>Capsid protein p24</molecule>
    <text evidence="3 4">Forms the conical core that encapsulates the genomic RNA-nucleocapsid complex in the virion. Most core are conical, with only 7% tubular. The core is constituted by capsid protein hexamer subunits. The core is disassembled soon after virion entry (By similarity). Host restriction factors such as TRIM5-alpha or TRIMCyp bind retroviral capsids and cause premature capsid disassembly, leading to blocks in reverse transcription. Capsid restriction by TRIM5 is one of the factors which restricts HIV-1 to the human species. Host PIN1 apparently facilitates the virion uncoating. On the other hand, interactions with PDZD8 or CYPA stabilize the capsid.</text>
</comment>
<comment type="function">
    <molecule>Nucleocapsid protein p7</molecule>
    <text evidence="3">Encapsulates and protects viral dimeric unspliced genomic RNA (gRNA). Binds these RNAs through its zinc fingers. Acts as a nucleic acid chaperone which is involved in rearangement of nucleic acid secondary structure during gRNA retrotranscription. Also facilitates template switch leading to recombination. As part of the polyprotein, participates in gRNA dimerization, packaging, tRNA incorporation and virion assembly.</text>
</comment>
<comment type="function">
    <molecule>Protease</molecule>
    <text evidence="3 7">Aspartyl protease that mediates proteolytic cleavages of Gag and Gag-Pol polyproteins during or shortly after the release of the virion from the plasma membrane. Cleavages take place as an ordered, step-wise cascade to yield mature proteins. This process is called maturation. Displays maximal activity during the budding process just prior to particle release from the cell. Also cleaves Nef and Vif, probably concomitantly with viral structural proteins on maturation of virus particles. Hydrolyzes host EIF4GI and PABP1 in order to shut off the capped cellular mRNA translation. The resulting inhibition of cellular protein synthesis serves to ensure maximal viral gene expression and to evade host immune response. Also mediates cleavage of host YTHDF3. Mediates cleavage of host CARD8, thereby activating the CARD8 inflammasome, leading to the clearance of latent HIV-1 in patient CD4(+) T-cells after viral reactivation; in contrast, HIV-1 can evade CARD8-sensing when its protease remains inactive in infected cells prior to viral budding (By similarity).</text>
</comment>
<comment type="function">
    <molecule>Reverse transcriptase/ribonuclease H</molecule>
    <text evidence="3">Multifunctional enzyme that converts the viral RNA genome into dsDNA in the cytoplasm, shortly after virus entry into the cell. This enzyme displays a DNA polymerase activity that can copy either DNA or RNA templates, and a ribonuclease H (RNase H) activity that cleaves the RNA strand of RNA-DNA heteroduplexes in a partially processive 3' to 5' endonucleasic mode. Conversion of viral genomic RNA into dsDNA requires many steps. A tRNA(3)-Lys binds to the primer-binding site (PBS) situated at the 5'-end of the viral RNA. RT uses the 3' end of the tRNA primer to perform a short round of RNA-dependent minus-strand DNA synthesis. The reading proceeds through the U5 region and ends after the repeated (R) region which is present at both ends of viral RNA. The portion of the RNA-DNA heteroduplex is digested by the RNase H, resulting in a ssDNA product attached to the tRNA primer. This ssDNA/tRNA hybridizes with the identical R region situated at the 3' end of viral RNA. This template exchange, known as minus-strand DNA strong stop transfer, can be either intra- or intermolecular. RT uses the 3' end of this newly synthesized short ssDNA to perform the RNA-dependent minus-strand DNA synthesis of the whole template. RNase H digests the RNA template except for two polypurine tracts (PPTs) situated at the 5'-end and near the center of the genome. It is not clear if both polymerase and RNase H activities are simultaneous. RNase H probably can proceed both in a polymerase-dependent (RNA cut into small fragments by the same RT performing DNA synthesis) and a polymerase-independent mode (cleavage of remaining RNA fragments by free RTs). Secondly, RT performs DNA-directed plus-strand DNA synthesis using the PPTs that have not been removed by RNase H as primers. PPTs and tRNA primers are then removed by RNase H. The 3' and 5' ssDNA PBS regions hybridize to form a circular dsDNA intermediate. Strand displacement synthesis by RT to the PBS and PPT ends produces a blunt ended, linear dsDNA copy of the viral genome that includes long terminal repeats (LTRs) at both ends.</text>
</comment>
<comment type="function">
    <molecule>Integrase</molecule>
    <text evidence="3">Catalyzes viral DNA integration into the host chromosome, by performing a series of DNA cutting and joining reactions. This enzyme activity takes place after virion entry into a cell and reverse transcription of the RNA genome in dsDNA. The first step in the integration process is 3' processing. This step requires a complex comprising the viral genome, matrix protein, Vpr and integrase. This complex is called the pre-integration complex (PIC). The integrase protein removes 2 nucleotides from each 3' end of the viral DNA, leaving recessed CA OH's at the 3' ends. In the second step, the PIC enters cell nucleus. This process is mediated through integrase and Vpr proteins, and allows the virus to infect a non dividing cell. This ability to enter the nucleus is specific of lentiviruses, other retroviruses cannot and rely on cell division to access cell chromosomes. In the third step, termed strand transfer, the integrase protein joins the previously processed 3' ends to the 5' ends of strands of target cellular DNA at the site of integration. The 5'-ends are produced by integrase-catalyzed staggered cuts, 5 bp apart. A Y-shaped, gapped, recombination intermediate results, with the 5'-ends of the viral DNA strands and the 3' ends of target DNA strands remaining unjoined, flanking a gap of 5 bp. The last step is viral DNA integration into host chromosome. This involves host DNA repair synthesis in which the 5 bp gaps between the unjoined strands are filled in and then ligated. Since this process occurs at both cuts flanking the HIV genome, a 5 bp duplication of host DNA is produced at the ends of HIV-1 integration. Alternatively, Integrase may catalyze the excision of viral DNA just after strand transfer, this is termed disintegration.</text>
</comment>
<comment type="catalytic activity">
    <reaction evidence="7">
        <text>Specific for a P1 residue that is hydrophobic, and P1' variable, but often Pro.</text>
        <dbReference type="EC" id="3.4.23.16"/>
    </reaction>
</comment>
<comment type="catalytic activity">
    <reaction evidence="1">
        <text>3'-end directed exonucleolytic cleavage of viral RNA-DNA hybrid.</text>
        <dbReference type="EC" id="3.1.13.2"/>
    </reaction>
</comment>
<comment type="catalytic activity">
    <molecule>Reverse transcriptase/ribonuclease H</molecule>
    <reaction evidence="26">
        <text>Endohydrolysis of RNA in RNA/DNA hybrids. Three different cleavage modes: 1. sequence-specific internal cleavage of RNA. Human immunodeficiency virus type 1 and Moloney murine leukemia virus enzymes prefer to cleave the RNA strand one nucleotide away from the RNA-DNA junction. 2. RNA 5'-end directed cleavage 13-19 nucleotides from the RNA end. 3. DNA 3'-end directed cleavage 15-20 nucleotides away from the primer terminus.</text>
        <dbReference type="EC" id="3.1.26.13"/>
    </reaction>
</comment>
<comment type="catalytic activity">
    <molecule>Reverse transcriptase/ribonuclease H</molecule>
    <reaction evidence="8 26">
        <text>DNA(n) + a 2'-deoxyribonucleoside 5'-triphosphate = DNA(n+1) + diphosphate</text>
        <dbReference type="Rhea" id="RHEA:22508"/>
        <dbReference type="Rhea" id="RHEA-COMP:17339"/>
        <dbReference type="Rhea" id="RHEA-COMP:17340"/>
        <dbReference type="ChEBI" id="CHEBI:33019"/>
        <dbReference type="ChEBI" id="CHEBI:61560"/>
        <dbReference type="ChEBI" id="CHEBI:173112"/>
        <dbReference type="EC" id="2.7.7.49"/>
    </reaction>
</comment>
<comment type="catalytic activity">
    <molecule>Reverse transcriptase/ribonuclease H</molecule>
    <reaction evidence="8 26">
        <text>DNA(n) + a 2'-deoxyribonucleoside 5'-triphosphate = DNA(n+1) + diphosphate</text>
        <dbReference type="Rhea" id="RHEA:22508"/>
        <dbReference type="Rhea" id="RHEA-COMP:17339"/>
        <dbReference type="Rhea" id="RHEA-COMP:17340"/>
        <dbReference type="ChEBI" id="CHEBI:33019"/>
        <dbReference type="ChEBI" id="CHEBI:61560"/>
        <dbReference type="ChEBI" id="CHEBI:173112"/>
        <dbReference type="EC" id="2.7.7.7"/>
    </reaction>
</comment>
<comment type="cofactor">
    <cofactor evidence="1">
        <name>Mg(2+)</name>
        <dbReference type="ChEBI" id="CHEBI:18420"/>
    </cofactor>
    <text evidence="1">Binds 2 magnesium ions for reverse transcriptase polymerase activity.</text>
</comment>
<comment type="cofactor">
    <cofactor evidence="1">
        <name>Mg(2+)</name>
        <dbReference type="ChEBI" id="CHEBI:18420"/>
    </cofactor>
    <text evidence="1">Binds 2 magnesium ions for ribonuclease H (RNase H) activity. Substrate-binding is a precondition for magnesium binding.</text>
</comment>
<comment type="cofactor">
    <cofactor evidence="1">
        <name>Mg(2+)</name>
        <dbReference type="ChEBI" id="CHEBI:18420"/>
    </cofactor>
    <text evidence="1">Magnesium ions are required for integrase activity. Binds at least 1, maybe 2 magnesium ions.</text>
</comment>
<comment type="activity regulation">
    <text evidence="1">Protease: The viral protease is inhibited by many synthetic protease inhibitors (PIs), such as amprenavir, atazanavir, indinavir, loprinavir, nelfinavir, ritonavir and saquinavir. Use of protease inhibitors in tritherapy regimens permit more ambitious therapeutic strategies. Reverse transcriptase/ribonuclease H: RT can be inhibited either by nucleoside RT inhibitors (NRTIs) or by non nucleoside RT inhibitors (NNRTIs). NRTIs act as chain terminators, whereas NNRTIs inhibit DNA polymerization by binding a small hydrophobic pocket near the RT active site and inducing an allosteric change in this region. Classical NRTIs are abacavir, adefovir (PMEA), didanosine (ddI), lamivudine (3TC), stavudine (d4T), tenofovir (PMPA), zalcitabine (ddC), and zidovudine (AZT). Classical NNRTIs are atevirdine (BHAP U-87201E), delavirdine, efavirenz (DMP-266), emivirine (I-EBU), and nevirapine (BI-RG-587). The tritherapies used as a basic effective treatment of AIDS associate two NRTIs and one NNRTI.</text>
</comment>
<comment type="subunit">
    <molecule>Matrix protein p17</molecule>
    <text evidence="3 4">Homotrimer; further assembles as hexamers of trimers (By similarity). Interacts with gp41 (via C-terminus) (By similarity). Interacts with host CALM1; this interaction induces a conformational change in the Matrix protein, triggering exposure of the myristate group (By similarity). Interacts with host AP3D1; this interaction allows the polyprotein trafficking to multivesicular bodies during virus assembly (By similarity). Part of the pre-integration complex (PIC) which is composed of viral genome, matrix protein, Vpr and integrase (By similarity).</text>
</comment>
<comment type="subunit">
    <molecule>Capsid protein p24</molecule>
    <text evidence="3 4">Homodimer; the homodimer further multimerizes as homohexamers or homopentamers. Interacts with human PPIA/CYPA (By similarity); This interaction stabilizes the capsid. Interacts with human NUP153 (By similarity). Interacts with host PDZD8; this interaction stabilizes the capsid (By similarity). Interacts with monkey TRIM5; this interaction destabilizes the capsid (By similarity).</text>
</comment>
<comment type="subunit">
    <molecule>Protease</molecule>
    <text evidence="3 4">Homodimer, whose active site consists of two apposed aspartic acid residues.</text>
</comment>
<comment type="subunit">
    <molecule>Reverse transcriptase/ribonuclease H</molecule>
    <text evidence="27 29">Heterodimer of p66 RT and p51 RT (RT p66/p51) (PubMed:7687065, PubMed:8805568). Heterodimerization of RT is essential for DNA polymerase activity (PubMed:7687065, PubMed:8805568). The overall folding of the subdomains is similar in p66 RT and p51 RT but the spatial arrangements of the subdomains are dramatically different (PubMed:7687065).</text>
</comment>
<comment type="subunit">
    <molecule>Integrase</molecule>
    <text evidence="2 3 4">Homotetramer; may further associate as a homohexadecamer (By similarity). Part of the pre-integration complex (PIC) which is composed of viral genome, matrix protein, Vpr and integrase. Interacts with human SMARCB1/INI1 and human PSIP1/LEDGF isoform 1. Interacts with human KPNA3; this interaction might play a role in nuclear import of the pre-integration complex (By similarity). Interacts with human NUP153; this interaction might play a role in nuclear import of the pre-integration complex (By similarity).</text>
</comment>
<comment type="subcellular location">
    <molecule>Gag-Pol polyprotein</molecule>
    <subcellularLocation>
        <location>Host cell membrane</location>
        <topology>Lipid-anchor</topology>
    </subcellularLocation>
    <subcellularLocation>
        <location>Host endosome</location>
        <location>Host multivesicular body</location>
    </subcellularLocation>
    <text evidence="4">These locations are linked to virus assembly sites. The main location is the cell membrane, but under some circumstances, late endosomal compartments can serve as productive sites for virion assembly.</text>
</comment>
<comment type="subcellular location">
    <molecule>Matrix protein p17</molecule>
    <subcellularLocation>
        <location>Virion membrane</location>
        <topology evidence="33">Lipid-anchor</topology>
    </subcellularLocation>
    <subcellularLocation>
        <location evidence="1">Host nucleus</location>
    </subcellularLocation>
    <subcellularLocation>
        <location evidence="1">Host cytoplasm</location>
    </subcellularLocation>
</comment>
<comment type="subcellular location">
    <molecule>Capsid protein p24</molecule>
    <subcellularLocation>
        <location evidence="33">Virion</location>
    </subcellularLocation>
</comment>
<comment type="subcellular location">
    <molecule>Nucleocapsid protein p7</molecule>
    <subcellularLocation>
        <location evidence="33">Virion</location>
    </subcellularLocation>
</comment>
<comment type="subcellular location">
    <molecule>Reverse transcriptase/ribonuclease H</molecule>
    <subcellularLocation>
        <location evidence="33">Virion</location>
    </subcellularLocation>
</comment>
<comment type="subcellular location">
    <molecule>Integrase</molecule>
    <subcellularLocation>
        <location evidence="33">Virion</location>
    </subcellularLocation>
    <subcellularLocation>
        <location evidence="33">Host nucleus</location>
    </subcellularLocation>
    <subcellularLocation>
        <location evidence="33">Host cytoplasm</location>
    </subcellularLocation>
    <text evidence="33">Nuclear at initial phase, cytoplasmic at assembly.</text>
</comment>
<comment type="alternative products">
    <event type="ribosomal frameshifting"/>
    <isoform>
        <id>P03366-1</id>
        <name>Gag-Pol polyprotein</name>
        <sequence type="displayed"/>
    </isoform>
    <isoform>
        <id>P03347-1</id>
        <name>Gag polyprotein</name>
        <sequence type="external"/>
    </isoform>
    <text evidence="16">Translation results in the formation of the Gag polyprotein most of the time. Ribosomal frameshifting at the gag-pol genes boundary occurs at low frequency and produces the Gag-Pol polyprotein. This strategy of translation probably allows the virus to modulate the quantity of each viral protein. Maintenance of a correct Gag to Gag-Pol ratio is essential for RNA dimerization and viral infectivity.</text>
</comment>
<comment type="domain">
    <molecule>Reverse transcriptase/ribonuclease H</molecule>
    <text evidence="1">RT is structured in five subdomains: finger, palm, thumb, connection and RNase H. Within the palm subdomain, the 'primer grip' region is thought to be involved in the positioning of the primer terminus for accommodating the incoming nucleotide. The RNase H domain stabilizes the association of RT with primer-template.</text>
</comment>
<comment type="domain">
    <molecule>Reverse transcriptase/ribonuclease H</molecule>
    <text evidence="1">The tryptophan repeat motif is involved in RT p66/p51 dimerization (By similarity).</text>
</comment>
<comment type="domain">
    <molecule>Integrase</molecule>
    <text evidence="1">The core domain contains the D-x(n)-D-x(35)-E motif, named for the phylogenetically conserved glutamic acid and aspartic acid residues and the invariant 35 amino acid spacing between the second and third acidic residues. Each acidic residue of the D,D(35)E motif is independently essential for the 3'-processing and strand transfer activities of purified integrase protein.</text>
</comment>
<comment type="PTM">
    <molecule>Gag-Pol polyprotein</molecule>
    <text evidence="3 8">Specific enzymatic cleavages by the viral protease yield mature proteins. The protease is released by autocatalytic cleavage. The polyprotein is cleaved during and after budding, this process is termed maturation. Proteolytic cleavage of p66 RT removes the RNase H domain to yield the p51 RT subunit. Nucleocapsid protein p7 might be further cleaved after virus entry.</text>
</comment>
<comment type="PTM">
    <molecule>Matrix protein p17</molecule>
    <text evidence="3">Tyrosine phosphorylated presumably in the virion by a host kinase. Phosphorylation is apparently not a major regulator of membrane association.</text>
</comment>
<comment type="PTM">
    <molecule>Capsid protein p24</molecule>
    <text evidence="4">Phosphorylated possibly by host MAPK1; this phosphorylation is necessary for Pin1-mediated virion uncoating.</text>
</comment>
<comment type="PTM">
    <molecule>Nucleocapsid protein p7</molecule>
    <text evidence="24">Methylated by host PRMT6, impairing its function by reducing RNA annealing and the initiation of reverse transcription.</text>
</comment>
<comment type="miscellaneous">
    <molecule>Reverse transcriptase/ribonuclease H</molecule>
    <text evidence="1">Error-prone enzyme that lacks a proof-reading function. High mutations rate is a direct consequence of this characteristic. RT also displays frequent template switching leading to high recombination rate. Recombination mostly occurs between homologous regions of the two copackaged RNA genomes. If these two RNA molecules derive from different viral strains, reverse transcription will give rise to highly recombinated proviral DNAs.</text>
</comment>
<comment type="miscellaneous">
    <text>HIV-1 lineages are divided in three main groups, M (for Major), O (for Outlier), and N (for New, or Non-M, Non-O). The vast majority of strains found worldwide belong to the group M. Group O seems to be endemic to and largely confined to Cameroon and neighboring countries in West Central Africa, where these viruses represent a small minority of HIV-1 strains. The group N is represented by a limited number of isolates from Cameroonian persons. The group M is further subdivided in 9 clades or subtypes (A to D, F to H, J and K).</text>
</comment>
<comment type="miscellaneous">
    <text>Resistance to inhibitors associated with mutations are observed both in viral protease and in reverse transcriptase. Most of the time, single mutations confer only a modest reduction in drug susceptibility. Combination of several mutations is usually required to develop a high-level drug resistance. These mutations are predominantly found in clade B viruses and not in other genotypes. They are listed in the clade B representative isolate HXB2 (AC P04585).</text>
</comment>
<comment type="miscellaneous">
    <molecule>Isoform Gag-Pol polyprotein</molecule>
    <text>Produced by -1 ribosomal frameshifting.</text>
</comment>
<comment type="online information" name="HIV drug resistance mutations">
    <link uri="https://www.iasusa.org/hiv-drug-resistance/hiv-drug-resistance-mutations/"/>
</comment>
<comment type="online information" name="hivdb">
    <link uri="https://hivdb.stanford.edu"/>
    <text>HIV drug resistance database</text>
</comment>
<dbReference type="EC" id="3.4.23.16"/>
<dbReference type="EC" id="2.7.7.49" evidence="26"/>
<dbReference type="EC" id="2.7.7.7" evidence="26"/>
<dbReference type="EC" id="3.1.26.13" evidence="26"/>
<dbReference type="EC" id="3.1.13.2"/>
<dbReference type="EC" id="2.7.7.-" evidence="3"/>
<dbReference type="EC" id="3.1.-.-" evidence="3"/>
<dbReference type="EMBL" id="M15654">
    <property type="protein sequence ID" value="AAA44198.1"/>
    <property type="status" value="ALT_SEQ"/>
    <property type="molecule type" value="Genomic_RNA"/>
</dbReference>
<dbReference type="EMBL" id="K02083">
    <property type="protein sequence ID" value="AAB59867.1"/>
    <property type="status" value="ALT_SEQ"/>
    <property type="molecule type" value="Genomic_DNA"/>
</dbReference>
<dbReference type="EMBL" id="X01762">
    <property type="status" value="NOT_ANNOTATED_CDS"/>
    <property type="molecule type" value="Genomic_RNA"/>
</dbReference>
<dbReference type="PIR" id="A03965">
    <property type="entry name" value="GNVWH3"/>
</dbReference>
<dbReference type="PIR" id="A03967">
    <property type="entry name" value="GNVWVL"/>
</dbReference>
<dbReference type="PDB" id="1A9M">
    <property type="method" value="X-ray"/>
    <property type="resolution" value="2.30 A"/>
    <property type="chains" value="A/B=501-599"/>
</dbReference>
<dbReference type="PDB" id="1AJV">
    <property type="method" value="X-ray"/>
    <property type="resolution" value="2.00 A"/>
    <property type="chains" value="A/B=501-599"/>
</dbReference>
<dbReference type="PDB" id="1AJX">
    <property type="method" value="X-ray"/>
    <property type="resolution" value="2.00 A"/>
    <property type="chains" value="A/B=501-599"/>
</dbReference>
<dbReference type="PDB" id="1AXA">
    <property type="method" value="X-ray"/>
    <property type="resolution" value="2.00 A"/>
    <property type="chains" value="A/B=501-599"/>
</dbReference>
<dbReference type="PDB" id="1BQM">
    <property type="method" value="X-ray"/>
    <property type="resolution" value="3.10 A"/>
    <property type="chains" value="A=600-1155, B=600-1029"/>
</dbReference>
<dbReference type="PDB" id="1BQN">
    <property type="method" value="X-ray"/>
    <property type="resolution" value="3.30 A"/>
    <property type="chains" value="A=600-1157, B=600-1029"/>
</dbReference>
<dbReference type="PDB" id="1D4H">
    <property type="method" value="X-ray"/>
    <property type="resolution" value="1.81 A"/>
    <property type="chains" value="A/B=501-599"/>
</dbReference>
<dbReference type="PDB" id="1D4I">
    <property type="method" value="X-ray"/>
    <property type="resolution" value="1.81 A"/>
    <property type="chains" value="A/B=501-599"/>
</dbReference>
<dbReference type="PDB" id="1D4J">
    <property type="method" value="X-ray"/>
    <property type="resolution" value="1.81 A"/>
    <property type="chains" value="A/B=501-599"/>
</dbReference>
<dbReference type="PDB" id="1DLO">
    <property type="method" value="X-ray"/>
    <property type="resolution" value="2.70 A"/>
    <property type="chains" value="A=600-1155, B=600-1026"/>
</dbReference>
<dbReference type="PDB" id="1DW6">
    <property type="method" value="X-ray"/>
    <property type="resolution" value="1.88 A"/>
    <property type="chains" value="C/D=501-599"/>
</dbReference>
<dbReference type="PDB" id="1EBK">
    <property type="method" value="X-ray"/>
    <property type="resolution" value="2.06 A"/>
    <property type="chains" value="C/D/E/F=501-599"/>
</dbReference>
<dbReference type="PDB" id="1EBW">
    <property type="method" value="X-ray"/>
    <property type="resolution" value="1.81 A"/>
    <property type="chains" value="A/B=501-599"/>
</dbReference>
<dbReference type="PDB" id="1EBY">
    <property type="method" value="X-ray"/>
    <property type="resolution" value="2.29 A"/>
    <property type="chains" value="A/B=501-599"/>
</dbReference>
<dbReference type="PDB" id="1EBZ">
    <property type="method" value="X-ray"/>
    <property type="resolution" value="2.01 A"/>
    <property type="chains" value="A/B=501-599"/>
</dbReference>
<dbReference type="PDB" id="1EC0">
    <property type="method" value="X-ray"/>
    <property type="resolution" value="1.79 A"/>
    <property type="chains" value="A/B=501-599"/>
</dbReference>
<dbReference type="PDB" id="1EC1">
    <property type="method" value="X-ray"/>
    <property type="resolution" value="2.10 A"/>
    <property type="chains" value="A/B=501-599"/>
</dbReference>
<dbReference type="PDB" id="1EC2">
    <property type="method" value="X-ray"/>
    <property type="resolution" value="2.00 A"/>
    <property type="chains" value="A/B=501-599"/>
</dbReference>
<dbReference type="PDB" id="1EC3">
    <property type="method" value="X-ray"/>
    <property type="resolution" value="1.80 A"/>
    <property type="chains" value="A/B=501-599"/>
</dbReference>
<dbReference type="PDB" id="1EET">
    <property type="method" value="X-ray"/>
    <property type="resolution" value="2.73 A"/>
    <property type="chains" value="A=600-1156, B=600-1026"/>
</dbReference>
<dbReference type="PDB" id="1G35">
    <property type="method" value="X-ray"/>
    <property type="resolution" value="1.80 A"/>
    <property type="chains" value="A/B=501-599"/>
</dbReference>
<dbReference type="PDB" id="1GNM">
    <property type="method" value="X-ray"/>
    <property type="resolution" value="2.30 A"/>
    <property type="chains" value="A/B=501-599"/>
</dbReference>
<dbReference type="PDB" id="1GNN">
    <property type="method" value="X-ray"/>
    <property type="resolution" value="2.30 A"/>
    <property type="chains" value="A/B=501-599"/>
</dbReference>
<dbReference type="PDB" id="1GNO">
    <property type="method" value="X-ray"/>
    <property type="resolution" value="2.30 A"/>
    <property type="chains" value="A/B=501-599"/>
</dbReference>
<dbReference type="PDB" id="1HAR">
    <property type="method" value="X-ray"/>
    <property type="resolution" value="2.20 A"/>
    <property type="chains" value="A=600-815"/>
</dbReference>
<dbReference type="PDB" id="1HBV">
    <property type="method" value="X-ray"/>
    <property type="resolution" value="2.30 A"/>
    <property type="chains" value="A/B=501-599"/>
</dbReference>
<dbReference type="PDB" id="1HEF">
    <property type="method" value="X-ray"/>
    <property type="resolution" value="2.20 A"/>
    <property type="chains" value="E=501-599"/>
</dbReference>
<dbReference type="PDB" id="1HEG">
    <property type="method" value="X-ray"/>
    <property type="resolution" value="2.20 A"/>
    <property type="chains" value="E=501-599"/>
</dbReference>
<dbReference type="PDB" id="1HIH">
    <property type="method" value="X-ray"/>
    <property type="resolution" value="2.20 A"/>
    <property type="chains" value="A/B=501-599"/>
</dbReference>
<dbReference type="PDB" id="1HMV">
    <property type="method" value="X-ray"/>
    <property type="resolution" value="3.20 A"/>
    <property type="chains" value="A/C/E/G=600-1159, B/D/F/H=600-1039"/>
</dbReference>
<dbReference type="PDB" id="1HNI">
    <property type="method" value="X-ray"/>
    <property type="resolution" value="2.80 A"/>
    <property type="chains" value="A=600-1157"/>
</dbReference>
<dbReference type="PDB" id="1HNV">
    <property type="method" value="X-ray"/>
    <property type="resolution" value="3.00 A"/>
    <property type="chains" value="A=600-1157, B=600-1026"/>
</dbReference>
<dbReference type="PDB" id="1HOS">
    <property type="method" value="X-ray"/>
    <property type="resolution" value="2.30 A"/>
    <property type="chains" value="A/B=501-599"/>
</dbReference>
<dbReference type="PDB" id="1HPS">
    <property type="method" value="X-ray"/>
    <property type="resolution" value="2.30 A"/>
    <property type="chains" value="A/B=501-599"/>
</dbReference>
<dbReference type="PDB" id="1HPZ">
    <property type="method" value="X-ray"/>
    <property type="resolution" value="3.00 A"/>
    <property type="chains" value="A=600-1159, B=600-1029"/>
</dbReference>
<dbReference type="PDB" id="1HQE">
    <property type="method" value="X-ray"/>
    <property type="resolution" value="2.70 A"/>
    <property type="chains" value="A=600-1159, B=600-1029"/>
</dbReference>
<dbReference type="PDB" id="1HQU">
    <property type="method" value="X-ray"/>
    <property type="resolution" value="2.70 A"/>
    <property type="chains" value="A=600-1159, B=600-1029"/>
</dbReference>
<dbReference type="PDB" id="1HRH">
    <property type="method" value="X-ray"/>
    <property type="resolution" value="2.40 A"/>
    <property type="chains" value="A/B=1026-1161"/>
</dbReference>
<dbReference type="PDB" id="1HTE">
    <property type="method" value="X-ray"/>
    <property type="resolution" value="2.80 A"/>
    <property type="chains" value="A/B=501-599"/>
</dbReference>
<dbReference type="PDB" id="1HTF">
    <property type="method" value="X-ray"/>
    <property type="resolution" value="2.20 A"/>
    <property type="chains" value="A/B=501-599"/>
</dbReference>
<dbReference type="PDB" id="1HTG">
    <property type="method" value="X-ray"/>
    <property type="resolution" value="2.00 A"/>
    <property type="chains" value="A/B=501-599"/>
</dbReference>
<dbReference type="PDB" id="1HVI">
    <property type="method" value="X-ray"/>
    <property type="resolution" value="1.80 A"/>
    <property type="chains" value="A/B=501-599"/>
</dbReference>
<dbReference type="PDB" id="1HVK">
    <property type="method" value="X-ray"/>
    <property type="resolution" value="1.80 A"/>
    <property type="chains" value="A/B=501-599"/>
</dbReference>
<dbReference type="PDB" id="1HVU">
    <property type="method" value="X-ray"/>
    <property type="resolution" value="4.75 A"/>
    <property type="chains" value="A/D/G/J=600-1153, B/E/H/K=604-1026"/>
</dbReference>
<dbReference type="PDB" id="1HYS">
    <property type="method" value="X-ray"/>
    <property type="resolution" value="3.00 A"/>
    <property type="chains" value="A=600-1152, B=600-1024"/>
</dbReference>
<dbReference type="PDB" id="1IKV">
    <property type="method" value="X-ray"/>
    <property type="resolution" value="3.00 A"/>
    <property type="chains" value="A=600-1159, B=600-1026"/>
</dbReference>
<dbReference type="PDB" id="1IKW">
    <property type="method" value="X-ray"/>
    <property type="resolution" value="3.00 A"/>
    <property type="chains" value="A=600-1159, B=600-1026"/>
</dbReference>
<dbReference type="PDB" id="1IKX">
    <property type="method" value="X-ray"/>
    <property type="resolution" value="2.80 A"/>
    <property type="chains" value="A=600-1159, B=600-1026"/>
</dbReference>
<dbReference type="PDB" id="1IKY">
    <property type="method" value="X-ray"/>
    <property type="resolution" value="3.00 A"/>
    <property type="chains" value="A=600-1159, B=600-1026"/>
</dbReference>
<dbReference type="PDB" id="1J5O">
    <property type="method" value="X-ray"/>
    <property type="resolution" value="3.50 A"/>
    <property type="chains" value="A=600-1157, B=600-1029"/>
</dbReference>
<dbReference type="PDB" id="1KJH">
    <property type="method" value="X-ray"/>
    <property type="resolution" value="2.00 A"/>
    <property type="chains" value="P=1155-1164"/>
</dbReference>
<dbReference type="PDB" id="1MER">
    <property type="method" value="X-ray"/>
    <property type="resolution" value="1.90 A"/>
    <property type="chains" value="A/B=501-599"/>
</dbReference>
<dbReference type="PDB" id="1MES">
    <property type="method" value="X-ray"/>
    <property type="resolution" value="1.90 A"/>
    <property type="chains" value="A/B=501-599"/>
</dbReference>
<dbReference type="PDB" id="1MET">
    <property type="method" value="X-ray"/>
    <property type="resolution" value="1.90 A"/>
    <property type="chains" value="A/B=501-599"/>
</dbReference>
<dbReference type="PDB" id="1MEU">
    <property type="method" value="X-ray"/>
    <property type="resolution" value="1.90 A"/>
    <property type="chains" value="A/B=501-599"/>
</dbReference>
<dbReference type="PDB" id="1N5Y">
    <property type="method" value="X-ray"/>
    <property type="resolution" value="3.10 A"/>
    <property type="chains" value="A=600-1157, B=600-1029"/>
</dbReference>
<dbReference type="PDB" id="1N6Q">
    <property type="method" value="X-ray"/>
    <property type="resolution" value="3.00 A"/>
    <property type="chains" value="A=600-1157, B=600-1029"/>
</dbReference>
<dbReference type="PDB" id="1NPA">
    <property type="method" value="X-ray"/>
    <property type="resolution" value="2.00 A"/>
    <property type="chains" value="A/B=501-599"/>
</dbReference>
<dbReference type="PDB" id="1NPV">
    <property type="method" value="X-ray"/>
    <property type="resolution" value="2.00 A"/>
    <property type="chains" value="A/B=501-599"/>
</dbReference>
<dbReference type="PDB" id="1NPW">
    <property type="method" value="X-ray"/>
    <property type="resolution" value="2.00 A"/>
    <property type="chains" value="A/B=501-599"/>
</dbReference>
<dbReference type="PDB" id="1QE1">
    <property type="method" value="X-ray"/>
    <property type="resolution" value="2.85 A"/>
    <property type="chains" value="A=600-1157, B=600-1026"/>
</dbReference>
<dbReference type="PDB" id="1QMC">
    <property type="method" value="NMR"/>
    <property type="chains" value="A/B=1379-1429"/>
</dbReference>
<dbReference type="PDB" id="1R0A">
    <property type="method" value="X-ray"/>
    <property type="resolution" value="2.80 A"/>
    <property type="chains" value="A=600-1157, B=600-1028"/>
</dbReference>
<dbReference type="PDB" id="1RDH">
    <property type="method" value="X-ray"/>
    <property type="resolution" value="2.80 A"/>
    <property type="chains" value="A/B=1026-1159"/>
</dbReference>
<dbReference type="PDB" id="1RTD">
    <property type="method" value="X-ray"/>
    <property type="resolution" value="3.20 A"/>
    <property type="chains" value="A/C=600-1153"/>
</dbReference>
<dbReference type="PDB" id="1S6P">
    <property type="method" value="X-ray"/>
    <property type="resolution" value="2.90 A"/>
    <property type="chains" value="A=600-1159, B=600-1029"/>
</dbReference>
<dbReference type="PDB" id="1S6Q">
    <property type="method" value="X-ray"/>
    <property type="resolution" value="3.00 A"/>
    <property type="chains" value="A=600-1159, B=600-1029"/>
</dbReference>
<dbReference type="PDB" id="1S9E">
    <property type="method" value="X-ray"/>
    <property type="resolution" value="2.60 A"/>
    <property type="chains" value="A=600-1159, B=600-1029"/>
</dbReference>
<dbReference type="PDB" id="1S9G">
    <property type="method" value="X-ray"/>
    <property type="resolution" value="2.80 A"/>
    <property type="chains" value="A=600-1159, B=600-1029"/>
</dbReference>
<dbReference type="PDB" id="1SBG">
    <property type="method" value="X-ray"/>
    <property type="resolution" value="2.30 A"/>
    <property type="chains" value="A/B=501-599"/>
</dbReference>
<dbReference type="PDB" id="1SUQ">
    <property type="method" value="X-ray"/>
    <property type="resolution" value="3.00 A"/>
    <property type="chains" value="A=600-1159, B=600-1029"/>
</dbReference>
<dbReference type="PDB" id="1SV5">
    <property type="method" value="X-ray"/>
    <property type="resolution" value="2.90 A"/>
    <property type="chains" value="A=600-1159, B=600-1029"/>
</dbReference>
<dbReference type="PDB" id="1T03">
    <property type="method" value="X-ray"/>
    <property type="resolution" value="3.10 A"/>
    <property type="chains" value="A=600-1157, B=600-1028"/>
</dbReference>
<dbReference type="PDB" id="1T05">
    <property type="method" value="X-ray"/>
    <property type="resolution" value="3.00 A"/>
    <property type="chains" value="A=600-1157"/>
</dbReference>
<dbReference type="PDB" id="1T7K">
    <property type="method" value="X-ray"/>
    <property type="resolution" value="2.10 A"/>
    <property type="chains" value="A/B=501-599"/>
</dbReference>
<dbReference type="PDB" id="1TV6">
    <property type="method" value="X-ray"/>
    <property type="resolution" value="2.80 A"/>
    <property type="chains" value="A=600-1159, B=600-1039"/>
</dbReference>
<dbReference type="PDB" id="1TVR">
    <property type="method" value="X-ray"/>
    <property type="resolution" value="3.00 A"/>
    <property type="chains" value="A=600-1157, B=600-1026"/>
</dbReference>
<dbReference type="PDB" id="1UWB">
    <property type="method" value="X-ray"/>
    <property type="resolution" value="3.20 A"/>
    <property type="chains" value="A=600-1157, B=600-1026"/>
</dbReference>
<dbReference type="PDB" id="1W5V">
    <property type="method" value="X-ray"/>
    <property type="resolution" value="1.80 A"/>
    <property type="chains" value="A/B=490-599"/>
</dbReference>
<dbReference type="PDB" id="1W5W">
    <property type="method" value="X-ray"/>
    <property type="resolution" value="1.80 A"/>
    <property type="chains" value="A/B=490-599"/>
</dbReference>
<dbReference type="PDB" id="1W5X">
    <property type="method" value="X-ray"/>
    <property type="resolution" value="1.90 A"/>
    <property type="chains" value="A/B=490-599"/>
</dbReference>
<dbReference type="PDB" id="1W5Y">
    <property type="method" value="X-ray"/>
    <property type="resolution" value="1.90 A"/>
    <property type="chains" value="A/B=490-599"/>
</dbReference>
<dbReference type="PDB" id="1YT9">
    <property type="method" value="X-ray"/>
    <property type="resolution" value="3.00 A"/>
    <property type="chains" value="A/B=501-599"/>
</dbReference>
<dbReference type="PDB" id="1ZP8">
    <property type="method" value="X-ray"/>
    <property type="resolution" value="2.02 A"/>
    <property type="chains" value="A=501-599"/>
</dbReference>
<dbReference type="PDB" id="1ZPA">
    <property type="method" value="X-ray"/>
    <property type="resolution" value="2.02 A"/>
    <property type="chains" value="A=501-599"/>
</dbReference>
<dbReference type="PDB" id="1ZSF">
    <property type="method" value="X-ray"/>
    <property type="resolution" value="1.98 A"/>
    <property type="chains" value="A/B=501-599"/>
</dbReference>
<dbReference type="PDB" id="1ZSR">
    <property type="method" value="X-ray"/>
    <property type="resolution" value="2.06 A"/>
    <property type="chains" value="A/B=501-599"/>
</dbReference>
<dbReference type="PDB" id="2AQU">
    <property type="method" value="X-ray"/>
    <property type="resolution" value="2.00 A"/>
    <property type="chains" value="A/B=501-599"/>
</dbReference>
<dbReference type="PDB" id="2B5J">
    <property type="method" value="X-ray"/>
    <property type="resolution" value="2.90 A"/>
    <property type="chains" value="A=600-1159, B=600-1029"/>
</dbReference>
<dbReference type="PDB" id="2B6A">
    <property type="method" value="X-ray"/>
    <property type="resolution" value="2.65 A"/>
    <property type="chains" value="A=600-1159, B=600-1029"/>
</dbReference>
<dbReference type="PDB" id="2BAN">
    <property type="method" value="X-ray"/>
    <property type="resolution" value="2.95 A"/>
    <property type="chains" value="A=600-1159, B=600-1029"/>
</dbReference>
<dbReference type="PDB" id="2BBB">
    <property type="method" value="X-ray"/>
    <property type="resolution" value="1.70 A"/>
    <property type="chains" value="A/B=501-599"/>
</dbReference>
<dbReference type="PDB" id="2BE2">
    <property type="method" value="X-ray"/>
    <property type="resolution" value="2.43 A"/>
    <property type="chains" value="A=600-1159, B=600-1029"/>
</dbReference>
<dbReference type="PDB" id="2EXF">
    <property type="method" value="NMR"/>
    <property type="chains" value="A=390-432"/>
</dbReference>
<dbReference type="PDB" id="2G69">
    <property type="method" value="X-ray"/>
    <property type="resolution" value="1.35 A"/>
    <property type="chains" value="A=501-599"/>
</dbReference>
<dbReference type="PDB" id="2HB3">
    <property type="method" value="X-ray"/>
    <property type="resolution" value="1.35 A"/>
    <property type="chains" value="A/B=501-598"/>
</dbReference>
<dbReference type="PDB" id="2HMI">
    <property type="method" value="X-ray"/>
    <property type="resolution" value="2.80 A"/>
    <property type="chains" value="A=600-1157, B=600-1029"/>
</dbReference>
<dbReference type="PDB" id="2HNZ">
    <property type="method" value="X-ray"/>
    <property type="resolution" value="3.00 A"/>
    <property type="chains" value="B=606-1027"/>
</dbReference>
<dbReference type="PDB" id="2HS1">
    <property type="method" value="X-ray"/>
    <property type="resolution" value="0.84 A"/>
    <property type="chains" value="A/B=501-599"/>
</dbReference>
<dbReference type="PDB" id="2HS2">
    <property type="method" value="X-ray"/>
    <property type="resolution" value="1.22 A"/>
    <property type="chains" value="A/B=501-599"/>
</dbReference>
<dbReference type="PDB" id="2I4D">
    <property type="method" value="X-ray"/>
    <property type="resolution" value="1.50 A"/>
    <property type="chains" value="A/B=501-599"/>
</dbReference>
<dbReference type="PDB" id="2I4U">
    <property type="method" value="X-ray"/>
    <property type="resolution" value="1.50 A"/>
    <property type="chains" value="A/B=501-599"/>
</dbReference>
<dbReference type="PDB" id="2I4V">
    <property type="method" value="X-ray"/>
    <property type="resolution" value="1.50 A"/>
    <property type="chains" value="A/B=501-599"/>
</dbReference>
<dbReference type="PDB" id="2I4W">
    <property type="method" value="X-ray"/>
    <property type="resolution" value="1.55 A"/>
    <property type="chains" value="A/B=501-599"/>
</dbReference>
<dbReference type="PDB" id="2I4X">
    <property type="method" value="X-ray"/>
    <property type="resolution" value="1.55 A"/>
    <property type="chains" value="A/B=501-599"/>
</dbReference>
<dbReference type="PDB" id="2I5J">
    <property type="method" value="X-ray"/>
    <property type="resolution" value="3.15 A"/>
    <property type="chains" value="A=600-1150, B=600-1027"/>
</dbReference>
<dbReference type="PDB" id="2IAJ">
    <property type="method" value="X-ray"/>
    <property type="resolution" value="2.50 A"/>
    <property type="chains" value="A=600-1158, B=600-1045"/>
</dbReference>
<dbReference type="PDB" id="2IC3">
    <property type="method" value="X-ray"/>
    <property type="resolution" value="3.00 A"/>
    <property type="chains" value="A=600-1158, B=600-1045"/>
</dbReference>
<dbReference type="PDB" id="2IDW">
    <property type="method" value="X-ray"/>
    <property type="resolution" value="1.10 A"/>
    <property type="chains" value="A/B=501-599"/>
</dbReference>
<dbReference type="PDB" id="2IEO">
    <property type="method" value="X-ray"/>
    <property type="resolution" value="1.53 A"/>
    <property type="chains" value="A/B=501-599"/>
</dbReference>
<dbReference type="PDB" id="2JZW">
    <property type="method" value="NMR"/>
    <property type="chains" value="A=390-432"/>
</dbReference>
<dbReference type="PDB" id="2L45">
    <property type="method" value="NMR"/>
    <property type="chains" value="A=411-429"/>
</dbReference>
<dbReference type="PDB" id="2L46">
    <property type="method" value="NMR"/>
    <property type="chains" value="A=411-429"/>
</dbReference>
<dbReference type="PDB" id="2L4L">
    <property type="method" value="NMR"/>
    <property type="chains" value="A=388-432"/>
</dbReference>
<dbReference type="PDB" id="2UXZ">
    <property type="method" value="X-ray"/>
    <property type="resolution" value="1.75 A"/>
    <property type="chains" value="A/B=501-599"/>
</dbReference>
<dbReference type="PDB" id="2UY0">
    <property type="method" value="X-ray"/>
    <property type="resolution" value="1.76 A"/>
    <property type="chains" value="A/B=501-599"/>
</dbReference>
<dbReference type="PDB" id="2VG5">
    <property type="method" value="X-ray"/>
    <property type="resolution" value="2.80 A"/>
    <property type="chains" value="A=600-1156, B=600-1027"/>
</dbReference>
<dbReference type="PDB" id="2VG6">
    <property type="method" value="X-ray"/>
    <property type="resolution" value="3.01 A"/>
    <property type="chains" value="A=600-1156, B=600-1027"/>
</dbReference>
<dbReference type="PDB" id="2VG7">
    <property type="method" value="X-ray"/>
    <property type="resolution" value="2.82 A"/>
    <property type="chains" value="A=600-1156, B=600-1027"/>
</dbReference>
<dbReference type="PDB" id="2X4U">
    <property type="method" value="X-ray"/>
    <property type="resolution" value="2.10 A"/>
    <property type="chains" value="C/F=908-916"/>
</dbReference>
<dbReference type="PDB" id="2YKM">
    <property type="method" value="X-ray"/>
    <property type="resolution" value="2.90 A"/>
    <property type="chains" value="A=600-1156, B=600-1027"/>
</dbReference>
<dbReference type="PDB" id="2YKN">
    <property type="method" value="X-ray"/>
    <property type="resolution" value="2.12 A"/>
    <property type="chains" value="A=600-1156, B=600-1027"/>
</dbReference>
<dbReference type="PDB" id="2ZD1">
    <property type="method" value="X-ray"/>
    <property type="resolution" value="1.80 A"/>
    <property type="chains" value="A=600-1154, B=600-1027"/>
</dbReference>
<dbReference type="PDB" id="2ZE2">
    <property type="method" value="X-ray"/>
    <property type="resolution" value="2.90 A"/>
    <property type="chains" value="A=600-1154, B=600-1027"/>
</dbReference>
<dbReference type="PDB" id="3AVI">
    <property type="method" value="X-ray"/>
    <property type="resolution" value="1.70 A"/>
    <property type="chains" value="A/B=1209-1371"/>
</dbReference>
<dbReference type="PDB" id="3BGR">
    <property type="method" value="X-ray"/>
    <property type="resolution" value="2.10 A"/>
    <property type="chains" value="A=600-1154, B=600-1027"/>
</dbReference>
<dbReference type="PDB" id="3DLK">
    <property type="method" value="X-ray"/>
    <property type="resolution" value="1.85 A"/>
    <property type="chains" value="A=600-1154, B=605-1027"/>
</dbReference>
<dbReference type="PDB" id="3GGA">
    <property type="method" value="X-ray"/>
    <property type="resolution" value="2.50 A"/>
    <property type="chains" value="A/B/C/D/G/H=501-599"/>
</dbReference>
<dbReference type="PDB" id="3GGV">
    <property type="method" value="X-ray"/>
    <property type="resolution" value="3.09 A"/>
    <property type="chains" value="A/B/C/D/E/F/G/H/I=501-599"/>
</dbReference>
<dbReference type="PDB" id="3GGX">
    <property type="method" value="X-ray"/>
    <property type="resolution" value="2.70 A"/>
    <property type="chains" value="A/B/C/D/E/F/G/H=501-599"/>
</dbReference>
<dbReference type="PDB" id="3HVT">
    <property type="method" value="X-ray"/>
    <property type="resolution" value="2.90 A"/>
    <property type="chains" value="A=600-1155, B=600-1027"/>
</dbReference>
<dbReference type="PDB" id="3IG1">
    <property type="method" value="X-ray"/>
    <property type="resolution" value="2.80 A"/>
    <property type="chains" value="A=600-1154, B=600-1027"/>
</dbReference>
<dbReference type="PDB" id="3IRX">
    <property type="method" value="X-ray"/>
    <property type="resolution" value="2.80 A"/>
    <property type="chains" value="A=600-1154, B=600-1027"/>
</dbReference>
<dbReference type="PDB" id="3IS9">
    <property type="method" value="X-ray"/>
    <property type="resolution" value="2.55 A"/>
    <property type="chains" value="A=600-1154, B=600-1027"/>
</dbReference>
<dbReference type="PDB" id="3ISN">
    <property type="method" value="X-ray"/>
    <property type="resolution" value="2.50 A"/>
    <property type="chains" value="C=600-1159, D=600-1026"/>
</dbReference>
<dbReference type="PDB" id="3ITH">
    <property type="method" value="X-ray"/>
    <property type="resolution" value="2.80 A"/>
    <property type="chains" value="A/C=600-1159, B/D=600-1026"/>
</dbReference>
<dbReference type="PDB" id="3JSM">
    <property type="method" value="X-ray"/>
    <property type="resolution" value="3.00 A"/>
    <property type="chains" value="A=600-1157, B=600-1028"/>
</dbReference>
<dbReference type="PDB" id="3JYT">
    <property type="method" value="X-ray"/>
    <property type="resolution" value="3.30 A"/>
    <property type="chains" value="A=600-1157, B=600-1028"/>
</dbReference>
<dbReference type="PDB" id="3K2P">
    <property type="method" value="X-ray"/>
    <property type="resolution" value="2.04 A"/>
    <property type="chains" value="A/B=1026-1159"/>
</dbReference>
<dbReference type="PDB" id="3K4V">
    <property type="method" value="X-ray"/>
    <property type="resolution" value="1.39 A"/>
    <property type="chains" value="A/B/C/D=501-599"/>
</dbReference>
<dbReference type="PDB" id="3KLE">
    <property type="method" value="X-ray"/>
    <property type="resolution" value="3.20 A"/>
    <property type="chains" value="A/E/I/M=600-1157, B/F/J/N=600-1027"/>
</dbReference>
<dbReference type="PDB" id="3KLF">
    <property type="method" value="X-ray"/>
    <property type="resolution" value="3.15 A"/>
    <property type="chains" value="A/E/I/M=600-1154, B/F/J/N=600-1027"/>
</dbReference>
<dbReference type="PDB" id="3KLG">
    <property type="method" value="X-ray"/>
    <property type="resolution" value="3.65 A"/>
    <property type="chains" value="A/E=600-1157, B/F=600-1027"/>
</dbReference>
<dbReference type="PDB" id="3KLH">
    <property type="method" value="X-ray"/>
    <property type="resolution" value="2.90 A"/>
    <property type="chains" value="A=600-1159, B=600-1027"/>
</dbReference>
<dbReference type="PDB" id="3KLI">
    <property type="method" value="X-ray"/>
    <property type="resolution" value="2.65 A"/>
    <property type="chains" value="A=600-1157, B=600-1027"/>
</dbReference>
<dbReference type="PDB" id="3NDT">
    <property type="method" value="X-ray"/>
    <property type="resolution" value="1.72 A"/>
    <property type="chains" value="A/B/C/D=501-599"/>
</dbReference>
<dbReference type="PDB" id="3NU3">
    <property type="method" value="X-ray"/>
    <property type="resolution" value="1.02 A"/>
    <property type="chains" value="A/B=501-599"/>
</dbReference>
<dbReference type="PDB" id="3NU4">
    <property type="method" value="X-ray"/>
    <property type="resolution" value="1.20 A"/>
    <property type="chains" value="A/B=501-599"/>
</dbReference>
<dbReference type="PDB" id="3NU5">
    <property type="method" value="X-ray"/>
    <property type="resolution" value="1.29 A"/>
    <property type="chains" value="A/B=501-599"/>
</dbReference>
<dbReference type="PDB" id="3NU6">
    <property type="method" value="X-ray"/>
    <property type="resolution" value="1.16 A"/>
    <property type="chains" value="A/B=501-599"/>
</dbReference>
<dbReference type="PDB" id="3NU9">
    <property type="method" value="X-ray"/>
    <property type="resolution" value="1.85 A"/>
    <property type="chains" value="A/B=501-599"/>
</dbReference>
<dbReference type="PDB" id="3NUJ">
    <property type="method" value="X-ray"/>
    <property type="resolution" value="1.50 A"/>
    <property type="chains" value="A/B=501-599"/>
</dbReference>
<dbReference type="PDB" id="3NUO">
    <property type="method" value="X-ray"/>
    <property type="resolution" value="1.35 A"/>
    <property type="chains" value="A/B=501-599"/>
</dbReference>
<dbReference type="PDB" id="3OK9">
    <property type="method" value="X-ray"/>
    <property type="resolution" value="1.27 A"/>
    <property type="chains" value="A/B=501-599"/>
</dbReference>
<dbReference type="PDB" id="3PSU">
    <property type="method" value="X-ray"/>
    <property type="resolution" value="2.07 A"/>
    <property type="chains" value="A=501-599"/>
</dbReference>
<dbReference type="PDB" id="3QAA">
    <property type="method" value="X-ray"/>
    <property type="resolution" value="1.40 A"/>
    <property type="chains" value="A/B=501-599"/>
</dbReference>
<dbReference type="PDB" id="3QLH">
    <property type="method" value="X-ray"/>
    <property type="resolution" value="2.70 A"/>
    <property type="chains" value="A=600-1153, B=605-1027"/>
</dbReference>
<dbReference type="PDB" id="3QO9">
    <property type="method" value="X-ray"/>
    <property type="resolution" value="2.60 A"/>
    <property type="chains" value="A=600-1154, B=600-1027"/>
</dbReference>
<dbReference type="PDB" id="3TKG">
    <property type="method" value="X-ray"/>
    <property type="resolution" value="1.36 A"/>
    <property type="chains" value="A/B/C/D=497-599"/>
</dbReference>
<dbReference type="PDB" id="3TKW">
    <property type="method" value="X-ray"/>
    <property type="resolution" value="1.55 A"/>
    <property type="chains" value="A/B=497-599"/>
</dbReference>
<dbReference type="PDB" id="3TL9">
    <property type="method" value="X-ray"/>
    <property type="resolution" value="1.32 A"/>
    <property type="chains" value="A/B=497-599"/>
</dbReference>
<dbReference type="PDB" id="3TLH">
    <property type="method" value="X-ray"/>
    <property type="resolution" value="2.00 A"/>
    <property type="chains" value="A=501-599"/>
</dbReference>
<dbReference type="PDB" id="3V4I">
    <property type="method" value="X-ray"/>
    <property type="resolution" value="2.80 A"/>
    <property type="chains" value="A/C=600-1153, B/D=600-1027"/>
</dbReference>
<dbReference type="PDB" id="3V6D">
    <property type="method" value="X-ray"/>
    <property type="resolution" value="2.70 A"/>
    <property type="chains" value="A/C=600-1153, B/D=600-1027"/>
</dbReference>
<dbReference type="PDB" id="3V81">
    <property type="method" value="X-ray"/>
    <property type="resolution" value="2.85 A"/>
    <property type="chains" value="A/C=600-1153, B/D=600-1027"/>
</dbReference>
<dbReference type="PDB" id="3ZPS">
    <property type="method" value="X-ray"/>
    <property type="resolution" value="1.55 A"/>
    <property type="chains" value="A/B=501-599"/>
</dbReference>
<dbReference type="PDB" id="3ZPT">
    <property type="method" value="X-ray"/>
    <property type="resolution" value="1.54 A"/>
    <property type="chains" value="A/B=501-599"/>
</dbReference>
<dbReference type="PDB" id="3ZPU">
    <property type="method" value="X-ray"/>
    <property type="resolution" value="1.80 A"/>
    <property type="chains" value="A/B=501-599"/>
</dbReference>
<dbReference type="PDB" id="4COE">
    <property type="method" value="X-ray"/>
    <property type="resolution" value="2.45 A"/>
    <property type="chains" value="A/B=501-599"/>
</dbReference>
<dbReference type="PDB" id="4CP7">
    <property type="method" value="X-ray"/>
    <property type="resolution" value="1.80 A"/>
    <property type="chains" value="A/B=501-599"/>
</dbReference>
<dbReference type="PDB" id="4CPQ">
    <property type="method" value="X-ray"/>
    <property type="resolution" value="2.35 A"/>
    <property type="chains" value="A/B=501-599"/>
</dbReference>
<dbReference type="PDB" id="4CPR">
    <property type="method" value="X-ray"/>
    <property type="resolution" value="1.80 A"/>
    <property type="chains" value="A/B=501-599"/>
</dbReference>
<dbReference type="PDB" id="4CPS">
    <property type="method" value="X-ray"/>
    <property type="resolution" value="1.55 A"/>
    <property type="chains" value="A/B=501-599"/>
</dbReference>
<dbReference type="PDB" id="4CPT">
    <property type="method" value="X-ray"/>
    <property type="resolution" value="1.70 A"/>
    <property type="chains" value="A/B=501-599"/>
</dbReference>
<dbReference type="PDB" id="4CPU">
    <property type="method" value="X-ray"/>
    <property type="resolution" value="1.82 A"/>
    <property type="chains" value="A/B=501-599"/>
</dbReference>
<dbReference type="PDB" id="4CPW">
    <property type="method" value="X-ray"/>
    <property type="resolution" value="1.70 A"/>
    <property type="chains" value="A/B=501-599"/>
</dbReference>
<dbReference type="PDB" id="4CPX">
    <property type="method" value="X-ray"/>
    <property type="resolution" value="1.85 A"/>
    <property type="chains" value="A/B=501-599"/>
</dbReference>
<dbReference type="PDB" id="4DG1">
    <property type="method" value="X-ray"/>
    <property type="resolution" value="2.15 A"/>
    <property type="chains" value="A=600-1148, B=600-1026"/>
</dbReference>
<dbReference type="PDB" id="4G1Q">
    <property type="method" value="X-ray"/>
    <property type="resolution" value="1.51 A"/>
    <property type="chains" value="A=600-1154, B=600-1027"/>
</dbReference>
<dbReference type="PDB" id="4G8G">
    <property type="method" value="X-ray"/>
    <property type="resolution" value="2.40 A"/>
    <property type="chains" value="C=263-272"/>
</dbReference>
<dbReference type="PDB" id="4G8I">
    <property type="method" value="X-ray"/>
    <property type="resolution" value="1.60 A"/>
    <property type="chains" value="C=263-272"/>
</dbReference>
<dbReference type="PDB" id="4G9D">
    <property type="method" value="X-ray"/>
    <property type="resolution" value="1.60 A"/>
    <property type="chains" value="C=263-272"/>
</dbReference>
<dbReference type="PDB" id="4G9F">
    <property type="method" value="X-ray"/>
    <property type="resolution" value="1.90 A"/>
    <property type="chains" value="C=263-272"/>
</dbReference>
<dbReference type="PDB" id="4H4M">
    <property type="method" value="X-ray"/>
    <property type="resolution" value="2.85 A"/>
    <property type="chains" value="A=600-1154, B=600-1027"/>
</dbReference>
<dbReference type="PDB" id="4H4O">
    <property type="method" value="X-ray"/>
    <property type="resolution" value="2.90 A"/>
    <property type="chains" value="A=600-1154, B=600-1027"/>
</dbReference>
<dbReference type="PDB" id="4I2P">
    <property type="method" value="X-ray"/>
    <property type="resolution" value="2.30 A"/>
    <property type="chains" value="A=600-1154, B=600-1027"/>
</dbReference>
<dbReference type="PDB" id="4I2Q">
    <property type="method" value="X-ray"/>
    <property type="resolution" value="2.70 A"/>
    <property type="chains" value="A=600-1154, B=600-1027"/>
</dbReference>
<dbReference type="PDB" id="4ICL">
    <property type="method" value="X-ray"/>
    <property type="resolution" value="1.80 A"/>
    <property type="chains" value="A=600-1154, B=600-1027"/>
</dbReference>
<dbReference type="PDB" id="4ID5">
    <property type="method" value="X-ray"/>
    <property type="resolution" value="1.95 A"/>
    <property type="chains" value="A=600-1154, B=600-1027"/>
</dbReference>
<dbReference type="PDB" id="4IDK">
    <property type="method" value="X-ray"/>
    <property type="resolution" value="2.10 A"/>
    <property type="chains" value="A=600-1154, B=600-1027"/>
</dbReference>
<dbReference type="PDB" id="4IFV">
    <property type="method" value="X-ray"/>
    <property type="resolution" value="2.05 A"/>
    <property type="chains" value="A=600-1154, B=600-1027"/>
</dbReference>
<dbReference type="PDB" id="4IFY">
    <property type="method" value="X-ray"/>
    <property type="resolution" value="2.10 A"/>
    <property type="chains" value="A=600-1154, B=600-1027"/>
</dbReference>
<dbReference type="PDB" id="4IG0">
    <property type="method" value="X-ray"/>
    <property type="resolution" value="2.50 A"/>
    <property type="chains" value="A=600-1154, B=600-1027"/>
</dbReference>
<dbReference type="PDB" id="4IG3">
    <property type="method" value="X-ray"/>
    <property type="resolution" value="1.95 A"/>
    <property type="chains" value="A=600-1154, B=600-1027"/>
</dbReference>
<dbReference type="PDB" id="4KFB">
    <property type="method" value="X-ray"/>
    <property type="resolution" value="1.85 A"/>
    <property type="chains" value="A=600-1154, B=604-1027"/>
</dbReference>
<dbReference type="PDB" id="4KKO">
    <property type="method" value="X-ray"/>
    <property type="resolution" value="2.89 A"/>
    <property type="chains" value="A=600-1154, B=600-1027"/>
</dbReference>
<dbReference type="PDB" id="4KO0">
    <property type="method" value="X-ray"/>
    <property type="resolution" value="1.95 A"/>
    <property type="chains" value="A=600-1154, B=600-1027"/>
</dbReference>
<dbReference type="PDB" id="4LSL">
    <property type="method" value="X-ray"/>
    <property type="resolution" value="2.69 A"/>
    <property type="chains" value="A=600-1154, B=600-1027"/>
</dbReference>
<dbReference type="PDB" id="4LSN">
    <property type="method" value="X-ray"/>
    <property type="resolution" value="3.10 A"/>
    <property type="chains" value="A=600-1154, B=600-1027"/>
</dbReference>
<dbReference type="PDB" id="4MFB">
    <property type="method" value="X-ray"/>
    <property type="resolution" value="2.88 A"/>
    <property type="chains" value="A=600-1154, B=600-1027"/>
</dbReference>
<dbReference type="PDB" id="4O44">
    <property type="method" value="X-ray"/>
    <property type="resolution" value="2.89 A"/>
    <property type="chains" value="A=600-1154, B=600-1027"/>
</dbReference>
<dbReference type="PDB" id="4O4G">
    <property type="method" value="X-ray"/>
    <property type="resolution" value="2.71 A"/>
    <property type="chains" value="A=600-1154, B=600-1027"/>
</dbReference>
<dbReference type="PDB" id="4OJR">
    <property type="method" value="X-ray"/>
    <property type="resolution" value="1.82 A"/>
    <property type="chains" value="A=1209-1371"/>
</dbReference>
<dbReference type="PDB" id="4PQU">
    <property type="method" value="X-ray"/>
    <property type="resolution" value="2.51 A"/>
    <property type="chains" value="A/C=600-1153, B/D=600-1027"/>
</dbReference>
<dbReference type="PDB" id="4PUO">
    <property type="method" value="X-ray"/>
    <property type="resolution" value="2.90 A"/>
    <property type="chains" value="A/C=600-1153, B/D=600-1027"/>
</dbReference>
<dbReference type="PDB" id="4PWD">
    <property type="method" value="X-ray"/>
    <property type="resolution" value="3.00 A"/>
    <property type="chains" value="A/C=600-1153, B/D=600-1027"/>
</dbReference>
<dbReference type="PDB" id="4Q0B">
    <property type="method" value="X-ray"/>
    <property type="resolution" value="3.30 A"/>
    <property type="chains" value="A/C=600-1153, B/D=600-1027"/>
</dbReference>
<dbReference type="PDB" id="4QAG">
    <property type="method" value="X-ray"/>
    <property type="resolution" value="1.71 A"/>
    <property type="chains" value="A/B=1024-1156"/>
</dbReference>
<dbReference type="PDB" id="4R5P">
    <property type="method" value="X-ray"/>
    <property type="resolution" value="2.89 A"/>
    <property type="chains" value="A/C=600-1153, B/D=600-1027"/>
</dbReference>
<dbReference type="PDB" id="4RW4">
    <property type="method" value="X-ray"/>
    <property type="resolution" value="2.67 A"/>
    <property type="chains" value="A=600-1154, B=600-1027"/>
</dbReference>
<dbReference type="PDB" id="4RW6">
    <property type="method" value="X-ray"/>
    <property type="resolution" value="2.63 A"/>
    <property type="chains" value="A=600-1154, B=600-1027"/>
</dbReference>
<dbReference type="PDB" id="4RW7">
    <property type="method" value="X-ray"/>
    <property type="resolution" value="3.01 A"/>
    <property type="chains" value="A=600-1154, B=600-1027"/>
</dbReference>
<dbReference type="PDB" id="4RW8">
    <property type="method" value="X-ray"/>
    <property type="resolution" value="2.88 A"/>
    <property type="chains" value="A=600-1154, B=600-1027"/>
</dbReference>
<dbReference type="PDB" id="4RW9">
    <property type="method" value="X-ray"/>
    <property type="resolution" value="2.99 A"/>
    <property type="chains" value="A=600-1154, B=600-1027"/>
</dbReference>
<dbReference type="PDB" id="4U8W">
    <property type="method" value="X-ray"/>
    <property type="resolution" value="1.30 A"/>
    <property type="chains" value="A/B=501-599"/>
</dbReference>
<dbReference type="PDB" id="4WE1">
    <property type="method" value="X-ray"/>
    <property type="resolution" value="2.49 A"/>
    <property type="chains" value="A=600-1154, B=600-1027"/>
</dbReference>
<dbReference type="PDB" id="4YE3">
    <property type="method" value="X-ray"/>
    <property type="resolution" value="1.35 A"/>
    <property type="chains" value="A/B=501-599"/>
</dbReference>
<dbReference type="PDB" id="4YHQ">
    <property type="method" value="X-ray"/>
    <property type="resolution" value="1.30 A"/>
    <property type="chains" value="A/B=501-599"/>
</dbReference>
<dbReference type="PDB" id="4ZIP">
    <property type="method" value="X-ray"/>
    <property type="resolution" value="1.11 A"/>
    <property type="chains" value="A/B=501-599"/>
</dbReference>
<dbReference type="PDB" id="4ZLS">
    <property type="method" value="X-ray"/>
    <property type="resolution" value="1.53 A"/>
    <property type="chains" value="A/B=501-599"/>
</dbReference>
<dbReference type="PDB" id="5AGZ">
    <property type="method" value="X-ray"/>
    <property type="resolution" value="1.20 A"/>
    <property type="chains" value="A/B=501-599"/>
</dbReference>
<dbReference type="PDB" id="5AH6">
    <property type="method" value="X-ray"/>
    <property type="resolution" value="1.50 A"/>
    <property type="chains" value="A/B=501-599"/>
</dbReference>
<dbReference type="PDB" id="5AH7">
    <property type="method" value="X-ray"/>
    <property type="resolution" value="1.55 A"/>
    <property type="chains" value="A/B=501-599"/>
</dbReference>
<dbReference type="PDB" id="5AH8">
    <property type="method" value="X-ray"/>
    <property type="resolution" value="1.26 A"/>
    <property type="chains" value="A/B=501-599"/>
</dbReference>
<dbReference type="PDB" id="5AH9">
    <property type="method" value="X-ray"/>
    <property type="resolution" value="1.44 A"/>
    <property type="chains" value="A/B=501-599"/>
</dbReference>
<dbReference type="PDB" id="5AHA">
    <property type="method" value="X-ray"/>
    <property type="resolution" value="1.35 A"/>
    <property type="chains" value="A/B=501-599"/>
</dbReference>
<dbReference type="PDB" id="5AHB">
    <property type="method" value="X-ray"/>
    <property type="resolution" value="1.50 A"/>
    <property type="chains" value="A/B=501-599"/>
</dbReference>
<dbReference type="PDB" id="5AHC">
    <property type="method" value="X-ray"/>
    <property type="resolution" value="1.50 A"/>
    <property type="chains" value="A/B=501-599"/>
</dbReference>
<dbReference type="PDB" id="5BRY">
    <property type="method" value="X-ray"/>
    <property type="resolution" value="1.34 A"/>
    <property type="chains" value="A/B=501-599"/>
</dbReference>
<dbReference type="PDB" id="5BS4">
    <property type="method" value="X-ray"/>
    <property type="resolution" value="1.29 A"/>
    <property type="chains" value="A/B=501-599"/>
</dbReference>
<dbReference type="PDB" id="5C24">
    <property type="method" value="X-ray"/>
    <property type="resolution" value="2.60 A"/>
    <property type="chains" value="A=600-1144, B=604-1027"/>
</dbReference>
<dbReference type="PDB" id="5C25">
    <property type="method" value="X-ray"/>
    <property type="resolution" value="2.84 A"/>
    <property type="chains" value="A=600-1154, B=600-1027"/>
</dbReference>
<dbReference type="PDB" id="5C42">
    <property type="method" value="X-ray"/>
    <property type="resolution" value="3.50 A"/>
    <property type="chains" value="A=600-1154, B=600-1027"/>
</dbReference>
<dbReference type="PDB" id="5CYM">
    <property type="method" value="X-ray"/>
    <property type="resolution" value="2.10 A"/>
    <property type="chains" value="A=600-1154, B=600-1027"/>
</dbReference>
<dbReference type="PDB" id="5CYQ">
    <property type="method" value="X-ray"/>
    <property type="resolution" value="2.15 A"/>
    <property type="chains" value="A=600-1154, B=600-1027"/>
</dbReference>
<dbReference type="PDB" id="5D3G">
    <property type="method" value="X-ray"/>
    <property type="resolution" value="2.30 A"/>
    <property type="chains" value="A/C=600-1154, B/D=600-1027"/>
</dbReference>
<dbReference type="PDB" id="5FDL">
    <property type="method" value="X-ray"/>
    <property type="resolution" value="3.10 A"/>
    <property type="chains" value="A=600-1156, B=600-1039"/>
</dbReference>
<dbReference type="PDB" id="5HBM">
    <property type="method" value="X-ray"/>
    <property type="resolution" value="3.04 A"/>
    <property type="chains" value="A=600-1154, B=600-1027"/>
</dbReference>
<dbReference type="PDB" id="5HLF">
    <property type="method" value="X-ray"/>
    <property type="resolution" value="2.95 A"/>
    <property type="chains" value="A/C=600-1154, B/D=600-1027"/>
</dbReference>
<dbReference type="PDB" id="5HP1">
    <property type="method" value="X-ray"/>
    <property type="resolution" value="2.90 A"/>
    <property type="chains" value="A/C=600-1154, B/D=600-1027"/>
</dbReference>
<dbReference type="PDB" id="5HRO">
    <property type="method" value="X-ray"/>
    <property type="resolution" value="2.75 A"/>
    <property type="chains" value="A/C=600-1154, B/D=600-1027"/>
</dbReference>
<dbReference type="PDB" id="5I3U">
    <property type="method" value="X-ray"/>
    <property type="resolution" value="3.00 A"/>
    <property type="chains" value="A/C=600-1154, B/D=600-1027"/>
</dbReference>
<dbReference type="PDB" id="5I42">
    <property type="method" value="X-ray"/>
    <property type="resolution" value="3.30 A"/>
    <property type="chains" value="A/C=600-1154, B/D=600-1027"/>
</dbReference>
<dbReference type="PDB" id="5J1E">
    <property type="method" value="X-ray"/>
    <property type="resolution" value="2.90 A"/>
    <property type="chains" value="A/C=600-1154, B/D=600-1027"/>
</dbReference>
<dbReference type="PDB" id="5JFP">
    <property type="method" value="X-ray"/>
    <property type="resolution" value="1.49 A"/>
    <property type="chains" value="A/B=501-599"/>
</dbReference>
<dbReference type="PDB" id="5JFU">
    <property type="method" value="X-ray"/>
    <property type="resolution" value="1.70 A"/>
    <property type="chains" value="A/B=501-599"/>
</dbReference>
<dbReference type="PDB" id="5JG1">
    <property type="method" value="X-ray"/>
    <property type="resolution" value="1.16 A"/>
    <property type="chains" value="A/B=501-599"/>
</dbReference>
<dbReference type="PDB" id="5OI2">
    <property type="method" value="X-ray"/>
    <property type="resolution" value="2.20 A"/>
    <property type="chains" value="A=1209-1371"/>
</dbReference>
<dbReference type="PDB" id="5OI3">
    <property type="method" value="X-ray"/>
    <property type="resolution" value="2.30 A"/>
    <property type="chains" value="A=1209-1371"/>
</dbReference>
<dbReference type="PDB" id="5OI5">
    <property type="method" value="X-ray"/>
    <property type="resolution" value="2.40 A"/>
    <property type="chains" value="A=1209-1371"/>
</dbReference>
<dbReference type="PDB" id="5OI8">
    <property type="method" value="X-ray"/>
    <property type="resolution" value="2.35 A"/>
    <property type="chains" value="A=1209-1371"/>
</dbReference>
<dbReference type="PDB" id="5OIA">
    <property type="method" value="X-ray"/>
    <property type="resolution" value="2.20 A"/>
    <property type="chains" value="A=1209-1371"/>
</dbReference>
<dbReference type="PDB" id="5T6Z">
    <property type="method" value="X-ray"/>
    <property type="resolution" value="2.00 A"/>
    <property type="chains" value="C=240-249"/>
</dbReference>
<dbReference type="PDB" id="5T70">
    <property type="method" value="X-ray"/>
    <property type="resolution" value="2.10 A"/>
    <property type="chains" value="C=240-249"/>
</dbReference>
<dbReference type="PDB" id="5TER">
    <property type="method" value="X-ray"/>
    <property type="resolution" value="2.70 A"/>
    <property type="chains" value="A=600-1154, B=600-1027"/>
</dbReference>
<dbReference type="PDB" id="5TUQ">
    <property type="method" value="X-ray"/>
    <property type="resolution" value="2.71 A"/>
    <property type="chains" value="A=600-1154, B=600-1027"/>
</dbReference>
<dbReference type="PDB" id="5TW3">
    <property type="method" value="X-ray"/>
    <property type="resolution" value="2.85 A"/>
    <property type="chains" value="A=600-1154, B=600-1027"/>
</dbReference>
<dbReference type="PDB" id="5TXL">
    <property type="method" value="X-ray"/>
    <property type="resolution" value="2.50 A"/>
    <property type="chains" value="A/C=600-1153, B/D=600-1027"/>
</dbReference>
<dbReference type="PDB" id="5TXM">
    <property type="method" value="X-ray"/>
    <property type="resolution" value="2.70 A"/>
    <property type="chains" value="A/C=600-1154, B/D=600-1027"/>
</dbReference>
<dbReference type="PDB" id="5TXN">
    <property type="method" value="X-ray"/>
    <property type="resolution" value="2.55 A"/>
    <property type="chains" value="A/C=600-1153, B/D=600-1027"/>
</dbReference>
<dbReference type="PDB" id="5TXO">
    <property type="method" value="X-ray"/>
    <property type="resolution" value="2.55 A"/>
    <property type="chains" value="A/C=600-1153, B/D=600-1027"/>
</dbReference>
<dbReference type="PDB" id="5TXP">
    <property type="method" value="X-ray"/>
    <property type="resolution" value="2.70 A"/>
    <property type="chains" value="A/C=600-1153, B/D=600-1027"/>
</dbReference>
<dbReference type="PDB" id="5UFZ">
    <property type="method" value="X-ray"/>
    <property type="resolution" value="1.65 A"/>
    <property type="chains" value="A/B=501-599"/>
</dbReference>
<dbReference type="PDB" id="5ULT">
    <property type="method" value="X-ray"/>
    <property type="resolution" value="1.53 A"/>
    <property type="chains" value="A/B=501-599"/>
</dbReference>
<dbReference type="PDB" id="5UOV">
    <property type="method" value="X-ray"/>
    <property type="resolution" value="1.33 A"/>
    <property type="chains" value="A/B=501-599"/>
</dbReference>
<dbReference type="PDB" id="5UPZ">
    <property type="method" value="X-ray"/>
    <property type="resolution" value="1.27 A"/>
    <property type="chains" value="A/B=501-599"/>
</dbReference>
<dbReference type="PDB" id="5UV5">
    <property type="method" value="X-ray"/>
    <property type="resolution" value="3.00 A"/>
    <property type="chains" value="A/C=600-1154, B/D=600-1027"/>
</dbReference>
<dbReference type="PDB" id="5V5L">
    <property type="method" value="X-ray"/>
    <property type="resolution" value="2.00 A"/>
    <property type="chains" value="E/F=240-249"/>
</dbReference>
<dbReference type="PDB" id="5V5M">
    <property type="method" value="X-ray"/>
    <property type="resolution" value="2.88 A"/>
    <property type="chains" value="E/F=240-249"/>
</dbReference>
<dbReference type="PDB" id="5VQQ">
    <property type="method" value="X-ray"/>
    <property type="resolution" value="2.55 A"/>
    <property type="chains" value="A=600-1154, B=600-1027"/>
</dbReference>
<dbReference type="PDB" id="5VQR">
    <property type="method" value="X-ray"/>
    <property type="resolution" value="2.55 A"/>
    <property type="chains" value="A=600-1154, B=600-1027"/>
</dbReference>
<dbReference type="PDB" id="5VQS">
    <property type="method" value="X-ray"/>
    <property type="resolution" value="2.50 A"/>
    <property type="chains" value="A=600-1154, B=600-1027"/>
</dbReference>
<dbReference type="PDB" id="5VQT">
    <property type="method" value="X-ray"/>
    <property type="resolution" value="2.56 A"/>
    <property type="chains" value="A=600-1154, B=600-1027"/>
</dbReference>
<dbReference type="PDB" id="5VQU">
    <property type="method" value="X-ray"/>
    <property type="resolution" value="2.60 A"/>
    <property type="chains" value="A=600-1154, B=600-1027"/>
</dbReference>
<dbReference type="PDB" id="5VQV">
    <property type="method" value="X-ray"/>
    <property type="resolution" value="2.58 A"/>
    <property type="chains" value="A=600-1154, B=600-1027"/>
</dbReference>
<dbReference type="PDB" id="5VQW">
    <property type="method" value="X-ray"/>
    <property type="resolution" value="2.50 A"/>
    <property type="chains" value="A=600-1154, B=600-1027"/>
</dbReference>
<dbReference type="PDB" id="5VQX">
    <property type="method" value="X-ray"/>
    <property type="resolution" value="2.40 A"/>
    <property type="chains" value="A=600-1154, B=600-1027"/>
</dbReference>
<dbReference type="PDB" id="5VQY">
    <property type="method" value="X-ray"/>
    <property type="resolution" value="2.35 A"/>
    <property type="chains" value="A=600-1154, B=600-1027"/>
</dbReference>
<dbReference type="PDB" id="5VQZ">
    <property type="method" value="X-ray"/>
    <property type="resolution" value="2.23 A"/>
    <property type="chains" value="A=600-1154, B=600-1027"/>
</dbReference>
<dbReference type="PDB" id="5W5W">
    <property type="method" value="X-ray"/>
    <property type="resolution" value="3.00 A"/>
    <property type="chains" value="A/B=501-599"/>
</dbReference>
<dbReference type="PDB" id="5YOJ">
    <property type="method" value="X-ray"/>
    <property type="resolution" value="1.50 A"/>
    <property type="chains" value="A/B=500-599"/>
</dbReference>
<dbReference type="PDB" id="6AMO">
    <property type="method" value="X-ray"/>
    <property type="resolution" value="2.50 A"/>
    <property type="chains" value="A/C=600-1153, B/D=600-1027"/>
</dbReference>
<dbReference type="PDB" id="6AN2">
    <property type="method" value="X-ray"/>
    <property type="resolution" value="2.70 A"/>
    <property type="chains" value="A/C=600-1153, B/D=600-1027"/>
</dbReference>
<dbReference type="PDB" id="6AN8">
    <property type="method" value="X-ray"/>
    <property type="resolution" value="2.60 A"/>
    <property type="chains" value="A/C=600-1153, B/D=600-1027"/>
</dbReference>
<dbReference type="PDB" id="6ANQ">
    <property type="method" value="X-ray"/>
    <property type="resolution" value="2.59 A"/>
    <property type="chains" value="A/C=600-1153, B/D=600-1027"/>
</dbReference>
<dbReference type="PDB" id="6AOC">
    <property type="method" value="X-ray"/>
    <property type="resolution" value="1.80 A"/>
    <property type="chains" value="A/C=600-1154, B/D=600-1027"/>
</dbReference>
<dbReference type="PDB" id="6ASW">
    <property type="method" value="X-ray"/>
    <property type="resolution" value="2.60 A"/>
    <property type="chains" value="A/C=600-1153, B/D=600-1027"/>
</dbReference>
<dbReference type="PDB" id="6AVM">
    <property type="method" value="X-ray"/>
    <property type="resolution" value="2.50 A"/>
    <property type="chains" value="A/C=600-1153, B/D=600-1027"/>
</dbReference>
<dbReference type="PDB" id="6AVT">
    <property type="method" value="X-ray"/>
    <property type="resolution" value="2.60 A"/>
    <property type="chains" value="A/C=600-1153, B/D=600-1027"/>
</dbReference>
<dbReference type="PDB" id="6B19">
    <property type="method" value="EM"/>
    <property type="resolution" value="4.50 A"/>
    <property type="chains" value="A=600-1159, B=600-1039"/>
</dbReference>
<dbReference type="PDB" id="6BZ2">
    <property type="method" value="X-ray"/>
    <property type="resolution" value="1.67 A"/>
    <property type="chains" value="A/B=501-599"/>
</dbReference>
<dbReference type="PDB" id="6C0J">
    <property type="method" value="X-ray"/>
    <property type="resolution" value="1.92 A"/>
    <property type="chains" value="A=600-1154, B=600-1027"/>
</dbReference>
<dbReference type="PDB" id="6C0K">
    <property type="method" value="X-ray"/>
    <property type="resolution" value="1.96 A"/>
    <property type="chains" value="A=600-1154, B=600-1027"/>
</dbReference>
<dbReference type="PDB" id="6C0L">
    <property type="method" value="X-ray"/>
    <property type="resolution" value="1.95 A"/>
    <property type="chains" value="A=600-1154, B=600-1027"/>
</dbReference>
<dbReference type="PDB" id="6C0N">
    <property type="method" value="X-ray"/>
    <property type="resolution" value="2.00 A"/>
    <property type="chains" value="A=600-1154, B=600-1027"/>
</dbReference>
<dbReference type="PDB" id="6C0O">
    <property type="method" value="X-ray"/>
    <property type="resolution" value="1.90 A"/>
    <property type="chains" value="A=600-1154, B=600-1027"/>
</dbReference>
<dbReference type="PDB" id="6C0P">
    <property type="method" value="X-ray"/>
    <property type="resolution" value="2.05 A"/>
    <property type="chains" value="A=600-1154, B=600-1027"/>
</dbReference>
<dbReference type="PDB" id="6C0R">
    <property type="method" value="X-ray"/>
    <property type="resolution" value="2.05 A"/>
    <property type="chains" value="A=600-1154, B=600-1027"/>
</dbReference>
<dbReference type="PDB" id="6C8X">
    <property type="method" value="X-ray"/>
    <property type="resolution" value="1.61 A"/>
    <property type="chains" value="A/B=501-599"/>
</dbReference>
<dbReference type="PDB" id="6C8Y">
    <property type="method" value="X-ray"/>
    <property type="resolution" value="1.94 A"/>
    <property type="chains" value="A/B=501-599"/>
</dbReference>
<dbReference type="PDB" id="6CGF">
    <property type="method" value="X-ray"/>
    <property type="resolution" value="1.94 A"/>
    <property type="chains" value="A=600-1154, B=600-1027"/>
</dbReference>
<dbReference type="PDB" id="6D0D">
    <property type="method" value="X-ray"/>
    <property type="resolution" value="1.85 A"/>
    <property type="chains" value="A/B=501-599"/>
</dbReference>
<dbReference type="PDB" id="6D0E">
    <property type="method" value="X-ray"/>
    <property type="resolution" value="1.95 A"/>
    <property type="chains" value="A/B=501-599"/>
</dbReference>
<dbReference type="PDB" id="6DTW">
    <property type="method" value="X-ray"/>
    <property type="resolution" value="2.74 A"/>
    <property type="chains" value="A=600-1154, B=600-1027"/>
</dbReference>
<dbReference type="PDB" id="6DTX">
    <property type="method" value="X-ray"/>
    <property type="resolution" value="3.33 A"/>
    <property type="chains" value="A=600-1154, B=600-1027"/>
</dbReference>
<dbReference type="PDB" id="6DUF">
    <property type="method" value="X-ray"/>
    <property type="resolution" value="1.96 A"/>
    <property type="chains" value="A=600-1154, B=600-1027"/>
</dbReference>
<dbReference type="PDB" id="6DUG">
    <property type="method" value="X-ray"/>
    <property type="resolution" value="2.23 A"/>
    <property type="chains" value="A=600-1154, B=600-1027"/>
</dbReference>
<dbReference type="PDB" id="6DUH">
    <property type="method" value="X-ray"/>
    <property type="resolution" value="2.00 A"/>
    <property type="chains" value="A=600-1154, B=600-1027"/>
</dbReference>
<dbReference type="PDB" id="6ECL">
    <property type="method" value="X-ray"/>
    <property type="resolution" value="2.38 A"/>
    <property type="chains" value="A=600-1154, B=600-1027"/>
</dbReference>
<dbReference type="PDB" id="6ELI">
    <property type="method" value="X-ray"/>
    <property type="resolution" value="2.20 A"/>
    <property type="chains" value="A=600-1154, B=600-1027"/>
</dbReference>
<dbReference type="PDB" id="6HAK">
    <property type="method" value="X-ray"/>
    <property type="resolution" value="3.95 A"/>
    <property type="chains" value="A/C=600-1153, B/D=600-1027"/>
</dbReference>
<dbReference type="PDB" id="6KMP">
    <property type="method" value="X-ray"/>
    <property type="resolution" value="1.31 A"/>
    <property type="chains" value="A/B=501-599"/>
</dbReference>
<dbReference type="PDB" id="6O48">
    <property type="method" value="X-ray"/>
    <property type="resolution" value="1.46 A"/>
    <property type="chains" value="A/B=501-599"/>
</dbReference>
<dbReference type="PDB" id="6O9E">
    <property type="method" value="X-ray"/>
    <property type="resolution" value="2.40 A"/>
    <property type="chains" value="A/C=600-1154, B/D=600-1027"/>
</dbReference>
<dbReference type="PDB" id="6OE3">
    <property type="method" value="X-ray"/>
    <property type="resolution" value="2.90 A"/>
    <property type="chains" value="A=600-1154, B=600-1027"/>
</dbReference>
<dbReference type="PDB" id="6OUN">
    <property type="method" value="X-ray"/>
    <property type="resolution" value="2.66 A"/>
    <property type="chains" value="A=600-1157, B=600-1039"/>
</dbReference>
<dbReference type="PDB" id="6PRF">
    <property type="method" value="X-ray"/>
    <property type="resolution" value="1.21 A"/>
    <property type="chains" value="A/B=501-599"/>
</dbReference>
<dbReference type="PDB" id="6UL5">
    <property type="method" value="X-ray"/>
    <property type="resolution" value="2.23 A"/>
    <property type="chains" value="A=600-1154, B=600-1027"/>
</dbReference>
<dbReference type="PDB" id="6VUG">
    <property type="method" value="X-ray"/>
    <property type="resolution" value="3.00 A"/>
    <property type="chains" value="A=600-1154"/>
</dbReference>
<dbReference type="PDB" id="6WAZ">
    <property type="method" value="EM"/>
    <property type="resolution" value="4.10 A"/>
    <property type="chains" value="A=600-1159, B=600-1039"/>
</dbReference>
<dbReference type="PDB" id="6WB0">
    <property type="method" value="EM"/>
    <property type="resolution" value="4.20 A"/>
    <property type="chains" value="A=600-1159, B=600-1039"/>
</dbReference>
<dbReference type="PDB" id="6WB1">
    <property type="method" value="EM"/>
    <property type="resolution" value="4.70 A"/>
    <property type="chains" value="A=600-1159, B=600-1039"/>
</dbReference>
<dbReference type="PDB" id="6WB2">
    <property type="method" value="EM"/>
    <property type="resolution" value="4.50 A"/>
    <property type="chains" value="A=600-1159, B=600-1039"/>
</dbReference>
<dbReference type="PDB" id="6X47">
    <property type="method" value="X-ray"/>
    <property type="resolution" value="2.77 A"/>
    <property type="chains" value="A=600-1154, B=600-1027"/>
</dbReference>
<dbReference type="PDB" id="6X49">
    <property type="method" value="X-ray"/>
    <property type="resolution" value="2.75 A"/>
    <property type="chains" value="A=600-1154, B=600-1027"/>
</dbReference>
<dbReference type="PDB" id="6X4A">
    <property type="method" value="X-ray"/>
    <property type="resolution" value="2.54 A"/>
    <property type="chains" value="A=600-1154, B=600-1027"/>
</dbReference>
<dbReference type="PDB" id="6X4B">
    <property type="method" value="X-ray"/>
    <property type="resolution" value="2.50 A"/>
    <property type="chains" value="A=600-1154, B=600-1027"/>
</dbReference>
<dbReference type="PDB" id="6X4C">
    <property type="method" value="X-ray"/>
    <property type="resolution" value="2.86 A"/>
    <property type="chains" value="A=600-1154, B=600-1027"/>
</dbReference>
<dbReference type="PDB" id="6X4D">
    <property type="method" value="X-ray"/>
    <property type="resolution" value="2.65 A"/>
    <property type="chains" value="A=600-1154, B=600-1027"/>
</dbReference>
<dbReference type="PDB" id="6X4E">
    <property type="method" value="X-ray"/>
    <property type="resolution" value="2.60 A"/>
    <property type="chains" value="A=600-1154, B=600-1027"/>
</dbReference>
<dbReference type="PDB" id="6X4F">
    <property type="method" value="X-ray"/>
    <property type="resolution" value="2.72 A"/>
    <property type="chains" value="A=600-1154, B=600-1027"/>
</dbReference>
<dbReference type="PDB" id="7AHX">
    <property type="method" value="X-ray"/>
    <property type="resolution" value="2.73 A"/>
    <property type="chains" value="A/C=600-1153, B/D=600-1027"/>
</dbReference>
<dbReference type="PDB" id="7AID">
    <property type="method" value="X-ray"/>
    <property type="resolution" value="3.15 A"/>
    <property type="chains" value="A/C=600-1153, B/D=600-1027"/>
</dbReference>
<dbReference type="PDB" id="7AIF">
    <property type="method" value="X-ray"/>
    <property type="resolution" value="2.75 A"/>
    <property type="chains" value="A/C=600-1153, B/D=600-1027"/>
</dbReference>
<dbReference type="PDB" id="7AIG">
    <property type="method" value="X-ray"/>
    <property type="resolution" value="2.95 A"/>
    <property type="chains" value="A/C=600-1153, B/D=600-1027"/>
</dbReference>
<dbReference type="PDB" id="7AII">
    <property type="method" value="X-ray"/>
    <property type="resolution" value="2.62 A"/>
    <property type="chains" value="A/C=600-1153, B/D=600-1027"/>
</dbReference>
<dbReference type="PDB" id="7AIJ">
    <property type="method" value="X-ray"/>
    <property type="resolution" value="2.95 A"/>
    <property type="chains" value="A/C=600-1153, B/D=600-1027"/>
</dbReference>
<dbReference type="PDB" id="7KJV">
    <property type="method" value="EM"/>
    <property type="resolution" value="2.80 A"/>
    <property type="chains" value="A=600-1159, B=600-1039"/>
</dbReference>
<dbReference type="PDB" id="7KJW">
    <property type="method" value="EM"/>
    <property type="resolution" value="2.90 A"/>
    <property type="chains" value="A=600-1159, B=600-1039"/>
</dbReference>
<dbReference type="PDB" id="7KJX">
    <property type="method" value="EM"/>
    <property type="resolution" value="3.10 A"/>
    <property type="chains" value="A=600-1159, B=600-1039"/>
</dbReference>
<dbReference type="PDB" id="7KRC">
    <property type="method" value="X-ray"/>
    <property type="resolution" value="2.65 A"/>
    <property type="chains" value="A=600-1154, B=600-1027"/>
</dbReference>
<dbReference type="PDB" id="7KRD">
    <property type="method" value="X-ray"/>
    <property type="resolution" value="2.70 A"/>
    <property type="chains" value="A=600-1154, B=600-1027"/>
</dbReference>
<dbReference type="PDB" id="7KRE">
    <property type="method" value="X-ray"/>
    <property type="resolution" value="2.73 A"/>
    <property type="chains" value="A=600-1154, B=600-1027"/>
</dbReference>
<dbReference type="PDB" id="7KRF">
    <property type="method" value="X-ray"/>
    <property type="resolution" value="2.60 A"/>
    <property type="chains" value="A=600-1154, B=600-1027"/>
</dbReference>
<dbReference type="PDB" id="7KWU">
    <property type="method" value="X-ray"/>
    <property type="resolution" value="2.02 A"/>
    <property type="chains" value="A=600-1154, B=600-1027"/>
</dbReference>
<dbReference type="PDB" id="7LPW">
    <property type="method" value="X-ray"/>
    <property type="resolution" value="2.32 A"/>
    <property type="chains" value="A=600-1154, B=600-1027"/>
</dbReference>
<dbReference type="PDB" id="7LPX">
    <property type="method" value="X-ray"/>
    <property type="resolution" value="2.45 A"/>
    <property type="chains" value="A=600-1154, B=600-1027"/>
</dbReference>
<dbReference type="PDB" id="7LQU">
    <property type="method" value="X-ray"/>
    <property type="resolution" value="2.60 A"/>
    <property type="chains" value="A=600-1154, B=600-1027"/>
</dbReference>
<dbReference type="PDB" id="7LRI">
    <property type="method" value="X-ray"/>
    <property type="resolution" value="3.05 A"/>
    <property type="chains" value="A/C=600-1154, B/D=600-1027"/>
</dbReference>
<dbReference type="PDB" id="7LRM">
    <property type="method" value="X-ray"/>
    <property type="resolution" value="3.14 A"/>
    <property type="chains" value="A/C=600-1154, B/D=600-1027"/>
</dbReference>
<dbReference type="PDB" id="7LRX">
    <property type="method" value="X-ray"/>
    <property type="resolution" value="2.90 A"/>
    <property type="chains" value="A/C=600-1154, B/D=600-1027"/>
</dbReference>
<dbReference type="PDB" id="7LRY">
    <property type="method" value="X-ray"/>
    <property type="resolution" value="2.45 A"/>
    <property type="chains" value="A/C=600-1154, B/D=600-1027"/>
</dbReference>
<dbReference type="PDB" id="7LSK">
    <property type="method" value="X-ray"/>
    <property type="resolution" value="2.70 A"/>
    <property type="chains" value="A/C=600-1154, B/D=600-1027"/>
</dbReference>
<dbReference type="PDB" id="7OT6">
    <property type="method" value="X-ray"/>
    <property type="resolution" value="3.20 A"/>
    <property type="chains" value="A/C=600-1153, B/D=600-1027"/>
</dbReference>
<dbReference type="PDB" id="7OTA">
    <property type="method" value="X-ray"/>
    <property type="resolution" value="3.00 A"/>
    <property type="chains" value="A/C=600-1153, B/D=600-1027"/>
</dbReference>
<dbReference type="PDB" id="7OTK">
    <property type="method" value="X-ray"/>
    <property type="resolution" value="2.95 A"/>
    <property type="chains" value="A/C=600-1153, B/D=600-1027"/>
</dbReference>
<dbReference type="PDB" id="7OTN">
    <property type="method" value="X-ray"/>
    <property type="resolution" value="3.40 A"/>
    <property type="chains" value="A/C=600-1153, B/D=600-1027"/>
</dbReference>
<dbReference type="PDB" id="7OTX">
    <property type="method" value="X-ray"/>
    <property type="resolution" value="3.45 A"/>
    <property type="chains" value="A/C=600-1153, B/D=600-1027"/>
</dbReference>
<dbReference type="PDB" id="7OTZ">
    <property type="method" value="X-ray"/>
    <property type="resolution" value="3.10 A"/>
    <property type="chains" value="A/C=600-1153, B/D=600-1027"/>
</dbReference>
<dbReference type="PDB" id="7OUT">
    <property type="method" value="X-ray"/>
    <property type="resolution" value="3.20 A"/>
    <property type="chains" value="A/C=600-1153, B/D=600-1027"/>
</dbReference>
<dbReference type="PDB" id="7OXQ">
    <property type="method" value="X-ray"/>
    <property type="resolution" value="3.30 A"/>
    <property type="chains" value="A/C=600-1153, B/D=600-1027"/>
</dbReference>
<dbReference type="PDB" id="7OZ2">
    <property type="method" value="X-ray"/>
    <property type="resolution" value="2.85 A"/>
    <property type="chains" value="A/C=600-1153, B/D=600-1027"/>
</dbReference>
<dbReference type="PDB" id="7OZ5">
    <property type="method" value="X-ray"/>
    <property type="resolution" value="3.37 A"/>
    <property type="chains" value="A/C=600-1153, B/D=600-1027"/>
</dbReference>
<dbReference type="PDB" id="7OZW">
    <property type="method" value="EM"/>
    <property type="resolution" value="3.38 A"/>
    <property type="chains" value="A=600-1153, B=600-1027"/>
</dbReference>
<dbReference type="PDB" id="7P15">
    <property type="method" value="EM"/>
    <property type="resolution" value="3.58 A"/>
    <property type="chains" value="A=600-1153, B=600-1027"/>
</dbReference>
<dbReference type="PDB" id="7SEP">
    <property type="method" value="EM"/>
    <property type="resolution" value="3.80 A"/>
    <property type="chains" value="A/B=479-1447"/>
</dbReference>
<dbReference type="PDB" id="7SIF">
    <property type="method" value="X-ray"/>
    <property type="resolution" value="1.73 A"/>
    <property type="chains" value="C=774-782"/>
</dbReference>
<dbReference type="PDB" id="7SIG">
    <property type="method" value="X-ray"/>
    <property type="resolution" value="1.74 A"/>
    <property type="chains" value="C=774-782"/>
</dbReference>
<dbReference type="PDB" id="7SIH">
    <property type="method" value="X-ray"/>
    <property type="resolution" value="1.90 A"/>
    <property type="chains" value="C=774-782"/>
</dbReference>
<dbReference type="PDB" id="7SJX">
    <property type="method" value="EM"/>
    <property type="resolution" value="8.20 A"/>
    <property type="chains" value="A/B=479-1447"/>
</dbReference>
<dbReference type="PDB" id="7SNL">
    <property type="method" value="X-ray"/>
    <property type="resolution" value="2.39 A"/>
    <property type="chains" value="A=133-363"/>
</dbReference>
<dbReference type="PDB" id="7SNN">
    <property type="method" value="X-ray"/>
    <property type="resolution" value="2.37 A"/>
    <property type="chains" value="A=133-363"/>
</dbReference>
<dbReference type="PDB" id="7SNP">
    <property type="method" value="X-ray"/>
    <property type="resolution" value="2.89 A"/>
    <property type="chains" value="A=600-1154, B=600-1027"/>
</dbReference>
<dbReference type="PDB" id="7SNQ">
    <property type="method" value="X-ray"/>
    <property type="resolution" value="2.81 A"/>
    <property type="chains" value="A/B/C/D/E/F/G/H/I/J/K/L=133-363"/>
</dbReference>
<dbReference type="PDB" id="7SNZ">
    <property type="method" value="X-ray"/>
    <property type="resolution" value="2.37 A"/>
    <property type="chains" value="A=600-1154, B=600-1027"/>
</dbReference>
<dbReference type="PDB" id="7SO1">
    <property type="method" value="X-ray"/>
    <property type="resolution" value="2.73 A"/>
    <property type="chains" value="A=600-1154, B=600-1027"/>
</dbReference>
<dbReference type="PDB" id="7SO2">
    <property type="method" value="X-ray"/>
    <property type="resolution" value="3.09 A"/>
    <property type="chains" value="A=600-1154, B=600-1027"/>
</dbReference>
<dbReference type="PDB" id="7SO3">
    <property type="method" value="X-ray"/>
    <property type="resolution" value="2.77 A"/>
    <property type="chains" value="A=600-1154, B=600-1027"/>
</dbReference>
<dbReference type="PDB" id="7SO4">
    <property type="method" value="X-ray"/>
    <property type="resolution" value="2.95 A"/>
    <property type="chains" value="A=600-1154, B=600-1027"/>
</dbReference>
<dbReference type="PDB" id="7SO6">
    <property type="method" value="X-ray"/>
    <property type="resolution" value="2.79 A"/>
    <property type="chains" value="A=600-1154, B=600-1027"/>
</dbReference>
<dbReference type="PDB" id="7TAZ">
    <property type="method" value="X-ray"/>
    <property type="resolution" value="2.40 A"/>
    <property type="chains" value="A=600-1154, B=600-1027"/>
</dbReference>
<dbReference type="PDB" id="7U5Z">
    <property type="method" value="X-ray"/>
    <property type="resolution" value="2.30 A"/>
    <property type="chains" value="A=600-1154, B=600-1027"/>
</dbReference>
<dbReference type="PDB" id="7Z24">
    <property type="method" value="EM"/>
    <property type="resolution" value="3.32 A"/>
    <property type="chains" value="A=600-1153, B=600-1027"/>
</dbReference>
<dbReference type="PDB" id="7Z29">
    <property type="method" value="EM"/>
    <property type="resolution" value="3.38 A"/>
    <property type="chains" value="A=600-1153, B=600-1027"/>
</dbReference>
<dbReference type="PDB" id="7Z2D">
    <property type="method" value="EM"/>
    <property type="resolution" value="3.38 A"/>
    <property type="chains" value="A=600-1153, B=600-1027"/>
</dbReference>
<dbReference type="PDB" id="7Z2E">
    <property type="method" value="EM"/>
    <property type="resolution" value="3.45 A"/>
    <property type="chains" value="A=600-1153, B=600-1027"/>
</dbReference>
<dbReference type="PDB" id="7Z2G">
    <property type="method" value="EM"/>
    <property type="resolution" value="3.65 A"/>
    <property type="chains" value="A=600-1153, B=600-1027"/>
</dbReference>
<dbReference type="PDB" id="7Z2H">
    <property type="method" value="EM"/>
    <property type="resolution" value="3.58 A"/>
    <property type="chains" value="A=600-1153, B=600-1027"/>
</dbReference>
<dbReference type="PDB" id="8DX2">
    <property type="method" value="X-ray"/>
    <property type="resolution" value="2.00 A"/>
    <property type="chains" value="A=600-1154, B=600-1027"/>
</dbReference>
<dbReference type="PDB" id="8DX3">
    <property type="method" value="X-ray"/>
    <property type="resolution" value="2.06 A"/>
    <property type="chains" value="A=600-1154, B=600-1027"/>
</dbReference>
<dbReference type="PDB" id="8DX8">
    <property type="method" value="X-ray"/>
    <property type="resolution" value="1.85 A"/>
    <property type="chains" value="A=600-1154, B=600-1027"/>
</dbReference>
<dbReference type="PDB" id="8DXB">
    <property type="method" value="X-ray"/>
    <property type="resolution" value="2.10 A"/>
    <property type="chains" value="A=600-1154, B=600-1027"/>
</dbReference>
<dbReference type="PDB" id="8DXE">
    <property type="method" value="X-ray"/>
    <property type="resolution" value="1.85 A"/>
    <property type="chains" value="A=600-1154, B=600-1027"/>
</dbReference>
<dbReference type="PDB" id="8DXG">
    <property type="method" value="X-ray"/>
    <property type="resolution" value="2.10 A"/>
    <property type="chains" value="A=600-1154, B=600-1027"/>
</dbReference>
<dbReference type="PDB" id="8DXH">
    <property type="method" value="X-ray"/>
    <property type="resolution" value="1.80 A"/>
    <property type="chains" value="A=600-1154, B=600-1027"/>
</dbReference>
<dbReference type="PDB" id="8DXI">
    <property type="method" value="X-ray"/>
    <property type="resolution" value="1.95 A"/>
    <property type="chains" value="A=600-1154, B=600-1027"/>
</dbReference>
<dbReference type="PDB" id="8DXJ">
    <property type="method" value="X-ray"/>
    <property type="resolution" value="1.80 A"/>
    <property type="chains" value="A=600-1154, B=600-1027"/>
</dbReference>
<dbReference type="PDB" id="8DXK">
    <property type="method" value="X-ray"/>
    <property type="resolution" value="2.00 A"/>
    <property type="chains" value="A=600-1154, B=600-1027"/>
</dbReference>
<dbReference type="PDB" id="8DXL">
    <property type="method" value="X-ray"/>
    <property type="resolution" value="2.25 A"/>
    <property type="chains" value="A=600-1154, B=600-1027"/>
</dbReference>
<dbReference type="PDB" id="8DXM">
    <property type="method" value="X-ray"/>
    <property type="resolution" value="1.99 A"/>
    <property type="chains" value="A=600-1154, B=600-1027"/>
</dbReference>
<dbReference type="PDB" id="8FE8">
    <property type="method" value="X-ray"/>
    <property type="resolution" value="2.50 A"/>
    <property type="chains" value="A=600-1154, B=600-1027"/>
</dbReference>
<dbReference type="PDB" id="8FFX">
    <property type="method" value="X-ray"/>
    <property type="resolution" value="2.42 A"/>
    <property type="chains" value="A=600-1154, B=600-1027"/>
</dbReference>
<dbReference type="PDB" id="8STP">
    <property type="method" value="X-ray"/>
    <property type="resolution" value="3.09 A"/>
    <property type="chains" value="A=600-1154, B=600-1027"/>
</dbReference>
<dbReference type="PDB" id="8STQ">
    <property type="method" value="X-ray"/>
    <property type="resolution" value="2.96 A"/>
    <property type="chains" value="A=600-1154, B=600-1027"/>
</dbReference>
<dbReference type="PDB" id="8STR">
    <property type="method" value="X-ray"/>
    <property type="resolution" value="2.77 A"/>
    <property type="chains" value="A=600-1154, B=600-1027"/>
</dbReference>
<dbReference type="PDB" id="8STS">
    <property type="method" value="X-ray"/>
    <property type="resolution" value="3.02 A"/>
    <property type="chains" value="A/C=600-1155, B/D=600-1027"/>
</dbReference>
<dbReference type="PDB" id="8STT">
    <property type="method" value="X-ray"/>
    <property type="resolution" value="2.62 A"/>
    <property type="chains" value="A/C=600-1155, B/D=600-1027"/>
</dbReference>
<dbReference type="PDB" id="8STU">
    <property type="method" value="X-ray"/>
    <property type="resolution" value="2.76 A"/>
    <property type="chains" value="A=600-1154, B=600-1027"/>
</dbReference>
<dbReference type="PDB" id="8STV">
    <property type="method" value="X-ray"/>
    <property type="resolution" value="2.78 A"/>
    <property type="chains" value="A/C=600-1155, B/D=600-1027"/>
</dbReference>
<dbReference type="PDB" id="8U69">
    <property type="method" value="X-ray"/>
    <property type="resolution" value="2.45 A"/>
    <property type="chains" value="A=600-1154, B=600-1027"/>
</dbReference>
<dbReference type="PDB" id="8U6A">
    <property type="method" value="X-ray"/>
    <property type="resolution" value="2.37 A"/>
    <property type="chains" value="A=600-1154, B=600-1027"/>
</dbReference>
<dbReference type="PDB" id="8U6B">
    <property type="method" value="X-ray"/>
    <property type="resolution" value="2.35 A"/>
    <property type="chains" value="A=600-1154, B=600-1027"/>
</dbReference>
<dbReference type="PDB" id="8U6C">
    <property type="method" value="X-ray"/>
    <property type="resolution" value="2.70 A"/>
    <property type="chains" value="A=600-1154, B=600-1027"/>
</dbReference>
<dbReference type="PDB" id="8U6D">
    <property type="method" value="X-ray"/>
    <property type="resolution" value="2.33 A"/>
    <property type="chains" value="A=600-1154, B=600-1027"/>
</dbReference>
<dbReference type="PDB" id="8U6E">
    <property type="method" value="X-ray"/>
    <property type="resolution" value="2.31 A"/>
    <property type="chains" value="A=600-1154, B=600-1027"/>
</dbReference>
<dbReference type="PDB" id="8U6F">
    <property type="method" value="X-ray"/>
    <property type="resolution" value="2.69 A"/>
    <property type="chains" value="A=600-1151, B=600-1027"/>
</dbReference>
<dbReference type="PDB" id="8U6G">
    <property type="method" value="X-ray"/>
    <property type="resolution" value="2.77 A"/>
    <property type="chains" value="A=600-1152, B=600-1027"/>
</dbReference>
<dbReference type="PDB" id="8U6H">
    <property type="method" value="X-ray"/>
    <property type="resolution" value="2.99 A"/>
    <property type="chains" value="A/C=600-1153, B/D=600-1027"/>
</dbReference>
<dbReference type="PDB" id="8U6I">
    <property type="method" value="X-ray"/>
    <property type="resolution" value="2.46 A"/>
    <property type="chains" value="A=600-1153, B=600-1027"/>
</dbReference>
<dbReference type="PDB" id="8U6J">
    <property type="method" value="X-ray"/>
    <property type="resolution" value="2.64 A"/>
    <property type="chains" value="A=600-1154, B=600-1027"/>
</dbReference>
<dbReference type="PDB" id="8U6K">
    <property type="method" value="X-ray"/>
    <property type="resolution" value="2.72 A"/>
    <property type="chains" value="A=600-1154, B=600-1027"/>
</dbReference>
<dbReference type="PDB" id="8U6L">
    <property type="method" value="X-ray"/>
    <property type="resolution" value="2.49 A"/>
    <property type="chains" value="A=600-1154, B=600-1027"/>
</dbReference>
<dbReference type="PDB" id="8U6M">
    <property type="method" value="X-ray"/>
    <property type="resolution" value="2.62 A"/>
    <property type="chains" value="A=600-1154, B=600-1027"/>
</dbReference>
<dbReference type="PDB" id="8U6N">
    <property type="method" value="X-ray"/>
    <property type="resolution" value="2.74 A"/>
    <property type="chains" value="A=600-1136, B=600-1027"/>
</dbReference>
<dbReference type="PDB" id="8U6O">
    <property type="method" value="X-ray"/>
    <property type="resolution" value="2.48 A"/>
    <property type="chains" value="A=600-1153, B=600-1027"/>
</dbReference>
<dbReference type="PDB" id="8U6P">
    <property type="method" value="X-ray"/>
    <property type="resolution" value="2.81 A"/>
    <property type="chains" value="A=600-1154, B=600-1027"/>
</dbReference>
<dbReference type="PDB" id="8U6Q">
    <property type="method" value="X-ray"/>
    <property type="resolution" value="2.55 A"/>
    <property type="chains" value="A=600-1154, B=600-1027"/>
</dbReference>
<dbReference type="PDB" id="8U6R">
    <property type="method" value="X-ray"/>
    <property type="resolution" value="2.87 A"/>
    <property type="chains" value="A=600-1151, B=600-1027"/>
</dbReference>
<dbReference type="PDB" id="8U6S">
    <property type="method" value="X-ray"/>
    <property type="resolution" value="2.99 A"/>
    <property type="chains" value="A=600-1151, B=600-1027"/>
</dbReference>
<dbReference type="PDB" id="8U6T">
    <property type="method" value="X-ray"/>
    <property type="resolution" value="2.25 A"/>
    <property type="chains" value="A=600-1153, B=600-1027"/>
</dbReference>
<dbReference type="PDB" id="8V8F">
    <property type="method" value="X-ray"/>
    <property type="resolution" value="2.27 A"/>
    <property type="chains" value="F/G=536-546"/>
</dbReference>
<dbReference type="PDB" id="8VB6">
    <property type="method" value="EM"/>
    <property type="resolution" value="2.70 A"/>
    <property type="chains" value="A=600-1154, B=600-1027"/>
</dbReference>
<dbReference type="PDB" id="8VB7">
    <property type="method" value="EM"/>
    <property type="resolution" value="2.50 A"/>
    <property type="chains" value="A=600-1154, B=600-1027"/>
</dbReference>
<dbReference type="PDB" id="8VB8">
    <property type="method" value="EM"/>
    <property type="resolution" value="3.00 A"/>
    <property type="chains" value="A=600-1154, B=600-1027"/>
</dbReference>
<dbReference type="PDB" id="8VB9">
    <property type="method" value="EM"/>
    <property type="resolution" value="2.80 A"/>
    <property type="chains" value="A=600-1154, B=600-1027"/>
</dbReference>
<dbReference type="PDB" id="8VBC">
    <property type="method" value="EM"/>
    <property type="resolution" value="2.80 A"/>
    <property type="chains" value="A=600-1154, B=600-1027"/>
</dbReference>
<dbReference type="PDB" id="8VBD">
    <property type="method" value="EM"/>
    <property type="resolution" value="2.70 A"/>
    <property type="chains" value="A=600-1154, B=600-1027"/>
</dbReference>
<dbReference type="PDB" id="8VBE">
    <property type="method" value="EM"/>
    <property type="resolution" value="2.60 A"/>
    <property type="chains" value="A=600-1154, B=600-1027"/>
</dbReference>
<dbReference type="PDB" id="8VBF">
    <property type="method" value="EM"/>
    <property type="resolution" value="2.80 A"/>
    <property type="chains" value="A=600-1154, B=600-1027"/>
</dbReference>
<dbReference type="PDB" id="8VBG">
    <property type="method" value="EM"/>
    <property type="resolution" value="2.40 A"/>
    <property type="chains" value="A=600-1154, B=600-1027"/>
</dbReference>
<dbReference type="PDB" id="8VBH">
    <property type="method" value="EM"/>
    <property type="resolution" value="2.20 A"/>
    <property type="chains" value="A=600-1154, B=600-1027"/>
</dbReference>
<dbReference type="PDB" id="8VBI">
    <property type="method" value="EM"/>
    <property type="resolution" value="2.30 A"/>
    <property type="chains" value="A=600-1154, B=600-1027"/>
</dbReference>
<dbReference type="PDBsum" id="1A9M"/>
<dbReference type="PDBsum" id="1AJV"/>
<dbReference type="PDBsum" id="1AJX"/>
<dbReference type="PDBsum" id="1AXA"/>
<dbReference type="PDBsum" id="1BQM"/>
<dbReference type="PDBsum" id="1BQN"/>
<dbReference type="PDBsum" id="1D4H"/>
<dbReference type="PDBsum" id="1D4I"/>
<dbReference type="PDBsum" id="1D4J"/>
<dbReference type="PDBsum" id="1DLO"/>
<dbReference type="PDBsum" id="1DW6"/>
<dbReference type="PDBsum" id="1EBK"/>
<dbReference type="PDBsum" id="1EBW"/>
<dbReference type="PDBsum" id="1EBY"/>
<dbReference type="PDBsum" id="1EBZ"/>
<dbReference type="PDBsum" id="1EC0"/>
<dbReference type="PDBsum" id="1EC1"/>
<dbReference type="PDBsum" id="1EC2"/>
<dbReference type="PDBsum" id="1EC3"/>
<dbReference type="PDBsum" id="1EET"/>
<dbReference type="PDBsum" id="1G35"/>
<dbReference type="PDBsum" id="1GNM"/>
<dbReference type="PDBsum" id="1GNN"/>
<dbReference type="PDBsum" id="1GNO"/>
<dbReference type="PDBsum" id="1HAR"/>
<dbReference type="PDBsum" id="1HBV"/>
<dbReference type="PDBsum" id="1HEF"/>
<dbReference type="PDBsum" id="1HEG"/>
<dbReference type="PDBsum" id="1HIH"/>
<dbReference type="PDBsum" id="1HMV"/>
<dbReference type="PDBsum" id="1HNI"/>
<dbReference type="PDBsum" id="1HNV"/>
<dbReference type="PDBsum" id="1HOS"/>
<dbReference type="PDBsum" id="1HPS"/>
<dbReference type="PDBsum" id="1HPZ"/>
<dbReference type="PDBsum" id="1HQE"/>
<dbReference type="PDBsum" id="1HQU"/>
<dbReference type="PDBsum" id="1HRH"/>
<dbReference type="PDBsum" id="1HTE"/>
<dbReference type="PDBsum" id="1HTF"/>
<dbReference type="PDBsum" id="1HTG"/>
<dbReference type="PDBsum" id="1HVI"/>
<dbReference type="PDBsum" id="1HVK"/>
<dbReference type="PDBsum" id="1HVU"/>
<dbReference type="PDBsum" id="1HYS"/>
<dbReference type="PDBsum" id="1IKV"/>
<dbReference type="PDBsum" id="1IKW"/>
<dbReference type="PDBsum" id="1IKX"/>
<dbReference type="PDBsum" id="1IKY"/>
<dbReference type="PDBsum" id="1J5O"/>
<dbReference type="PDBsum" id="1KJH"/>
<dbReference type="PDBsum" id="1MER"/>
<dbReference type="PDBsum" id="1MES"/>
<dbReference type="PDBsum" id="1MET"/>
<dbReference type="PDBsum" id="1MEU"/>
<dbReference type="PDBsum" id="1N5Y"/>
<dbReference type="PDBsum" id="1N6Q"/>
<dbReference type="PDBsum" id="1NPA"/>
<dbReference type="PDBsum" id="1NPV"/>
<dbReference type="PDBsum" id="1NPW"/>
<dbReference type="PDBsum" id="1QE1"/>
<dbReference type="PDBsum" id="1QMC"/>
<dbReference type="PDBsum" id="1R0A"/>
<dbReference type="PDBsum" id="1RDH"/>
<dbReference type="PDBsum" id="1RTD"/>
<dbReference type="PDBsum" id="1S6P"/>
<dbReference type="PDBsum" id="1S6Q"/>
<dbReference type="PDBsum" id="1S9E"/>
<dbReference type="PDBsum" id="1S9G"/>
<dbReference type="PDBsum" id="1SBG"/>
<dbReference type="PDBsum" id="1SUQ"/>
<dbReference type="PDBsum" id="1SV5"/>
<dbReference type="PDBsum" id="1T03"/>
<dbReference type="PDBsum" id="1T05"/>
<dbReference type="PDBsum" id="1T7K"/>
<dbReference type="PDBsum" id="1TV6"/>
<dbReference type="PDBsum" id="1TVR"/>
<dbReference type="PDBsum" id="1UWB"/>
<dbReference type="PDBsum" id="1W5V"/>
<dbReference type="PDBsum" id="1W5W"/>
<dbReference type="PDBsum" id="1W5X"/>
<dbReference type="PDBsum" id="1W5Y"/>
<dbReference type="PDBsum" id="1YT9"/>
<dbReference type="PDBsum" id="1ZP8"/>
<dbReference type="PDBsum" id="1ZPA"/>
<dbReference type="PDBsum" id="1ZSF"/>
<dbReference type="PDBsum" id="1ZSR"/>
<dbReference type="PDBsum" id="2AQU"/>
<dbReference type="PDBsum" id="2B5J"/>
<dbReference type="PDBsum" id="2B6A"/>
<dbReference type="PDBsum" id="2BAN"/>
<dbReference type="PDBsum" id="2BBB"/>
<dbReference type="PDBsum" id="2BE2"/>
<dbReference type="PDBsum" id="2EXF"/>
<dbReference type="PDBsum" id="2G69"/>
<dbReference type="PDBsum" id="2HB3"/>
<dbReference type="PDBsum" id="2HMI"/>
<dbReference type="PDBsum" id="2HNZ"/>
<dbReference type="PDBsum" id="2HS1"/>
<dbReference type="PDBsum" id="2HS2"/>
<dbReference type="PDBsum" id="2I4D"/>
<dbReference type="PDBsum" id="2I4U"/>
<dbReference type="PDBsum" id="2I4V"/>
<dbReference type="PDBsum" id="2I4W"/>
<dbReference type="PDBsum" id="2I4X"/>
<dbReference type="PDBsum" id="2I5J"/>
<dbReference type="PDBsum" id="2IAJ"/>
<dbReference type="PDBsum" id="2IC3"/>
<dbReference type="PDBsum" id="2IDW"/>
<dbReference type="PDBsum" id="2IEO"/>
<dbReference type="PDBsum" id="2JZW"/>
<dbReference type="PDBsum" id="2L45"/>
<dbReference type="PDBsum" id="2L46"/>
<dbReference type="PDBsum" id="2L4L"/>
<dbReference type="PDBsum" id="2UXZ"/>
<dbReference type="PDBsum" id="2UY0"/>
<dbReference type="PDBsum" id="2VG5"/>
<dbReference type="PDBsum" id="2VG6"/>
<dbReference type="PDBsum" id="2VG7"/>
<dbReference type="PDBsum" id="2X4U"/>
<dbReference type="PDBsum" id="2YKM"/>
<dbReference type="PDBsum" id="2YKN"/>
<dbReference type="PDBsum" id="2ZD1"/>
<dbReference type="PDBsum" id="2ZE2"/>
<dbReference type="PDBsum" id="3AVI"/>
<dbReference type="PDBsum" id="3BGR"/>
<dbReference type="PDBsum" id="3DLK"/>
<dbReference type="PDBsum" id="3GGA"/>
<dbReference type="PDBsum" id="3GGV"/>
<dbReference type="PDBsum" id="3GGX"/>
<dbReference type="PDBsum" id="3HVT"/>
<dbReference type="PDBsum" id="3IG1"/>
<dbReference type="PDBsum" id="3IRX"/>
<dbReference type="PDBsum" id="3IS9"/>
<dbReference type="PDBsum" id="3ISN"/>
<dbReference type="PDBsum" id="3ITH"/>
<dbReference type="PDBsum" id="3JSM"/>
<dbReference type="PDBsum" id="3JYT"/>
<dbReference type="PDBsum" id="3K2P"/>
<dbReference type="PDBsum" id="3K4V"/>
<dbReference type="PDBsum" id="3KLE"/>
<dbReference type="PDBsum" id="3KLF"/>
<dbReference type="PDBsum" id="3KLG"/>
<dbReference type="PDBsum" id="3KLH"/>
<dbReference type="PDBsum" id="3KLI"/>
<dbReference type="PDBsum" id="3NDT"/>
<dbReference type="PDBsum" id="3NU3"/>
<dbReference type="PDBsum" id="3NU4"/>
<dbReference type="PDBsum" id="3NU5"/>
<dbReference type="PDBsum" id="3NU6"/>
<dbReference type="PDBsum" id="3NU9"/>
<dbReference type="PDBsum" id="3NUJ"/>
<dbReference type="PDBsum" id="3NUO"/>
<dbReference type="PDBsum" id="3OK9"/>
<dbReference type="PDBsum" id="3PSU"/>
<dbReference type="PDBsum" id="3QAA"/>
<dbReference type="PDBsum" id="3QLH"/>
<dbReference type="PDBsum" id="3QO9"/>
<dbReference type="PDBsum" id="3TKG"/>
<dbReference type="PDBsum" id="3TKW"/>
<dbReference type="PDBsum" id="3TL9"/>
<dbReference type="PDBsum" id="3TLH"/>
<dbReference type="PDBsum" id="3V4I"/>
<dbReference type="PDBsum" id="3V6D"/>
<dbReference type="PDBsum" id="3V81"/>
<dbReference type="PDBsum" id="3ZPS"/>
<dbReference type="PDBsum" id="3ZPT"/>
<dbReference type="PDBsum" id="3ZPU"/>
<dbReference type="PDBsum" id="4COE"/>
<dbReference type="PDBsum" id="4CP7"/>
<dbReference type="PDBsum" id="4CPQ"/>
<dbReference type="PDBsum" id="4CPR"/>
<dbReference type="PDBsum" id="4CPS"/>
<dbReference type="PDBsum" id="4CPT"/>
<dbReference type="PDBsum" id="4CPU"/>
<dbReference type="PDBsum" id="4CPW"/>
<dbReference type="PDBsum" id="4CPX"/>
<dbReference type="PDBsum" id="4DG1"/>
<dbReference type="PDBsum" id="4G1Q"/>
<dbReference type="PDBsum" id="4G8G"/>
<dbReference type="PDBsum" id="4G8I"/>
<dbReference type="PDBsum" id="4G9D"/>
<dbReference type="PDBsum" id="4G9F"/>
<dbReference type="PDBsum" id="4H4M"/>
<dbReference type="PDBsum" id="4H4O"/>
<dbReference type="PDBsum" id="4I2P"/>
<dbReference type="PDBsum" id="4I2Q"/>
<dbReference type="PDBsum" id="4ICL"/>
<dbReference type="PDBsum" id="4ID5"/>
<dbReference type="PDBsum" id="4IDK"/>
<dbReference type="PDBsum" id="4IFV"/>
<dbReference type="PDBsum" id="4IFY"/>
<dbReference type="PDBsum" id="4IG0"/>
<dbReference type="PDBsum" id="4IG3"/>
<dbReference type="PDBsum" id="4KFB"/>
<dbReference type="PDBsum" id="4KKO"/>
<dbReference type="PDBsum" id="4KO0"/>
<dbReference type="PDBsum" id="4LSL"/>
<dbReference type="PDBsum" id="4LSN"/>
<dbReference type="PDBsum" id="4MFB"/>
<dbReference type="PDBsum" id="4O44"/>
<dbReference type="PDBsum" id="4O4G"/>
<dbReference type="PDBsum" id="4OJR"/>
<dbReference type="PDBsum" id="4PQU"/>
<dbReference type="PDBsum" id="4PUO"/>
<dbReference type="PDBsum" id="4PWD"/>
<dbReference type="PDBsum" id="4Q0B"/>
<dbReference type="PDBsum" id="4QAG"/>
<dbReference type="PDBsum" id="4R5P"/>
<dbReference type="PDBsum" id="4RW4"/>
<dbReference type="PDBsum" id="4RW6"/>
<dbReference type="PDBsum" id="4RW7"/>
<dbReference type="PDBsum" id="4RW8"/>
<dbReference type="PDBsum" id="4RW9"/>
<dbReference type="PDBsum" id="4U8W"/>
<dbReference type="PDBsum" id="4WE1"/>
<dbReference type="PDBsum" id="4YE3"/>
<dbReference type="PDBsum" id="4YHQ"/>
<dbReference type="PDBsum" id="4ZIP"/>
<dbReference type="PDBsum" id="4ZLS"/>
<dbReference type="PDBsum" id="5AGZ"/>
<dbReference type="PDBsum" id="5AH6"/>
<dbReference type="PDBsum" id="5AH7"/>
<dbReference type="PDBsum" id="5AH8"/>
<dbReference type="PDBsum" id="5AH9"/>
<dbReference type="PDBsum" id="5AHA"/>
<dbReference type="PDBsum" id="5AHB"/>
<dbReference type="PDBsum" id="5AHC"/>
<dbReference type="PDBsum" id="5BRY"/>
<dbReference type="PDBsum" id="5BS4"/>
<dbReference type="PDBsum" id="5C24"/>
<dbReference type="PDBsum" id="5C25"/>
<dbReference type="PDBsum" id="5C42"/>
<dbReference type="PDBsum" id="5CYM"/>
<dbReference type="PDBsum" id="5CYQ"/>
<dbReference type="PDBsum" id="5D3G"/>
<dbReference type="PDBsum" id="5FDL"/>
<dbReference type="PDBsum" id="5HBM"/>
<dbReference type="PDBsum" id="5HLF"/>
<dbReference type="PDBsum" id="5HP1"/>
<dbReference type="PDBsum" id="5HRO"/>
<dbReference type="PDBsum" id="5I3U"/>
<dbReference type="PDBsum" id="5I42"/>
<dbReference type="PDBsum" id="5J1E"/>
<dbReference type="PDBsum" id="5JFP"/>
<dbReference type="PDBsum" id="5JFU"/>
<dbReference type="PDBsum" id="5JG1"/>
<dbReference type="PDBsum" id="5OI2"/>
<dbReference type="PDBsum" id="5OI3"/>
<dbReference type="PDBsum" id="5OI5"/>
<dbReference type="PDBsum" id="5OI8"/>
<dbReference type="PDBsum" id="5OIA"/>
<dbReference type="PDBsum" id="5T6Z"/>
<dbReference type="PDBsum" id="5T70"/>
<dbReference type="PDBsum" id="5TER"/>
<dbReference type="PDBsum" id="5TUQ"/>
<dbReference type="PDBsum" id="5TW3"/>
<dbReference type="PDBsum" id="5TXL"/>
<dbReference type="PDBsum" id="5TXM"/>
<dbReference type="PDBsum" id="5TXN"/>
<dbReference type="PDBsum" id="5TXO"/>
<dbReference type="PDBsum" id="5TXP"/>
<dbReference type="PDBsum" id="5UFZ"/>
<dbReference type="PDBsum" id="5ULT"/>
<dbReference type="PDBsum" id="5UOV"/>
<dbReference type="PDBsum" id="5UPZ"/>
<dbReference type="PDBsum" id="5UV5"/>
<dbReference type="PDBsum" id="5V5L"/>
<dbReference type="PDBsum" id="5V5M"/>
<dbReference type="PDBsum" id="5VQQ"/>
<dbReference type="PDBsum" id="5VQR"/>
<dbReference type="PDBsum" id="5VQS"/>
<dbReference type="PDBsum" id="5VQT"/>
<dbReference type="PDBsum" id="5VQU"/>
<dbReference type="PDBsum" id="5VQV"/>
<dbReference type="PDBsum" id="5VQW"/>
<dbReference type="PDBsum" id="5VQX"/>
<dbReference type="PDBsum" id="5VQY"/>
<dbReference type="PDBsum" id="5VQZ"/>
<dbReference type="PDBsum" id="5W5W"/>
<dbReference type="PDBsum" id="5YOJ"/>
<dbReference type="PDBsum" id="6AMO"/>
<dbReference type="PDBsum" id="6AN2"/>
<dbReference type="PDBsum" id="6AN8"/>
<dbReference type="PDBsum" id="6ANQ"/>
<dbReference type="PDBsum" id="6AOC"/>
<dbReference type="PDBsum" id="6ASW"/>
<dbReference type="PDBsum" id="6AVM"/>
<dbReference type="PDBsum" id="6AVT"/>
<dbReference type="PDBsum" id="6B19"/>
<dbReference type="PDBsum" id="6BZ2"/>
<dbReference type="PDBsum" id="6C0J"/>
<dbReference type="PDBsum" id="6C0K"/>
<dbReference type="PDBsum" id="6C0L"/>
<dbReference type="PDBsum" id="6C0N"/>
<dbReference type="PDBsum" id="6C0O"/>
<dbReference type="PDBsum" id="6C0P"/>
<dbReference type="PDBsum" id="6C0R"/>
<dbReference type="PDBsum" id="6C8X"/>
<dbReference type="PDBsum" id="6C8Y"/>
<dbReference type="PDBsum" id="6CGF"/>
<dbReference type="PDBsum" id="6D0D"/>
<dbReference type="PDBsum" id="6D0E"/>
<dbReference type="PDBsum" id="6DTW"/>
<dbReference type="PDBsum" id="6DTX"/>
<dbReference type="PDBsum" id="6DUF"/>
<dbReference type="PDBsum" id="6DUG"/>
<dbReference type="PDBsum" id="6DUH"/>
<dbReference type="PDBsum" id="6ECL"/>
<dbReference type="PDBsum" id="6ELI"/>
<dbReference type="PDBsum" id="6HAK"/>
<dbReference type="PDBsum" id="6KMP"/>
<dbReference type="PDBsum" id="6O48"/>
<dbReference type="PDBsum" id="6O9E"/>
<dbReference type="PDBsum" id="6OE3"/>
<dbReference type="PDBsum" id="6OUN"/>
<dbReference type="PDBsum" id="6PRF"/>
<dbReference type="PDBsum" id="6UL5"/>
<dbReference type="PDBsum" id="6VUG"/>
<dbReference type="PDBsum" id="6WAZ"/>
<dbReference type="PDBsum" id="6WB0"/>
<dbReference type="PDBsum" id="6WB1"/>
<dbReference type="PDBsum" id="6WB2"/>
<dbReference type="PDBsum" id="6X47"/>
<dbReference type="PDBsum" id="6X49"/>
<dbReference type="PDBsum" id="6X4A"/>
<dbReference type="PDBsum" id="6X4B"/>
<dbReference type="PDBsum" id="6X4C"/>
<dbReference type="PDBsum" id="6X4D"/>
<dbReference type="PDBsum" id="6X4E"/>
<dbReference type="PDBsum" id="6X4F"/>
<dbReference type="PDBsum" id="7AHX"/>
<dbReference type="PDBsum" id="7AID"/>
<dbReference type="PDBsum" id="7AIF"/>
<dbReference type="PDBsum" id="7AIG"/>
<dbReference type="PDBsum" id="7AII"/>
<dbReference type="PDBsum" id="7AIJ"/>
<dbReference type="PDBsum" id="7KJV"/>
<dbReference type="PDBsum" id="7KJW"/>
<dbReference type="PDBsum" id="7KJX"/>
<dbReference type="PDBsum" id="7KRC"/>
<dbReference type="PDBsum" id="7KRD"/>
<dbReference type="PDBsum" id="7KRE"/>
<dbReference type="PDBsum" id="7KRF"/>
<dbReference type="PDBsum" id="7KWU"/>
<dbReference type="PDBsum" id="7LPW"/>
<dbReference type="PDBsum" id="7LPX"/>
<dbReference type="PDBsum" id="7LQU"/>
<dbReference type="PDBsum" id="7LRI"/>
<dbReference type="PDBsum" id="7LRM"/>
<dbReference type="PDBsum" id="7LRX"/>
<dbReference type="PDBsum" id="7LRY"/>
<dbReference type="PDBsum" id="7LSK"/>
<dbReference type="PDBsum" id="7OT6"/>
<dbReference type="PDBsum" id="7OTA"/>
<dbReference type="PDBsum" id="7OTK"/>
<dbReference type="PDBsum" id="7OTN"/>
<dbReference type="PDBsum" id="7OTX"/>
<dbReference type="PDBsum" id="7OTZ"/>
<dbReference type="PDBsum" id="7OUT"/>
<dbReference type="PDBsum" id="7OXQ"/>
<dbReference type="PDBsum" id="7OZ2"/>
<dbReference type="PDBsum" id="7OZ5"/>
<dbReference type="PDBsum" id="7OZW"/>
<dbReference type="PDBsum" id="7P15"/>
<dbReference type="PDBsum" id="7SEP"/>
<dbReference type="PDBsum" id="7SIF"/>
<dbReference type="PDBsum" id="7SIG"/>
<dbReference type="PDBsum" id="7SIH"/>
<dbReference type="PDBsum" id="7SJX"/>
<dbReference type="PDBsum" id="7SNL"/>
<dbReference type="PDBsum" id="7SNN"/>
<dbReference type="PDBsum" id="7SNP"/>
<dbReference type="PDBsum" id="7SNQ"/>
<dbReference type="PDBsum" id="7SNZ"/>
<dbReference type="PDBsum" id="7SO1"/>
<dbReference type="PDBsum" id="7SO2"/>
<dbReference type="PDBsum" id="7SO3"/>
<dbReference type="PDBsum" id="7SO4"/>
<dbReference type="PDBsum" id="7SO6"/>
<dbReference type="PDBsum" id="7TAZ"/>
<dbReference type="PDBsum" id="7U5Z"/>
<dbReference type="PDBsum" id="7Z24"/>
<dbReference type="PDBsum" id="7Z29"/>
<dbReference type="PDBsum" id="7Z2D"/>
<dbReference type="PDBsum" id="7Z2E"/>
<dbReference type="PDBsum" id="7Z2G"/>
<dbReference type="PDBsum" id="7Z2H"/>
<dbReference type="PDBsum" id="8DX2"/>
<dbReference type="PDBsum" id="8DX3"/>
<dbReference type="PDBsum" id="8DX8"/>
<dbReference type="PDBsum" id="8DXB"/>
<dbReference type="PDBsum" id="8DXE"/>
<dbReference type="PDBsum" id="8DXG"/>
<dbReference type="PDBsum" id="8DXH"/>
<dbReference type="PDBsum" id="8DXI"/>
<dbReference type="PDBsum" id="8DXJ"/>
<dbReference type="PDBsum" id="8DXK"/>
<dbReference type="PDBsum" id="8DXL"/>
<dbReference type="PDBsum" id="8DXM"/>
<dbReference type="PDBsum" id="8FE8"/>
<dbReference type="PDBsum" id="8FFX"/>
<dbReference type="PDBsum" id="8STP"/>
<dbReference type="PDBsum" id="8STQ"/>
<dbReference type="PDBsum" id="8STR"/>
<dbReference type="PDBsum" id="8STS"/>
<dbReference type="PDBsum" id="8STT"/>
<dbReference type="PDBsum" id="8STU"/>
<dbReference type="PDBsum" id="8STV"/>
<dbReference type="PDBsum" id="8U69"/>
<dbReference type="PDBsum" id="8U6A"/>
<dbReference type="PDBsum" id="8U6B"/>
<dbReference type="PDBsum" id="8U6C"/>
<dbReference type="PDBsum" id="8U6D"/>
<dbReference type="PDBsum" id="8U6E"/>
<dbReference type="PDBsum" id="8U6F"/>
<dbReference type="PDBsum" id="8U6G"/>
<dbReference type="PDBsum" id="8U6H"/>
<dbReference type="PDBsum" id="8U6I"/>
<dbReference type="PDBsum" id="8U6J"/>
<dbReference type="PDBsum" id="8U6K"/>
<dbReference type="PDBsum" id="8U6L"/>
<dbReference type="PDBsum" id="8U6M"/>
<dbReference type="PDBsum" id="8U6N"/>
<dbReference type="PDBsum" id="8U6O"/>
<dbReference type="PDBsum" id="8U6P"/>
<dbReference type="PDBsum" id="8U6Q"/>
<dbReference type="PDBsum" id="8U6R"/>
<dbReference type="PDBsum" id="8U6S"/>
<dbReference type="PDBsum" id="8U6T"/>
<dbReference type="PDBsum" id="8V8F"/>
<dbReference type="PDBsum" id="8VB6"/>
<dbReference type="PDBsum" id="8VB7"/>
<dbReference type="PDBsum" id="8VB8"/>
<dbReference type="PDBsum" id="8VB9"/>
<dbReference type="PDBsum" id="8VBC"/>
<dbReference type="PDBsum" id="8VBD"/>
<dbReference type="PDBsum" id="8VBE"/>
<dbReference type="PDBsum" id="8VBF"/>
<dbReference type="PDBsum" id="8VBG"/>
<dbReference type="PDBsum" id="8VBH"/>
<dbReference type="PDBsum" id="8VBI"/>
<dbReference type="BMRB" id="P03366"/>
<dbReference type="EMDB" id="EMD-13139"/>
<dbReference type="EMDB" id="EMD-13156"/>
<dbReference type="EMDB" id="EMD-14457"/>
<dbReference type="EMDB" id="EMD-14458"/>
<dbReference type="EMDB" id="EMD-14462"/>
<dbReference type="EMDB" id="EMD-14463"/>
<dbReference type="EMDB" id="EMD-14465"/>
<dbReference type="EMDB" id="EMD-14466"/>
<dbReference type="EMDB" id="EMD-21582"/>
<dbReference type="EMDB" id="EMD-21583"/>
<dbReference type="EMDB" id="EMD-21584"/>
<dbReference type="EMDB" id="EMD-21585"/>
<dbReference type="EMDB" id="EMD-22899"/>
<dbReference type="EMDB" id="EMD-22900"/>
<dbReference type="EMDB" id="EMD-22901"/>
<dbReference type="EMDB" id="EMD-25074"/>
<dbReference type="EMDB" id="EMD-25075"/>
<dbReference type="EMDB" id="EMD-25165"/>
<dbReference type="EMDB" id="EMD-43114"/>
<dbReference type="EMDB" id="EMD-43115"/>
<dbReference type="EMDB" id="EMD-43116"/>
<dbReference type="EMDB" id="EMD-43117"/>
<dbReference type="EMDB" id="EMD-43120"/>
<dbReference type="EMDB" id="EMD-43121"/>
<dbReference type="EMDB" id="EMD-43122"/>
<dbReference type="EMDB" id="EMD-43123"/>
<dbReference type="EMDB" id="EMD-43124"/>
<dbReference type="EMDB" id="EMD-43125"/>
<dbReference type="EMDB" id="EMD-43126"/>
<dbReference type="EMDB" id="EMD-7031"/>
<dbReference type="SMR" id="P03366"/>
<dbReference type="IntAct" id="P03366">
    <property type="interactions" value="39"/>
</dbReference>
<dbReference type="MINT" id="P03366"/>
<dbReference type="BindingDB" id="P03366"/>
<dbReference type="ChEMBL" id="CHEMBL5823"/>
<dbReference type="DrugBank" id="DB07035">
    <property type="generic name" value="(2E)-3-{3-[(5-ETHYL-3-IODO-6-METHYL-2-OXO-1,2-DIHYDROPYRIDIN-4-YL)OXY]PHENYL}ACRYLONITRILE"/>
</dbReference>
<dbReference type="DrugBank" id="DB02704">
    <property type="generic name" value="(2R,3R,4R,5R)-3,4-Dihydroxy-N,N'-bis[(1S,2R)-2-hydroxy-2,3-dihydro-1H-inden-1-yl]-2,5-bis(2-phenylethyl)hexanediamide"/>
</dbReference>
<dbReference type="DrugBank" id="DB07806">
    <property type="generic name" value="(2R,4S)-2-[(R)-BENZYLCARBAMOYL-PHENYLACETYL-METHYL]-5,5-DIMETHYL-THIAZOLIDINE-4-CARBOXYLIC ACID"/>
</dbReference>
<dbReference type="DrugBank" id="DB02785">
    <property type="generic name" value="(2S)-1-[(2S,4R)-4-Benzyl-2-hydroxy-5-{[(1S,2R,5S)-2-hydroxy-5-methylcyclopentyl]amino}-5-oxopentyl]-4-{[6-chloro-5-(4-methyl-1-piperazinyl)-2-pyrazinyl]carbonyl}-N-(2-methyl-2-propanyl)-2-piperazineca rboxamide"/>
</dbReference>
<dbReference type="DrugBank" id="DB01824">
    <property type="generic name" value="(3S)-Tetrahydro-3-furanyl {(2S,3S)-4-[(2S,4R)-4-{(1S,2R)-2-[(S)-amino(hydroxy)methoxy]-2,3-dihydro-1H-inden-1-yl}-2-benzyl-3-oxo-2-pyrrolidinyl]-3-hydroxy-1-phenyl-2-butanyl}carbamate"/>
</dbReference>
<dbReference type="DrugBank" id="DB01732">
    <property type="generic name" value="(4R,5S,6S,7R)-1,3-dibenzyl-4,7-bis(phenoxymethyl)-5,6-dihydroxy-1,3 diazepan-2-one"/>
</dbReference>
<dbReference type="DrugBank" id="DB06874">
    <property type="generic name" value="(6-[4-(AMINOMETHYL)-2,6-DIMETHYLPHENOXY]-2-{[4-(AMINOMETHYL)PHENYL]AMINO}-5-BROMOPYRIMIDIN-4-YL)METHANOL"/>
</dbReference>
<dbReference type="DrugBank" id="DB08034">
    <property type="generic name" value="(E)-3,4-DIHYDROXY-N'-[(2-METHOXYNAPHTHALEN-1-YL)METHYLENE]BENZOHYDRAZIDE"/>
</dbReference>
<dbReference type="DrugBank" id="DB07892">
    <property type="generic name" value="1-(2-HYDROXYETHYLOXYMETHYL)-6-PHENYL THIOTHYMINE"/>
</dbReference>
<dbReference type="DrugBank" id="DB07961">
    <property type="generic name" value="1-(4-Cyano-phenyl)-3-[2-(2,6-dichloro-phenyl)-1-imino-ethyl]-thiourea"/>
</dbReference>
<dbReference type="DrugBank" id="DB07451">
    <property type="generic name" value="1-(5-BROMO-PYRIDIN-2-YL)-3-[2-(6-FLUORO-2-HYDROXY-3-PROPIONYL-PHENYL)-CYCLOPROPYL]-UREA"/>
</dbReference>
<dbReference type="DrugBank" id="DB08212">
    <property type="generic name" value="1-[2-(3-ACETYL-2-HYDROXY-6-METHOXY-PHENYL)-CYCLOPROPYL]-3-(5-CYANO-PYRIDIN-2-YL)-THIOUREA"/>
</dbReference>
<dbReference type="DrugBank" id="DB08372">
    <property type="generic name" value="1-[2-(4-ETHOXY-3-FLUOROPYRIDIN-2-YL)ETHYL]-3-(5-METHYLPYRIDIN-2-YL)THIOUREA"/>
</dbReference>
<dbReference type="DrugBank" id="DB02972">
    <property type="generic name" value="1-Benzyl-(R)-Propylamine"/>
</dbReference>
<dbReference type="DrugBank" id="DB08682">
    <property type="generic name" value="1-METHYL ETHYL 1-CHLORO-5-[[(5,6DIHYDRO-2-METHYL-1,4-OXATHIIN-3-YL)CARBONYL]AMINO]BENZOATE"/>
</dbReference>
<dbReference type="DrugBank" id="DB08681">
    <property type="generic name" value="1-METHYL ETHYL 2-CHLORO-5-[[[(1-METHYLETHOXY)THIOOXO]METHYL]AMINO]-BENZOATE"/>
</dbReference>
<dbReference type="DrugBank" id="DB02189">
    <property type="generic name" value="2',3'-Dideoxyadenosine triphosphate"/>
</dbReference>
<dbReference type="DrugBank" id="DB04190">
    <property type="generic name" value="2,5-dibenzyloxy-3-hydroxy-hexanedioic acid bis-[(2-hydroxy-indan-1-yl)-amide]"/>
</dbReference>
<dbReference type="DrugBank" id="DB04042">
    <property type="generic name" value="2-[4-(Hydroxy-Methoxy-Methyl)-Benzyl]-7-(4-Hydroxymethyl-Benzyl)-1,1-Dioxo-3,6-Bis-Phenoxymethyl-1lambda6-[1,2,7]Thiadiazepane-4,5-Diol"/>
</dbReference>
<dbReference type="DrugBank" id="DB08428">
    <property type="generic name" value="3(S)-AMINO-4-PHENYL-BUTAN-2(S)-OL"/>
</dbReference>
<dbReference type="DrugBank" id="DB03076">
    <property type="generic name" value="3-[[(3R,4S,5S,6R)-7-Benzyl-4,5-dihydroxy-1,1-dioxo-3,6-bis(phenoxymethyl)-1,2,7-thiadiazepan-2-yl]methyl]-N-methylbenzamide"/>
</dbReference>
<dbReference type="DrugBank" id="DB03141">
    <property type="generic name" value="3-{[(5R,6R)-5-Benzyl-6-hydroxy-2,4-bis(4-hydroxybenzyl)-3-oxo-1,2,4-triazepan-1-yl]sulfonyl}benzonitril"/>
</dbReference>
<dbReference type="DrugBank" id="DB08457">
    <property type="generic name" value="4-(3,5-DIMETHYLPHENOXY)-5-(FURAN-2-YLMETHYLSULFANYLMETHYL)-3-IODO-6-METHYLPYRIDIN-2(1H)-ONE"/>
</dbReference>
<dbReference type="DrugBank" id="DB07343">
    <property type="generic name" value="4-[4-AMINO-6-(2,6-DICHLORO-PHENOXY)-[1,3,5]TRIAZIN-2-YLAMINO]-BENZONITRILE"/>
</dbReference>
<dbReference type="DrugBank" id="DB07337">
    <property type="generic name" value="4-[4-AMINO-6-(5-CHLORO-1H-INDOL-4-YLMETHYL)-[1,3,5]TRIAZIN-2-YLAMINO]-BENZONITRILE"/>
</dbReference>
<dbReference type="DrugBank" id="DB07018">
    <property type="generic name" value="5-ETHYL-3-[(2-METHOXYETHYL)METHYLAMINO]-6-METHYL-4-(3-METHYLBENZYL)PYRIDIN-2(1H)-ONE"/>
</dbReference>
<dbReference type="DrugBank" id="DB08634">
    <property type="generic name" value="6-BENZYL-1-BENZYLOXYMETHYL-5-ISOPROPYL URACIL"/>
</dbReference>
<dbReference type="DrugBank" id="DB01048">
    <property type="generic name" value="Abacavir"/>
</dbReference>
<dbReference type="DrugBank" id="DB13373">
    <property type="generic name" value="Acriflavine"/>
</dbReference>
<dbReference type="DrugBank" id="DB06198">
    <property type="generic name" value="Alovudine"/>
</dbReference>
<dbReference type="DrugBank" id="DB07332">
    <property type="generic name" value="ALPHA-(2,6-DICHLOROPHENYL)-ALPHA-(2-ACETYL-5-METHYLANILINO)ACETAMIDE"/>
</dbReference>
<dbReference type="DrugBank" id="DB06619">
    <property type="generic name" value="Amdoxovir"/>
</dbReference>
<dbReference type="DrugBank" id="DB00701">
    <property type="generic name" value="Amprenavir"/>
</dbReference>
<dbReference type="DrugBank" id="DB12855">
    <property type="generic name" value="Apricitabine"/>
</dbReference>
<dbReference type="DrugBank" id="DB11586">
    <property type="generic name" value="Asunaprevir"/>
</dbReference>
<dbReference type="DrugBank" id="DB01072">
    <property type="generic name" value="Atazanavir"/>
</dbReference>
<dbReference type="DrugBank" id="DB12264">
    <property type="generic name" value="Atevirdine"/>
</dbReference>
<dbReference type="DrugBank" id="DB04887">
    <property type="generic name" value="Brecanavir"/>
</dbReference>
<dbReference type="DrugBank" id="DB05398">
    <property type="generic name" value="C31G"/>
</dbReference>
<dbReference type="DrugBank" id="DB11751">
    <property type="generic name" value="Cabotegravir"/>
</dbReference>
<dbReference type="DrugBank" id="DB04886">
    <property type="generic name" value="Calanolide A"/>
</dbReference>
<dbReference type="DrugBank" id="DB08502">
    <property type="generic name" value="Capravirine"/>
</dbReference>
<dbReference type="DrugBank" id="DB12074">
    <property type="generic name" value="Censavudine"/>
</dbReference>
<dbReference type="DrugBank" id="DB07578">
    <property type="generic name" value="CP-94707"/>
</dbReference>
<dbReference type="DrugBank" id="DB11779">
    <property type="generic name" value="Danoprevir"/>
</dbReference>
<dbReference type="DrugBank" id="DB08639">
    <property type="generic name" value="Dapivirine"/>
</dbReference>
<dbReference type="DrugBank" id="DB01264">
    <property type="generic name" value="Darunavir"/>
</dbReference>
<dbReference type="DrugBank" id="DB00705">
    <property type="generic name" value="Delavirdine"/>
</dbReference>
<dbReference type="DrugBank" id="DB00900">
    <property type="generic name" value="Didanosine"/>
</dbReference>
<dbReference type="DrugBank" id="DB08930">
    <property type="generic name" value="Dolutegravir"/>
</dbReference>
<dbReference type="DrugBank" id="DB12301">
    <property type="generic name" value="Doravirine"/>
</dbReference>
<dbReference type="DrugBank" id="DB00625">
    <property type="generic name" value="Efavirenz"/>
</dbReference>
<dbReference type="DrugBank" id="DB09101">
    <property type="generic name" value="Elvitegravir"/>
</dbReference>
<dbReference type="DrugBank" id="DB06236">
    <property type="generic name" value="Elvucitabine"/>
</dbReference>
<dbReference type="DrugBank" id="DB08188">
    <property type="generic name" value="Emivirine"/>
</dbReference>
<dbReference type="DrugBank" id="DB00879">
    <property type="generic name" value="Emtricitabine"/>
</dbReference>
<dbReference type="DrugBank" id="DB12116">
    <property type="generic name" value="Epigallocatechin gallate"/>
</dbReference>
<dbReference type="DrugBank" id="DB06414">
    <property type="generic name" value="Etravirine"/>
</dbReference>
<dbReference type="DrugBank" id="DB11808">
    <property type="generic name" value="Faldaprevir"/>
</dbReference>
<dbReference type="DrugBank" id="DB01319">
    <property type="generic name" value="Fosamprenavir"/>
</dbReference>
<dbReference type="DrugBank" id="DB12423">
    <property type="generic name" value="Fozivudine Tidoxil"/>
</dbReference>
<dbReference type="DrugBank" id="DB12876">
    <property type="generic name" value="GS-9256"/>
</dbReference>
<dbReference type="DrugBank" id="DB16032">
    <property type="generic name" value="GW810781"/>
</dbReference>
<dbReference type="DrugBank" id="DB00224">
    <property type="generic name" value="Indinavir"/>
</dbReference>
<dbReference type="DrugBank" id="DB04255">
    <property type="generic name" value="Inhibitor BEA388"/>
</dbReference>
<dbReference type="DrugBank" id="DB04547">
    <property type="generic name" value="Inhibitor BEA409"/>
</dbReference>
<dbReference type="DrugBank" id="DB02683">
    <property type="generic name" value="Inhibitor Bea428"/>
</dbReference>
<dbReference type="DrugBank" id="DB02668">
    <property type="generic name" value="JE-2147"/>
</dbReference>
<dbReference type="DrugBank" id="DB02009">
    <property type="generic name" value="L-756423"/>
</dbReference>
<dbReference type="DrugBank" id="DB00709">
    <property type="generic name" value="Lamivudine"/>
</dbReference>
<dbReference type="DrugBank" id="DB11649">
    <property type="generic name" value="Lersivirine"/>
</dbReference>
<dbReference type="DrugBank" id="DB12531">
    <property type="generic name" value="Lobucavir"/>
</dbReference>
<dbReference type="DrugBank" id="DB12999">
    <property type="generic name" value="MK-6186"/>
</dbReference>
<dbReference type="DrugBank" id="DB02102">
    <property type="generic name" value="Mozenavir"/>
</dbReference>
<dbReference type="DrugBank" id="DB03908">
    <property type="generic name" value="N,N-[2,5-O-[Dibenzyl]-glucaryl]-DI-[isoleucyl-amido-methane]"/>
</dbReference>
<dbReference type="DrugBank" id="DB02629">
    <property type="generic name" value="N,N-[2,5-O-di-2-fluoro-benzyl-glucaryl]-di-[1-amino-indan-2-ol]"/>
</dbReference>
<dbReference type="DrugBank" id="DB01887">
    <property type="generic name" value="N,N-[2,5-O-Dibenzyl-glucaryl]-DI-[1-amino-indan-2-OL]"/>
</dbReference>
<dbReference type="DrugBank" id="DB03803">
    <property type="generic name" value="N,N-[2,5-O-dibenzyl-glucaryl]-DI-[valinyl-aminomethanyl-pyridine]"/>
</dbReference>
<dbReference type="DrugBank" id="DB02033">
    <property type="generic name" value="N-(3-Cyclopropyl(5,6,7,8,9,10-Hexahydro-2-Oxo-2h-Cycloocta[B]Pyran-3-Yl)Methyl)Phenylbenzensulfonamide"/>
</dbReference>
<dbReference type="DrugBank" id="DB17759">
    <property type="generic name" value="Navuridine"/>
</dbReference>
<dbReference type="DrugBank" id="DB00238">
    <property type="generic name" value="Nevirapine"/>
</dbReference>
<dbReference type="DrugBank" id="DB08281">
    <property type="generic name" value="O-[2-(1,3-dioxo-1,3-dihydro-2H-isoindol-2-yl)ethyl] (4-bromophenyl)thiocarbamate"/>
</dbReference>
<dbReference type="DrugBank" id="DB08282">
    <property type="generic name" value="O-[2-(1,3-dioxo-1,3-dihydro-2H-isoindol-2-yl)ethyl] (4-chlorophenyl)thiocarbamate"/>
</dbReference>
<dbReference type="DrugBank" id="DB08284">
    <property type="generic name" value="O-[2-(1,3-dioxo-1,3-dihydro-2H-isoindol-2-yl)ethyl] (4-iodophenyl)thiocarbamate"/>
</dbReference>
<dbReference type="DrugBank" id="DB07884">
    <property type="generic name" value="Opaviraline"/>
</dbReference>
<dbReference type="DrugBank" id="DB09297">
    <property type="generic name" value="Paritaprevir"/>
</dbReference>
<dbReference type="DrugBank" id="DB08414">
    <property type="generic name" value="PNU-142721"/>
</dbReference>
<dbReference type="DrugBank" id="DB05961">
    <property type="generic name" value="PPL-100"/>
</dbReference>
<dbReference type="DrugBank" id="DB08598">
    <property type="generic name" value="R-82913"/>
</dbReference>
<dbReference type="DrugBank" id="DB07327">
    <property type="generic name" value="R-95845"/>
</dbReference>
<dbReference type="DrugBank" id="DB06817">
    <property type="generic name" value="Raltegravir"/>
</dbReference>
<dbReference type="DrugBank" id="DB12894">
    <property type="generic name" value="Raluridine"/>
</dbReference>
<dbReference type="DrugBank" id="DB08864">
    <property type="generic name" value="Rilpivirine"/>
</dbReference>
<dbReference type="DrugBank" id="DB00503">
    <property type="generic name" value="Ritonavir"/>
</dbReference>
<dbReference type="DrugBank" id="DB01232">
    <property type="generic name" value="Saquinavir"/>
</dbReference>
<dbReference type="DrugBank" id="DB11998">
    <property type="generic name" value="Sorivudine"/>
</dbReference>
<dbReference type="DrugBank" id="DB12069">
    <property type="generic name" value="Sovaprevir"/>
</dbReference>
<dbReference type="DrugBank" id="DB00649">
    <property type="generic name" value="Stavudine"/>
</dbReference>
<dbReference type="DrugBank" id="DB07885">
    <property type="generic name" value="Talviraline"/>
</dbReference>
<dbReference type="DrugBank" id="DB12178">
    <property type="generic name" value="Telinavir"/>
</dbReference>
<dbReference type="DrugBank" id="DB14126">
    <property type="generic name" value="Tenofovir"/>
</dbReference>
<dbReference type="DrugBank" id="DB09299">
    <property type="generic name" value="Tenofovir alafenamide"/>
</dbReference>
<dbReference type="DrugBank" id="DB00300">
    <property type="generic name" value="Tenofovir disoproxil"/>
</dbReference>
<dbReference type="DrugBank" id="DB14925">
    <property type="generic name" value="Tenofovir exalidex"/>
</dbReference>
<dbReference type="DrugBank" id="DB02768">
    <property type="generic name" value="Tert-Butyloxycarbonyl Group"/>
</dbReference>
<dbReference type="DrugBank" id="DB02452">
    <property type="generic name" value="Thymidine 5'-triphosphate"/>
</dbReference>
<dbReference type="DrugBank" id="DB00932">
    <property type="generic name" value="Tipranavir"/>
</dbReference>
<dbReference type="DrugBank" id="DB08600">
    <property type="generic name" value="Tivirapine"/>
</dbReference>
<dbReference type="DrugBank" id="DB01891">
    <property type="generic name" value="Tl-3-093"/>
</dbReference>
<dbReference type="DrugBank" id="DB15623">
    <property type="generic name" value="TMC-310911"/>
</dbReference>
<dbReference type="DrugBank" id="DB12405">
    <property type="generic name" value="Triciribine"/>
</dbReference>
<dbReference type="DrugBank" id="DB05871">
    <property type="generic name" value="UC-781"/>
</dbReference>
<dbReference type="DrugBank" id="DB11929">
    <property type="generic name" value="Vaniprevir"/>
</dbReference>
<dbReference type="DrugBank" id="DB00943">
    <property type="generic name" value="Zalcitabine"/>
</dbReference>
<dbReference type="DrugBank" id="DB00495">
    <property type="generic name" value="Zidovudine"/>
</dbReference>
<dbReference type="MEROPS" id="A02.001"/>
<dbReference type="iPTMnet" id="P03366"/>
<dbReference type="ABCD" id="P03366">
    <property type="antibodies" value="16 sequenced antibodies"/>
</dbReference>
<dbReference type="BRENDA" id="3.1.26.13">
    <property type="organism ID" value="16478"/>
</dbReference>
<dbReference type="SABIO-RK" id="P03366"/>
<dbReference type="EvolutionaryTrace" id="P03366"/>
<dbReference type="PRO" id="PR:P03366"/>
<dbReference type="Proteomes" id="UP000007690">
    <property type="component" value="Genome"/>
</dbReference>
<dbReference type="Proteomes" id="UP000107234">
    <property type="component" value="Genome"/>
</dbReference>
<dbReference type="Proteomes" id="UP000126245">
    <property type="component" value="Genome"/>
</dbReference>
<dbReference type="GO" id="GO:0043657">
    <property type="term" value="C:host cell"/>
    <property type="evidence" value="ECO:0007669"/>
    <property type="project" value="GOC"/>
</dbReference>
<dbReference type="GO" id="GO:0042025">
    <property type="term" value="C:host cell nucleus"/>
    <property type="evidence" value="ECO:0007669"/>
    <property type="project" value="UniProtKB-SubCell"/>
</dbReference>
<dbReference type="GO" id="GO:0020002">
    <property type="term" value="C:host cell plasma membrane"/>
    <property type="evidence" value="ECO:0007669"/>
    <property type="project" value="UniProtKB-SubCell"/>
</dbReference>
<dbReference type="GO" id="GO:0072494">
    <property type="term" value="C:host multivesicular body"/>
    <property type="evidence" value="ECO:0007669"/>
    <property type="project" value="UniProtKB-SubCell"/>
</dbReference>
<dbReference type="GO" id="GO:0016020">
    <property type="term" value="C:membrane"/>
    <property type="evidence" value="ECO:0007669"/>
    <property type="project" value="UniProtKB-KW"/>
</dbReference>
<dbReference type="GO" id="GO:0019013">
    <property type="term" value="C:viral nucleocapsid"/>
    <property type="evidence" value="ECO:0007669"/>
    <property type="project" value="UniProtKB-KW"/>
</dbReference>
<dbReference type="GO" id="GO:0055036">
    <property type="term" value="C:virion membrane"/>
    <property type="evidence" value="ECO:0007669"/>
    <property type="project" value="UniProtKB-SubCell"/>
</dbReference>
<dbReference type="GO" id="GO:0004190">
    <property type="term" value="F:aspartic-type endopeptidase activity"/>
    <property type="evidence" value="ECO:0007669"/>
    <property type="project" value="UniProtKB-KW"/>
</dbReference>
<dbReference type="GO" id="GO:0003677">
    <property type="term" value="F:DNA binding"/>
    <property type="evidence" value="ECO:0007669"/>
    <property type="project" value="UniProtKB-KW"/>
</dbReference>
<dbReference type="GO" id="GO:0003887">
    <property type="term" value="F:DNA-directed DNA polymerase activity"/>
    <property type="evidence" value="ECO:0007669"/>
    <property type="project" value="UniProtKB-KW"/>
</dbReference>
<dbReference type="GO" id="GO:0004533">
    <property type="term" value="F:exoribonuclease H activity"/>
    <property type="evidence" value="ECO:0007669"/>
    <property type="project" value="UniProtKB-EC"/>
</dbReference>
<dbReference type="GO" id="GO:0008289">
    <property type="term" value="F:lipid binding"/>
    <property type="evidence" value="ECO:0007669"/>
    <property type="project" value="UniProtKB-KW"/>
</dbReference>
<dbReference type="GO" id="GO:0035613">
    <property type="term" value="F:RNA stem-loop binding"/>
    <property type="evidence" value="ECO:0007669"/>
    <property type="project" value="TreeGrafter"/>
</dbReference>
<dbReference type="GO" id="GO:0003964">
    <property type="term" value="F:RNA-directed DNA polymerase activity"/>
    <property type="evidence" value="ECO:0000314"/>
    <property type="project" value="CACAO"/>
</dbReference>
<dbReference type="GO" id="GO:0004523">
    <property type="term" value="F:RNA-DNA hybrid ribonuclease activity"/>
    <property type="evidence" value="ECO:0007669"/>
    <property type="project" value="InterPro"/>
</dbReference>
<dbReference type="GO" id="GO:0005198">
    <property type="term" value="F:structural molecule activity"/>
    <property type="evidence" value="ECO:0007669"/>
    <property type="project" value="InterPro"/>
</dbReference>
<dbReference type="GO" id="GO:0008270">
    <property type="term" value="F:zinc ion binding"/>
    <property type="evidence" value="ECO:0007669"/>
    <property type="project" value="UniProtKB-KW"/>
</dbReference>
<dbReference type="GO" id="GO:0015074">
    <property type="term" value="P:DNA integration"/>
    <property type="evidence" value="ECO:0007669"/>
    <property type="project" value="UniProtKB-KW"/>
</dbReference>
<dbReference type="GO" id="GO:0006310">
    <property type="term" value="P:DNA recombination"/>
    <property type="evidence" value="ECO:0007669"/>
    <property type="project" value="UniProtKB-KW"/>
</dbReference>
<dbReference type="GO" id="GO:0075713">
    <property type="term" value="P:establishment of integrated proviral latency"/>
    <property type="evidence" value="ECO:0007669"/>
    <property type="project" value="UniProtKB-KW"/>
</dbReference>
<dbReference type="GO" id="GO:0006508">
    <property type="term" value="P:proteolysis"/>
    <property type="evidence" value="ECO:0007669"/>
    <property type="project" value="UniProtKB-KW"/>
</dbReference>
<dbReference type="GO" id="GO:0046718">
    <property type="term" value="P:symbiont entry into host cell"/>
    <property type="evidence" value="ECO:0007669"/>
    <property type="project" value="UniProtKB-KW"/>
</dbReference>
<dbReference type="GO" id="GO:0052151">
    <property type="term" value="P:symbiont-mediated activation of host apoptosis"/>
    <property type="evidence" value="ECO:0007669"/>
    <property type="project" value="UniProtKB-KW"/>
</dbReference>
<dbReference type="GO" id="GO:0039657">
    <property type="term" value="P:symbiont-mediated suppression of host gene expression"/>
    <property type="evidence" value="ECO:0007669"/>
    <property type="project" value="UniProtKB-KW"/>
</dbReference>
<dbReference type="GO" id="GO:0044826">
    <property type="term" value="P:viral genome integration into host DNA"/>
    <property type="evidence" value="ECO:0007669"/>
    <property type="project" value="UniProtKB-KW"/>
</dbReference>
<dbReference type="GO" id="GO:0075732">
    <property type="term" value="P:viral penetration into host nucleus"/>
    <property type="evidence" value="ECO:0007669"/>
    <property type="project" value="UniProtKB-KW"/>
</dbReference>
<dbReference type="GO" id="GO:0075523">
    <property type="term" value="P:viral translational frameshifting"/>
    <property type="evidence" value="ECO:0007669"/>
    <property type="project" value="UniProtKB-KW"/>
</dbReference>
<dbReference type="CDD" id="cd05482">
    <property type="entry name" value="HIV_retropepsin_like"/>
    <property type="match status" value="1"/>
</dbReference>
<dbReference type="CDD" id="cd01645">
    <property type="entry name" value="RT_Rtv"/>
    <property type="match status" value="1"/>
</dbReference>
<dbReference type="FunFam" id="1.10.1200.30:FF:000001">
    <property type="entry name" value="Gag polyprotein"/>
    <property type="match status" value="1"/>
</dbReference>
<dbReference type="FunFam" id="1.10.150.90:FF:000001">
    <property type="entry name" value="Gag polyprotein"/>
    <property type="match status" value="1"/>
</dbReference>
<dbReference type="FunFam" id="1.10.375.10:FF:000001">
    <property type="entry name" value="Gag polyprotein"/>
    <property type="match status" value="1"/>
</dbReference>
<dbReference type="FunFam" id="4.10.60.10:FF:000001">
    <property type="entry name" value="Gag polyprotein"/>
    <property type="match status" value="1"/>
</dbReference>
<dbReference type="FunFam" id="2.40.70.10:FF:000001">
    <property type="entry name" value="Gag-Pol polyprotein"/>
    <property type="match status" value="1"/>
</dbReference>
<dbReference type="FunFam" id="3.30.420.10:FF:000025">
    <property type="entry name" value="Gag-Pol polyprotein"/>
    <property type="match status" value="1"/>
</dbReference>
<dbReference type="FunFam" id="2.30.30.10:FF:000001">
    <property type="entry name" value="POL polyprotein"/>
    <property type="match status" value="1"/>
</dbReference>
<dbReference type="FunFam" id="3.30.420.10:FF:000017">
    <property type="entry name" value="POL polyprotein"/>
    <property type="match status" value="1"/>
</dbReference>
<dbReference type="FunFam" id="3.30.70.270:FF:000016">
    <property type="entry name" value="POL polyprotein"/>
    <property type="match status" value="1"/>
</dbReference>
<dbReference type="Gene3D" id="1.10.10.200">
    <property type="match status" value="1"/>
</dbReference>
<dbReference type="Gene3D" id="1.10.1200.30">
    <property type="match status" value="1"/>
</dbReference>
<dbReference type="Gene3D" id="3.30.70.270">
    <property type="match status" value="3"/>
</dbReference>
<dbReference type="Gene3D" id="2.40.70.10">
    <property type="entry name" value="Acid Proteases"/>
    <property type="match status" value="1"/>
</dbReference>
<dbReference type="Gene3D" id="3.10.10.10">
    <property type="entry name" value="HIV Type 1 Reverse Transcriptase, subunit A, domain 1"/>
    <property type="match status" value="1"/>
</dbReference>
<dbReference type="Gene3D" id="1.10.375.10">
    <property type="entry name" value="Human Immunodeficiency Virus Type 1 Capsid Protein"/>
    <property type="match status" value="1"/>
</dbReference>
<dbReference type="Gene3D" id="1.10.150.90">
    <property type="entry name" value="Immunodeficiency lentiviruses, gag gene matrix protein p17"/>
    <property type="match status" value="1"/>
</dbReference>
<dbReference type="Gene3D" id="2.30.30.10">
    <property type="entry name" value="Integrase, C-terminal domain superfamily, retroviral"/>
    <property type="match status" value="1"/>
</dbReference>
<dbReference type="Gene3D" id="3.30.420.10">
    <property type="entry name" value="Ribonuclease H-like superfamily/Ribonuclease H"/>
    <property type="match status" value="2"/>
</dbReference>
<dbReference type="Gene3D" id="1.20.5.760">
    <property type="entry name" value="Single helix bin"/>
    <property type="match status" value="1"/>
</dbReference>
<dbReference type="Gene3D" id="4.10.60.10">
    <property type="entry name" value="Zinc finger, CCHC-type"/>
    <property type="match status" value="1"/>
</dbReference>
<dbReference type="InterPro" id="IPR001969">
    <property type="entry name" value="Aspartic_peptidase_AS"/>
</dbReference>
<dbReference type="InterPro" id="IPR043502">
    <property type="entry name" value="DNA/RNA_pol_sf"/>
</dbReference>
<dbReference type="InterPro" id="IPR045345">
    <property type="entry name" value="Gag_p24_C"/>
</dbReference>
<dbReference type="InterPro" id="IPR017856">
    <property type="entry name" value="Integrase-like_N"/>
</dbReference>
<dbReference type="InterPro" id="IPR036862">
    <property type="entry name" value="Integrase_C_dom_sf_retrovir"/>
</dbReference>
<dbReference type="InterPro" id="IPR001037">
    <property type="entry name" value="Integrase_C_retrovir"/>
</dbReference>
<dbReference type="InterPro" id="IPR001584">
    <property type="entry name" value="Integrase_cat-core"/>
</dbReference>
<dbReference type="InterPro" id="IPR003308">
    <property type="entry name" value="Integrase_Zn-bd_dom_N"/>
</dbReference>
<dbReference type="InterPro" id="IPR000071">
    <property type="entry name" value="Lentvrl_matrix_N"/>
</dbReference>
<dbReference type="InterPro" id="IPR012344">
    <property type="entry name" value="Matrix_HIV/RSV_N"/>
</dbReference>
<dbReference type="InterPro" id="IPR001995">
    <property type="entry name" value="Peptidase_A2_cat"/>
</dbReference>
<dbReference type="InterPro" id="IPR021109">
    <property type="entry name" value="Peptidase_aspartic_dom_sf"/>
</dbReference>
<dbReference type="InterPro" id="IPR034170">
    <property type="entry name" value="Retropepsin-like_cat_dom"/>
</dbReference>
<dbReference type="InterPro" id="IPR018061">
    <property type="entry name" value="Retropepsins"/>
</dbReference>
<dbReference type="InterPro" id="IPR008916">
    <property type="entry name" value="Retrov_capsid_C"/>
</dbReference>
<dbReference type="InterPro" id="IPR008919">
    <property type="entry name" value="Retrov_capsid_N"/>
</dbReference>
<dbReference type="InterPro" id="IPR010999">
    <property type="entry name" value="Retrovr_matrix"/>
</dbReference>
<dbReference type="InterPro" id="IPR043128">
    <property type="entry name" value="Rev_trsase/Diguanyl_cyclase"/>
</dbReference>
<dbReference type="InterPro" id="IPR012337">
    <property type="entry name" value="RNaseH-like_sf"/>
</dbReference>
<dbReference type="InterPro" id="IPR002156">
    <property type="entry name" value="RNaseH_domain"/>
</dbReference>
<dbReference type="InterPro" id="IPR036397">
    <property type="entry name" value="RNaseH_sf"/>
</dbReference>
<dbReference type="InterPro" id="IPR000477">
    <property type="entry name" value="RT_dom"/>
</dbReference>
<dbReference type="InterPro" id="IPR010659">
    <property type="entry name" value="RVT_connect"/>
</dbReference>
<dbReference type="InterPro" id="IPR010661">
    <property type="entry name" value="RVT_thumb"/>
</dbReference>
<dbReference type="InterPro" id="IPR001878">
    <property type="entry name" value="Znf_CCHC"/>
</dbReference>
<dbReference type="InterPro" id="IPR036875">
    <property type="entry name" value="Znf_CCHC_sf"/>
</dbReference>
<dbReference type="PANTHER" id="PTHR41694">
    <property type="entry name" value="ENDOGENOUS RETROVIRUS GROUP K MEMBER POL PROTEIN"/>
    <property type="match status" value="1"/>
</dbReference>
<dbReference type="PANTHER" id="PTHR41694:SF3">
    <property type="entry name" value="RNA-DIRECTED DNA POLYMERASE-RELATED"/>
    <property type="match status" value="1"/>
</dbReference>
<dbReference type="Pfam" id="PF00540">
    <property type="entry name" value="Gag_p17"/>
    <property type="match status" value="1"/>
</dbReference>
<dbReference type="Pfam" id="PF19317">
    <property type="entry name" value="Gag_p24_C"/>
    <property type="match status" value="1"/>
</dbReference>
<dbReference type="Pfam" id="PF00552">
    <property type="entry name" value="IN_DBD_C"/>
    <property type="match status" value="1"/>
</dbReference>
<dbReference type="Pfam" id="PF02022">
    <property type="entry name" value="Integrase_Zn"/>
    <property type="match status" value="1"/>
</dbReference>
<dbReference type="Pfam" id="PF00075">
    <property type="entry name" value="RNase_H"/>
    <property type="match status" value="1"/>
</dbReference>
<dbReference type="Pfam" id="PF00665">
    <property type="entry name" value="rve"/>
    <property type="match status" value="1"/>
</dbReference>
<dbReference type="Pfam" id="PF00077">
    <property type="entry name" value="RVP"/>
    <property type="match status" value="1"/>
</dbReference>
<dbReference type="Pfam" id="PF00078">
    <property type="entry name" value="RVT_1"/>
    <property type="match status" value="1"/>
</dbReference>
<dbReference type="Pfam" id="PF06815">
    <property type="entry name" value="RVT_connect"/>
    <property type="match status" value="1"/>
</dbReference>
<dbReference type="Pfam" id="PF06817">
    <property type="entry name" value="RVT_thumb"/>
    <property type="match status" value="1"/>
</dbReference>
<dbReference type="Pfam" id="PF00098">
    <property type="entry name" value="zf-CCHC"/>
    <property type="match status" value="2"/>
</dbReference>
<dbReference type="PRINTS" id="PR00234">
    <property type="entry name" value="HIV1MATRIX"/>
</dbReference>
<dbReference type="SMART" id="SM00343">
    <property type="entry name" value="ZnF_C2HC"/>
    <property type="match status" value="2"/>
</dbReference>
<dbReference type="SUPFAM" id="SSF50630">
    <property type="entry name" value="Acid proteases"/>
    <property type="match status" value="1"/>
</dbReference>
<dbReference type="SUPFAM" id="SSF50122">
    <property type="entry name" value="DNA-binding domain of retroviral integrase"/>
    <property type="match status" value="1"/>
</dbReference>
<dbReference type="SUPFAM" id="SSF56672">
    <property type="entry name" value="DNA/RNA polymerases"/>
    <property type="match status" value="1"/>
</dbReference>
<dbReference type="SUPFAM" id="SSF46919">
    <property type="entry name" value="N-terminal Zn binding domain of HIV integrase"/>
    <property type="match status" value="1"/>
</dbReference>
<dbReference type="SUPFAM" id="SSF47836">
    <property type="entry name" value="Retroviral matrix proteins"/>
    <property type="match status" value="1"/>
</dbReference>
<dbReference type="SUPFAM" id="SSF47353">
    <property type="entry name" value="Retrovirus capsid dimerization domain-like"/>
    <property type="match status" value="1"/>
</dbReference>
<dbReference type="SUPFAM" id="SSF47943">
    <property type="entry name" value="Retrovirus capsid protein, N-terminal core domain"/>
    <property type="match status" value="1"/>
</dbReference>
<dbReference type="SUPFAM" id="SSF57756">
    <property type="entry name" value="Retrovirus zinc finger-like domains"/>
    <property type="match status" value="1"/>
</dbReference>
<dbReference type="SUPFAM" id="SSF53098">
    <property type="entry name" value="Ribonuclease H-like"/>
    <property type="match status" value="2"/>
</dbReference>
<dbReference type="PROSITE" id="PS50175">
    <property type="entry name" value="ASP_PROT_RETROV"/>
    <property type="match status" value="1"/>
</dbReference>
<dbReference type="PROSITE" id="PS00141">
    <property type="entry name" value="ASP_PROTEASE"/>
    <property type="match status" value="1"/>
</dbReference>
<dbReference type="PROSITE" id="PS50994">
    <property type="entry name" value="INTEGRASE"/>
    <property type="match status" value="1"/>
</dbReference>
<dbReference type="PROSITE" id="PS51027">
    <property type="entry name" value="INTEGRASE_DBD"/>
    <property type="match status" value="1"/>
</dbReference>
<dbReference type="PROSITE" id="PS50879">
    <property type="entry name" value="RNASE_H_1"/>
    <property type="match status" value="1"/>
</dbReference>
<dbReference type="PROSITE" id="PS50878">
    <property type="entry name" value="RT_POL"/>
    <property type="match status" value="1"/>
</dbReference>
<dbReference type="PROSITE" id="PS50158">
    <property type="entry name" value="ZF_CCHC"/>
    <property type="match status" value="2"/>
</dbReference>
<dbReference type="PROSITE" id="PS50876">
    <property type="entry name" value="ZF_INTEGRASE"/>
    <property type="match status" value="1"/>
</dbReference>
<proteinExistence type="evidence at protein level"/>
<evidence type="ECO:0000250" key="1"/>
<evidence type="ECO:0000250" key="2">
    <source>
        <dbReference type="UniProtKB" id="P03367"/>
    </source>
</evidence>
<evidence type="ECO:0000250" key="3">
    <source>
        <dbReference type="UniProtKB" id="P04585"/>
    </source>
</evidence>
<evidence type="ECO:0000250" key="4">
    <source>
        <dbReference type="UniProtKB" id="P12497"/>
    </source>
</evidence>
<evidence type="ECO:0000255" key="5"/>
<evidence type="ECO:0000255" key="6">
    <source>
        <dbReference type="PROSITE-ProRule" id="PRU00047"/>
    </source>
</evidence>
<evidence type="ECO:0000255" key="7">
    <source>
        <dbReference type="PROSITE-ProRule" id="PRU00275"/>
    </source>
</evidence>
<evidence type="ECO:0000255" key="8">
    <source>
        <dbReference type="PROSITE-ProRule" id="PRU00405"/>
    </source>
</evidence>
<evidence type="ECO:0000255" key="9">
    <source>
        <dbReference type="PROSITE-ProRule" id="PRU00408"/>
    </source>
</evidence>
<evidence type="ECO:0000255" key="10">
    <source>
        <dbReference type="PROSITE-ProRule" id="PRU00450"/>
    </source>
</evidence>
<evidence type="ECO:0000255" key="11">
    <source>
        <dbReference type="PROSITE-ProRule" id="PRU00457"/>
    </source>
</evidence>
<evidence type="ECO:0000255" key="12">
    <source>
        <dbReference type="PROSITE-ProRule" id="PRU00506"/>
    </source>
</evidence>
<evidence type="ECO:0000255" key="13">
    <source>
        <dbReference type="PROSITE-ProRule" id="PRU10094"/>
    </source>
</evidence>
<evidence type="ECO:0000256" key="14">
    <source>
        <dbReference type="SAM" id="MobiDB-lite"/>
    </source>
</evidence>
<evidence type="ECO:0000269" key="15">
    <source>
    </source>
</evidence>
<evidence type="ECO:0000269" key="16">
    <source>
    </source>
</evidence>
<evidence type="ECO:0000269" key="17">
    <source>
    </source>
</evidence>
<evidence type="ECO:0000269" key="18">
    <source>
    </source>
</evidence>
<evidence type="ECO:0000269" key="19">
    <source>
    </source>
</evidence>
<evidence type="ECO:0000269" key="20">
    <source>
    </source>
</evidence>
<evidence type="ECO:0000269" key="21">
    <source>
    </source>
</evidence>
<evidence type="ECO:0000269" key="22">
    <source>
    </source>
</evidence>
<evidence type="ECO:0000269" key="23">
    <source>
    </source>
</evidence>
<evidence type="ECO:0000269" key="24">
    <source>
    </source>
</evidence>
<evidence type="ECO:0000269" key="25">
    <source>
    </source>
</evidence>
<evidence type="ECO:0000269" key="26">
    <source>
    </source>
</evidence>
<evidence type="ECO:0000269" key="27">
    <source>
    </source>
</evidence>
<evidence type="ECO:0000269" key="28">
    <source>
    </source>
</evidence>
<evidence type="ECO:0000269" key="29">
    <source>
    </source>
</evidence>
<evidence type="ECO:0000269" key="30">
    <source>
    </source>
</evidence>
<evidence type="ECO:0000269" key="31">
    <source>
    </source>
</evidence>
<evidence type="ECO:0000269" key="32">
    <source>
    </source>
</evidence>
<evidence type="ECO:0000305" key="33"/>
<evidence type="ECO:0007829" key="34">
    <source>
        <dbReference type="PDB" id="1HQU"/>
    </source>
</evidence>
<evidence type="ECO:0007829" key="35">
    <source>
        <dbReference type="PDB" id="1MER"/>
    </source>
</evidence>
<evidence type="ECO:0007829" key="36">
    <source>
        <dbReference type="PDB" id="1QMC"/>
    </source>
</evidence>
<evidence type="ECO:0007829" key="37">
    <source>
        <dbReference type="PDB" id="1R0A"/>
    </source>
</evidence>
<evidence type="ECO:0007829" key="38">
    <source>
        <dbReference type="PDB" id="1S9E"/>
    </source>
</evidence>
<evidence type="ECO:0007829" key="39">
    <source>
        <dbReference type="PDB" id="1S9G"/>
    </source>
</evidence>
<evidence type="ECO:0007829" key="40">
    <source>
        <dbReference type="PDB" id="1SUQ"/>
    </source>
</evidence>
<evidence type="ECO:0007829" key="41">
    <source>
        <dbReference type="PDB" id="2EXF"/>
    </source>
</evidence>
<evidence type="ECO:0007829" key="42">
    <source>
        <dbReference type="PDB" id="2IAJ"/>
    </source>
</evidence>
<evidence type="ECO:0007829" key="43">
    <source>
        <dbReference type="PDB" id="2L4L"/>
    </source>
</evidence>
<evidence type="ECO:0007829" key="44">
    <source>
        <dbReference type="PDB" id="2ZD1"/>
    </source>
</evidence>
<evidence type="ECO:0007829" key="45">
    <source>
        <dbReference type="PDB" id="3AVI"/>
    </source>
</evidence>
<evidence type="ECO:0007829" key="46">
    <source>
        <dbReference type="PDB" id="3HVT"/>
    </source>
</evidence>
<evidence type="ECO:0007829" key="47">
    <source>
        <dbReference type="PDB" id="3IG1"/>
    </source>
</evidence>
<evidence type="ECO:0007829" key="48">
    <source>
        <dbReference type="PDB" id="3ITH"/>
    </source>
</evidence>
<evidence type="ECO:0007829" key="49">
    <source>
        <dbReference type="PDB" id="3NU3"/>
    </source>
</evidence>
<evidence type="ECO:0007829" key="50">
    <source>
        <dbReference type="PDB" id="4G1Q"/>
    </source>
</evidence>
<evidence type="ECO:0007829" key="51">
    <source>
        <dbReference type="PDB" id="4ICL"/>
    </source>
</evidence>
<evidence type="ECO:0007829" key="52">
    <source>
        <dbReference type="PDB" id="4O4G"/>
    </source>
</evidence>
<evidence type="ECO:0007829" key="53">
    <source>
        <dbReference type="PDB" id="4QAG"/>
    </source>
</evidence>
<evidence type="ECO:0007829" key="54">
    <source>
        <dbReference type="PDB" id="5JG1"/>
    </source>
</evidence>
<evidence type="ECO:0007829" key="55">
    <source>
        <dbReference type="PDB" id="5TXL"/>
    </source>
</evidence>
<evidence type="ECO:0007829" key="56">
    <source>
        <dbReference type="PDB" id="5VQV"/>
    </source>
</evidence>
<evidence type="ECO:0007829" key="57">
    <source>
        <dbReference type="PDB" id="6AOC"/>
    </source>
</evidence>
<evidence type="ECO:0007829" key="58">
    <source>
        <dbReference type="PDB" id="6DUH"/>
    </source>
</evidence>
<evidence type="ECO:0007829" key="59">
    <source>
        <dbReference type="PDB" id="7KRF"/>
    </source>
</evidence>
<evidence type="ECO:0007829" key="60">
    <source>
        <dbReference type="PDB" id="7SNL"/>
    </source>
</evidence>
<evidence type="ECO:0007829" key="61">
    <source>
        <dbReference type="PDB" id="7SNN"/>
    </source>
</evidence>
<evidence type="ECO:0007829" key="62">
    <source>
        <dbReference type="PDB" id="8VBE"/>
    </source>
</evidence>
<evidence type="ECO:0007829" key="63">
    <source>
        <dbReference type="PDB" id="8VBH"/>
    </source>
</evidence>
<gene>
    <name type="primary">gag-pol</name>
</gene>
<keyword id="KW-0002">3D-structure</keyword>
<keyword id="KW-1073">Activation of host caspases by virus</keyword>
<keyword id="KW-0014">AIDS</keyword>
<keyword id="KW-0064">Aspartyl protease</keyword>
<keyword id="KW-0167">Capsid protein</keyword>
<keyword id="KW-0903">Direct protein sequencing</keyword>
<keyword id="KW-0229">DNA integration</keyword>
<keyword id="KW-0233">DNA recombination</keyword>
<keyword id="KW-0238">DNA-binding</keyword>
<keyword id="KW-0239">DNA-directed DNA polymerase</keyword>
<keyword id="KW-0255">Endonuclease</keyword>
<keyword id="KW-1262">Eukaryotic host gene expression shutoff by virus</keyword>
<keyword id="KW-1193">Eukaryotic host translation shutoff by virus</keyword>
<keyword id="KW-1032">Host cell membrane</keyword>
<keyword id="KW-1035">Host cytoplasm</keyword>
<keyword id="KW-1039">Host endosome</keyword>
<keyword id="KW-1190">Host gene expression shutoff by virus</keyword>
<keyword id="KW-1043">Host membrane</keyword>
<keyword id="KW-1048">Host nucleus</keyword>
<keyword id="KW-0945">Host-virus interaction</keyword>
<keyword id="KW-0378">Hydrolase</keyword>
<keyword id="KW-0446">Lipid-binding</keyword>
<keyword id="KW-0449">Lipoprotein</keyword>
<keyword id="KW-0460">Magnesium</keyword>
<keyword id="KW-0472">Membrane</keyword>
<keyword id="KW-0479">Metal-binding</keyword>
<keyword id="KW-0488">Methylation</keyword>
<keyword id="KW-1119">Modulation of host cell apoptosis by virus</keyword>
<keyword id="KW-0511">Multifunctional enzyme</keyword>
<keyword id="KW-0519">Myristate</keyword>
<keyword id="KW-0540">Nuclease</keyword>
<keyword id="KW-0548">Nucleotidyltransferase</keyword>
<keyword id="KW-0597">Phosphoprotein</keyword>
<keyword id="KW-0645">Protease</keyword>
<keyword id="KW-0677">Repeat</keyword>
<keyword id="KW-0688">Ribosomal frameshifting</keyword>
<keyword id="KW-0694">RNA-binding</keyword>
<keyword id="KW-0695">RNA-directed DNA polymerase</keyword>
<keyword id="KW-0808">Transferase</keyword>
<keyword id="KW-1179">Viral genome integration</keyword>
<keyword id="KW-0543">Viral nucleoprotein</keyword>
<keyword id="KW-1163">Viral penetration into host nucleus</keyword>
<keyword id="KW-1188">Viral release from host cell</keyword>
<keyword id="KW-0946">Virion</keyword>
<keyword id="KW-0917">Virion maturation</keyword>
<keyword id="KW-1160">Virus entry into host cell</keyword>
<keyword id="KW-0862">Zinc</keyword>
<keyword id="KW-0863">Zinc-finger</keyword>
<feature type="initiator methionine" description="Removed; by host" evidence="1">
    <location>
        <position position="1"/>
    </location>
</feature>
<feature type="chain" id="PRO_0000261261" description="Gag-Pol polyprotein">
    <location>
        <begin position="2"/>
        <end position="1447"/>
    </location>
</feature>
<feature type="chain" id="PRO_0000042285" description="Matrix protein p17" evidence="1">
    <location>
        <begin position="2"/>
        <end position="132"/>
    </location>
</feature>
<feature type="chain" id="PRO_0000042286" description="Capsid protein p24" evidence="1">
    <location>
        <begin position="133"/>
        <end position="363"/>
    </location>
</feature>
<feature type="peptide" id="PRO_0000042287" description="Spacer peptide 1" evidence="1">
    <location>
        <begin position="364"/>
        <end position="377"/>
    </location>
</feature>
<feature type="chain" id="PRO_0000042288" description="Nucleocapsid protein p7" evidence="1">
    <location>
        <begin position="378"/>
        <end position="432"/>
    </location>
</feature>
<feature type="peptide" id="PRO_0000246710" description="Transframe peptide" evidence="5">
    <location>
        <begin position="433"/>
        <end position="440"/>
    </location>
</feature>
<feature type="chain" id="PRO_0000042289" description="p6-pol" evidence="5">
    <location>
        <begin position="441"/>
        <end position="500"/>
    </location>
</feature>
<feature type="chain" id="PRO_0000038647" description="Protease" evidence="1">
    <location>
        <begin position="501"/>
        <end position="599"/>
    </location>
</feature>
<feature type="chain" id="PRO_0000042290" description="Reverse transcriptase/ribonuclease H" evidence="1">
    <location>
        <begin position="600"/>
        <end position="1159"/>
    </location>
</feature>
<feature type="chain" id="PRO_0000042291" description="p51 RT" evidence="1">
    <location>
        <begin position="600"/>
        <end position="1039"/>
    </location>
</feature>
<feature type="chain" id="PRO_0000042292" description="p15">
    <location>
        <begin position="1040"/>
        <end position="1159"/>
    </location>
</feature>
<feature type="chain" id="PRO_0000042293" description="Integrase" evidence="1">
    <location>
        <begin position="1160"/>
        <end position="1447"/>
    </location>
</feature>
<feature type="domain" description="Peptidase A2" evidence="7">
    <location>
        <begin position="520"/>
        <end position="589"/>
    </location>
</feature>
<feature type="domain" description="Reverse transcriptase" evidence="8">
    <location>
        <begin position="643"/>
        <end position="833"/>
    </location>
</feature>
<feature type="domain" description="RNase H type-1" evidence="9">
    <location>
        <begin position="1033"/>
        <end position="1156"/>
    </location>
</feature>
<feature type="domain" description="Integrase catalytic" evidence="11">
    <location>
        <begin position="1213"/>
        <end position="1363"/>
    </location>
</feature>
<feature type="zinc finger region" description="CCHC-type 1" evidence="6">
    <location>
        <begin position="390"/>
        <end position="407"/>
    </location>
</feature>
<feature type="zinc finger region" description="CCHC-type 2" evidence="6">
    <location>
        <begin position="411"/>
        <end position="428"/>
    </location>
</feature>
<feature type="zinc finger region" description="Integrase-type" evidence="10">
    <location>
        <begin position="1162"/>
        <end position="1203"/>
    </location>
</feature>
<feature type="DNA-binding region" description="Integrase-type" evidence="12">
    <location>
        <begin position="1382"/>
        <end position="1429"/>
    </location>
</feature>
<feature type="region of interest" description="Interaction with Gp41" evidence="4">
    <location>
        <begin position="7"/>
        <end position="31"/>
    </location>
</feature>
<feature type="region of interest" description="Interaction with host CALM1" evidence="3">
    <location>
        <begin position="8"/>
        <end position="43"/>
    </location>
</feature>
<feature type="region of interest" description="Interaction with host AP3D1" evidence="4">
    <location>
        <begin position="12"/>
        <end position="19"/>
    </location>
</feature>
<feature type="region of interest" description="Interaction with membrane phosphatidylinositol 4,5-bisphosphate and RNA" evidence="4">
    <location>
        <begin position="14"/>
        <end position="33"/>
    </location>
</feature>
<feature type="region of interest" description="Interaction with membrane phosphatidylinositol 4,5-bisphosphate" evidence="4">
    <location>
        <begin position="73"/>
        <end position="77"/>
    </location>
</feature>
<feature type="region of interest" description="Disordered" evidence="14">
    <location>
        <begin position="106"/>
        <end position="128"/>
    </location>
</feature>
<feature type="region of interest" description="Interaction with human PPIA/CYPA and NUP153" evidence="4">
    <location>
        <begin position="189"/>
        <end position="227"/>
    </location>
</feature>
<feature type="region of interest" description="Dimerization/Multimerization of capsid protein p24" evidence="3">
    <location>
        <begin position="277"/>
        <end position="363"/>
    </location>
</feature>
<feature type="region of interest" description="Disordered" evidence="14">
    <location>
        <begin position="446"/>
        <end position="493"/>
    </location>
</feature>
<feature type="region of interest" description="Dimerization of protease" evidence="3">
    <location>
        <begin position="501"/>
        <end position="505"/>
    </location>
</feature>
<feature type="region of interest" description="Dimerization of protease" evidence="3">
    <location>
        <begin position="549"/>
        <end position="555"/>
    </location>
</feature>
<feature type="region of interest" description="Dimerization of protease" evidence="3">
    <location>
        <begin position="588"/>
        <end position="600"/>
    </location>
</feature>
<feature type="region of interest" description="RT 'primer grip'">
    <location>
        <begin position="826"/>
        <end position="834"/>
    </location>
</feature>
<feature type="short sequence motif" description="Nuclear export signal" evidence="1">
    <location>
        <begin position="16"/>
        <end position="22"/>
    </location>
</feature>
<feature type="short sequence motif" description="Nuclear localization signal" evidence="1">
    <location>
        <begin position="26"/>
        <end position="32"/>
    </location>
</feature>
<feature type="short sequence motif" description="Tryptophan repeat motif">
    <location>
        <begin position="997"/>
        <end position="1013"/>
    </location>
</feature>
<feature type="compositionally biased region" description="Polar residues" evidence="14">
    <location>
        <begin position="450"/>
        <end position="470"/>
    </location>
</feature>
<feature type="active site" description="For protease activity; shared with dimeric partner" evidence="13 20">
    <location>
        <position position="525"/>
    </location>
</feature>
<feature type="binding site">
    <location>
        <position position="709"/>
    </location>
    <ligand>
        <name>Mg(2+)</name>
        <dbReference type="ChEBI" id="CHEBI:18420"/>
        <label>1</label>
        <note>catalytic; for reverse transcriptase activity</note>
    </ligand>
</feature>
<feature type="binding site">
    <location>
        <position position="784"/>
    </location>
    <ligand>
        <name>Mg(2+)</name>
        <dbReference type="ChEBI" id="CHEBI:18420"/>
        <label>1</label>
        <note>catalytic; for reverse transcriptase activity</note>
    </ligand>
</feature>
<feature type="binding site">
    <location>
        <position position="785"/>
    </location>
    <ligand>
        <name>Mg(2+)</name>
        <dbReference type="ChEBI" id="CHEBI:18420"/>
        <label>1</label>
        <note>catalytic; for reverse transcriptase activity</note>
    </ligand>
</feature>
<feature type="binding site" evidence="33">
    <location>
        <position position="1042"/>
    </location>
    <ligand>
        <name>Mg(2+)</name>
        <dbReference type="ChEBI" id="CHEBI:18420"/>
        <label>2</label>
        <note>catalytic; for RNase H activity</note>
    </ligand>
</feature>
<feature type="binding site" evidence="33">
    <location>
        <position position="1077"/>
    </location>
    <ligand>
        <name>Mg(2+)</name>
        <dbReference type="ChEBI" id="CHEBI:18420"/>
        <label>2</label>
        <note>catalytic; for RNase H activity</note>
    </ligand>
</feature>
<feature type="binding site" evidence="33">
    <location>
        <position position="1097"/>
    </location>
    <ligand>
        <name>Mg(2+)</name>
        <dbReference type="ChEBI" id="CHEBI:18420"/>
        <label>2</label>
        <note>catalytic; for RNase H activity</note>
    </ligand>
</feature>
<feature type="binding site" evidence="33">
    <location>
        <position position="1148"/>
    </location>
    <ligand>
        <name>Mg(2+)</name>
        <dbReference type="ChEBI" id="CHEBI:18420"/>
        <label>2</label>
        <note>catalytic; for RNase H activity</note>
    </ligand>
</feature>
<feature type="binding site" evidence="10">
    <location>
        <position position="1171"/>
    </location>
    <ligand>
        <name>Zn(2+)</name>
        <dbReference type="ChEBI" id="CHEBI:29105"/>
    </ligand>
</feature>
<feature type="binding site" evidence="10">
    <location>
        <position position="1175"/>
    </location>
    <ligand>
        <name>Zn(2+)</name>
        <dbReference type="ChEBI" id="CHEBI:29105"/>
    </ligand>
</feature>
<feature type="binding site" evidence="10">
    <location>
        <position position="1199"/>
    </location>
    <ligand>
        <name>Zn(2+)</name>
        <dbReference type="ChEBI" id="CHEBI:29105"/>
    </ligand>
</feature>
<feature type="binding site" evidence="10">
    <location>
        <position position="1202"/>
    </location>
    <ligand>
        <name>Zn(2+)</name>
        <dbReference type="ChEBI" id="CHEBI:29105"/>
    </ligand>
</feature>
<feature type="binding site" evidence="1">
    <location>
        <position position="1223"/>
    </location>
    <ligand>
        <name>Mg(2+)</name>
        <dbReference type="ChEBI" id="CHEBI:18420"/>
        <label>3</label>
        <note>catalytic; for integrase activity</note>
    </ligand>
</feature>
<feature type="binding site" evidence="1">
    <location>
        <position position="1275"/>
    </location>
    <ligand>
        <name>Mg(2+)</name>
        <dbReference type="ChEBI" id="CHEBI:18420"/>
        <label>3</label>
        <note>catalytic; for integrase activity</note>
    </ligand>
</feature>
<feature type="binding site" evidence="3">
    <location>
        <position position="1311"/>
    </location>
    <ligand>
        <name>Mg(2+)</name>
        <dbReference type="ChEBI" id="CHEBI:18420"/>
        <label>3</label>
        <note>catalytic; for integrase activity</note>
    </ligand>
</feature>
<feature type="site" description="Cleavage; by viral protease" evidence="1">
    <location>
        <begin position="132"/>
        <end position="133"/>
    </location>
</feature>
<feature type="site" description="Cis/trans isomerization of proline peptide bond; by human PPIA/CYPA" evidence="1">
    <location>
        <begin position="221"/>
        <end position="222"/>
    </location>
</feature>
<feature type="site" description="Cleavage; by viral protease" evidence="1">
    <location>
        <begin position="363"/>
        <end position="364"/>
    </location>
</feature>
<feature type="site" description="Cleavage; by viral protease" evidence="1">
    <location>
        <begin position="377"/>
        <end position="378"/>
    </location>
</feature>
<feature type="site" description="Cleavage; by viral protease" evidence="5">
    <location>
        <begin position="432"/>
        <end position="433"/>
    </location>
</feature>
<feature type="site" description="Cleavage; by viral protease">
    <location>
        <begin position="440"/>
        <end position="441"/>
    </location>
</feature>
<feature type="site" description="Cleavage; by viral protease">
    <location>
        <begin position="500"/>
        <end position="501"/>
    </location>
</feature>
<feature type="site" description="Cleavage; by viral protease" evidence="26">
    <location>
        <begin position="599"/>
        <end position="600"/>
    </location>
</feature>
<feature type="site" description="Essential for RT p66/p51 heterodimerization">
    <location>
        <position position="1000"/>
    </location>
</feature>
<feature type="site" description="Essential for RT p66/p51 heterodimerization">
    <location>
        <position position="1013"/>
    </location>
</feature>
<feature type="site" description="Cleavage; by viral protease; partial">
    <location>
        <begin position="1039"/>
        <end position="1040"/>
    </location>
</feature>
<feature type="site" description="Cleavage; by viral protease" evidence="1">
    <location>
        <begin position="1159"/>
        <end position="1160"/>
    </location>
</feature>
<feature type="modified residue" description="Phosphotyrosine; by host" evidence="1">
    <location>
        <position position="132"/>
    </location>
</feature>
<feature type="modified residue" description="Asymmetric dimethylarginine; in Nucleocapsid protein p7; by host PRMT6" evidence="24">
    <location>
        <position position="387"/>
    </location>
</feature>
<feature type="modified residue" description="Asymmetric dimethylarginine; in Nucleocapsid protein p7; by host PRMT6" evidence="24">
    <location>
        <position position="409"/>
    </location>
</feature>
<feature type="lipid moiety-binding region" description="N-myristoyl glycine; by host" evidence="1">
    <location>
        <position position="2"/>
    </location>
</feature>
<feature type="sequence variant" description="In strain: Isolate PV22.">
    <original>V</original>
    <variation>L</variation>
    <location>
        <position position="297"/>
    </location>
</feature>
<feature type="sequence variant">
    <original>L</original>
    <variation>F</variation>
    <location>
        <position position="434"/>
    </location>
</feature>
<feature type="sequence variant" description="In strain: Isolate PV22.">
    <original>K</original>
    <variation>R</variation>
    <location>
        <position position="771"/>
    </location>
</feature>
<feature type="sequence variant" description="In strain: Isolate PV22.">
    <original>K</original>
    <variation>R</variation>
    <location>
        <position position="1050"/>
    </location>
</feature>
<feature type="sequence variant" description="In strain: Isolate PV22.">
    <original>V</original>
    <variation>L</variation>
    <location>
        <position position="1057"/>
    </location>
</feature>
<feature type="sequence variant" description="In strain: Isolate PV22.">
    <original>K</original>
    <variation>Q</variation>
    <location>
        <position position="1111"/>
    </location>
</feature>
<feature type="sequence variant" description="In strain: Isolate PV22.">
    <original>E</original>
    <variation>Q</variation>
    <location>
        <position position="1128"/>
    </location>
</feature>
<feature type="mutagenesis site" description="Complete loss of cleavage between NC and TF." evidence="16">
    <original>F</original>
    <variation>I</variation>
    <location>
        <position position="440"/>
    </location>
</feature>
<feature type="mutagenesis site" description="Complete loss of cleavage between TF and p15." evidence="16">
    <original>F</original>
    <variation>I</variation>
    <location>
        <position position="500"/>
    </location>
</feature>
<feature type="mutagenesis site" description="74% loss of polymerase activity. 86% loss of RNase H activity." evidence="31">
    <original>P</original>
    <variation>G</variation>
    <location>
        <position position="651"/>
    </location>
</feature>
<feature type="mutagenesis site" description="64% loss of polymerase activity. 57% loss of RNase H activity." evidence="31">
    <original>P</original>
    <variation>G</variation>
    <location>
        <position position="654"/>
    </location>
</feature>
<feature type="mutagenesis site" description="Strong decrease in RT binding affinity for all dNTP substrates and in catalytic efficiency. 100-fold decreased sensitivity to ddNTP inhibitors." evidence="15">
    <original>K</original>
    <variation>A</variation>
    <location>
        <position position="664"/>
    </location>
</feature>
<feature type="mutagenesis site" description="Strong decrease in RT binding affinity for all dNTP substrates and in catalytic efficiency. 100-fold decreased sensitivity to ddNTP inhibitors." evidence="15">
    <original>K</original>
    <variation>E</variation>
    <location>
        <position position="664"/>
    </location>
</feature>
<feature type="mutagenesis site" description="Strong decrease in RT binding affinity for all dNTP substrates and in catalytic efficiency. 100-fold decreased sensitivity to ddNTP inhibitors." evidence="15">
    <original>K</original>
    <variation>Q</variation>
    <location>
        <position position="664"/>
    </location>
</feature>
<feature type="mutagenesis site" description="10-fold decreased sensitivity to ddATP and ddCTP inhibitors." evidence="15">
    <original>K</original>
    <variation>R</variation>
    <location>
        <position position="664"/>
    </location>
</feature>
<feature type="mutagenesis site" description="No loss of polymerase activity. No loss of RNase H activity." evidence="31">
    <original>L</original>
    <variation>V</variation>
    <location>
        <position position="673"/>
    </location>
</feature>
<feature type="mutagenesis site" description="5- to 12-fold decrease in affinity for dTTP substrates. Strongly decreased RNA-directed and DNA-directed DNA polymerase activities. No effect on RNase H activity. Loss of pyrophosphorolysis (reverse of the polymerase reaction)." evidence="28">
    <original>D</original>
    <variation>A</variation>
    <location>
        <position position="709"/>
    </location>
</feature>
<feature type="mutagenesis site" description="5- to 12-fold decrease in affinity for dTTP substrates. Strongly decreased RNA-directed DNA polymerase activity. Slightly decreased DNA-directed DNA polymerase activity. No effect on RNase H activity. Loss of pyrophosphorolysis (reverse of the polymerase reaction)." evidence="28">
    <original>D</original>
    <variation>S</variation>
    <location>
        <position position="709"/>
    </location>
</feature>
<feature type="mutagenesis site" description="73% loss of DNA-directed DNA polymerase activity. 70% loss of RNA-directed DNA polymerase activity." evidence="18">
    <original>W</original>
    <variation>A</variation>
    <location>
        <position position="752"/>
    </location>
</feature>
<feature type="mutagenesis site" description="10% loss of DNA-directed DNA polymerase activity. 22% loss of RNA-directed DNA polymerase activity." evidence="18">
    <original>W</original>
    <variation>F</variation>
    <location>
        <position position="752"/>
    </location>
</feature>
<feature type="mutagenesis site" description="58% loss of DNA-directed DNA polymerase activity. 42% loss of RNA-directed DNA polymerase activity." evidence="18">
    <original>W</original>
    <variation>Y</variation>
    <location>
        <position position="752"/>
    </location>
</feature>
<feature type="mutagenesis site" description="74% loss of polymerase activity. 56% loss of RNase H activity." evidence="31">
    <original>S</original>
    <variation>A</variation>
    <location>
        <position position="755"/>
    </location>
</feature>
<feature type="mutagenesis site" description="Complete loss of polymerase activity. No loss of RNase H activity." evidence="31">
    <original>S</original>
    <variation>G</variation>
    <location>
        <position position="755"/>
    </location>
</feature>
<feature type="mutagenesis site" description="Complete loss of polymerase activity. No loss of RNase H activity." evidence="31">
    <original>S</original>
    <variation>T</variation>
    <location>
        <position position="755"/>
    </location>
</feature>
<feature type="mutagenesis site" description="34% loss of polymerase activity. No loss of RNase H activity." evidence="31">
    <original>P</original>
    <variation>G</variation>
    <location>
        <position position="756"/>
    </location>
</feature>
<feature type="mutagenesis site" description="71% loss of DNA-directed DNA polymerase activity. 61% loss of RNA-directed DNA polymerase activity." evidence="18">
    <original>I</original>
    <variation>A</variation>
    <location>
        <position position="766"/>
    </location>
</feature>
<feature type="mutagenesis site" description="16% loss of DNA-directed DNA polymerase activity. 24% loss of RNA-directed DNA polymerase activity." evidence="18">
    <original>I</original>
    <variation>D</variation>
    <location>
        <position position="766"/>
    </location>
</feature>
<feature type="mutagenesis site" description="80% loss of DNA-directed DNA polymerase activity. 23% loss of RNA-directed DNA polymerase activity." evidence="18">
    <original>I</original>
    <variation>L</variation>
    <location>
        <position position="766"/>
    </location>
</feature>
<feature type="mutagenesis site" description="34% increase of DNA-directed DNA polymerase activity. 18% increase of RNA-directed DNA polymerase activity." evidence="18">
    <original>I</original>
    <variation>T</variation>
    <location>
        <position position="766"/>
    </location>
</feature>
<feature type="mutagenesis site" description="70% loss of DNA-directed DNA polymerase activity. 64% loss of RNA-directed DNA polymerase activity." evidence="18">
    <original>I</original>
    <variation>V</variation>
    <location>
        <position position="766"/>
    </location>
</feature>
<feature type="mutagenesis site" description="Almost complete loss of polymerase activity." evidence="32">
    <original>Y</original>
    <variation>A</variation>
    <location>
        <position position="782"/>
    </location>
</feature>
<feature type="mutagenesis site" description="70% loss of polymerase activity. No loss of polymerase activity; when associated with V-783." evidence="32">
    <original>Y</original>
    <variation>F</variation>
    <location>
        <position position="782"/>
    </location>
</feature>
<feature type="mutagenesis site" description="54% loss of polymerase activity according to PubMed:9533880; increases polymerase activity according to PubMed:9657675. No loss of RNase H activity." evidence="31 32">
    <original>M</original>
    <variation>I</variation>
    <location>
        <position position="783"/>
    </location>
</feature>
<feature type="mutagenesis site" description="90% loss of polymerase activity. No loss of RNase H activity." evidence="31 32">
    <original>M</original>
    <variation>L</variation>
    <location>
        <position position="783"/>
    </location>
</feature>
<feature type="mutagenesis site" description="58% loss of polymerase activity. No loss of RNase H activity." evidence="31 32">
    <original>M</original>
    <variation>V</variation>
    <location>
        <position position="783"/>
    </location>
</feature>
<feature type="mutagenesis site" description="Strongly decreased RNA-directed and DNA-directed DNA polymerase activities. No effect on RNase H activity." evidence="28 32">
    <original>D</original>
    <variation>A</variation>
    <location>
        <position position="784"/>
    </location>
</feature>
<feature type="mutagenesis site" description="Strongly decreased RNA-directed and DNA-directed DNA polymerase activities. No effect on RNase H activity." evidence="28 32">
    <original>D</original>
    <variation>E</variation>
    <location>
        <position position="784"/>
    </location>
</feature>
<feature type="mutagenesis site" description="Strongly decreased RNA-directed and DNA-directed DNA polymerase activities. No effect on RNase H activity." evidence="28 32">
    <original>D</original>
    <variation>N</variation>
    <location>
        <position position="784"/>
    </location>
</feature>
<feature type="mutagenesis site" description="Strongly decreased RNA-directed and DNA-directed DNA polymerase activities. Loss of pyrophosphorolysis (reverse of the polymerase reaction). No effect on RNase H activity." evidence="28 32">
    <original>D</original>
    <variation>A</variation>
    <location>
        <position position="785"/>
    </location>
</feature>
<feature type="mutagenesis site" description="Drastically reduced incorporation of phosphorothioate nucleotide. Loss of pyrophosphorolysis (reverse of the polymerase reaction). No effect on RNase H activity." evidence="28 32">
    <original>D</original>
    <variation>E</variation>
    <location>
        <position position="785"/>
    </location>
</feature>
<feature type="mutagenesis site" description="Loss of pyrophosphorolysis (reverse of the polymerase reaction). No effect on RNase H activity." evidence="28 32">
    <original>D</original>
    <variation>N</variation>
    <location>
        <position position="785"/>
    </location>
</feature>
<feature type="mutagenesis site" description="76% loss of DNA-directed DNA polymerase activity. 60% loss of RNA-directed DNA polymerase activity." evidence="18">
    <original>L</original>
    <variation>A</variation>
    <location>
        <position position="786"/>
    </location>
</feature>
<feature type="mutagenesis site" description="29% loss of DNA-directed DNA polymerase activity. 46% loss of RNA-directed DNA polymerase activity." evidence="18">
    <original>L</original>
    <variation>I</variation>
    <location>
        <position position="786"/>
    </location>
</feature>
<feature type="mutagenesis site" description="20% loss of DNA-directed DNA polymerase activity. 21% loss of RNA-directed DNA polymerase activity." evidence="18">
    <original>L</original>
    <variation>R</variation>
    <location>
        <position position="786"/>
    </location>
</feature>
<feature type="mutagenesis site" description="22% loss of DNA-directed DNA polymerase activity. No loss of RNA-directed DNA polymerase activity." evidence="18">
    <original>L</original>
    <variation>V</variation>
    <location>
        <position position="786"/>
    </location>
</feature>
<feature type="mutagenesis site" description="37% increase of DNA-directed DNA polymerase activity. No loss of RNA-directed DNA polymerase activity." evidence="18">
    <original>V</original>
    <variation>A</variation>
    <location>
        <position position="788"/>
    </location>
</feature>
<feature type="mutagenesis site" description="25% increase of DNA-directed DNA polymerase activity. No loss of RNA-directed DNA polymerase activity." evidence="18">
    <original>V</original>
    <variation>I</variation>
    <location>
        <position position="788"/>
    </location>
</feature>
<feature type="mutagenesis site" description="27% increase of DNA-directed DNA polymerase activity. 10% loss of RNA-directed DNA polymerase activity." evidence="18">
    <original>V</original>
    <variation>M</variation>
    <location>
        <position position="788"/>
    </location>
</feature>
<feature type="mutagenesis site" description="No effect on RNA-dependent DNA polymerase activity. No effect on RNA 5'-end and 3'-end cleavages." evidence="30">
    <original>E</original>
    <variation>A</variation>
    <location>
        <position position="823"/>
    </location>
</feature>
<feature type="mutagenesis site" description="No effect on RNA-dependent DNA polymerase activity. No effect on RNA 5'-end and 3'-end cleavages." evidence="30">
    <original>P</original>
    <variation>A</variation>
    <location>
        <position position="824"/>
    </location>
</feature>
<feature type="mutagenesis site" description="No effect on RNA-dependent DNA polymerase activity. Complete loss of RNA 5'-end cleavage. No effect on RNA 3'-end cleavage." evidence="30">
    <original>P</original>
    <variation>A</variation>
    <location>
        <position position="825"/>
    </location>
</feature>
<feature type="mutagenesis site" description="No effect on RNA-dependent DNA polymerase activity. Complete loss of RNA 5'-end cleavage. No effect on RNA 3'-end cleavage." evidence="30">
    <original>F</original>
    <variation>A</variation>
    <location>
        <position position="826"/>
    </location>
</feature>
<feature type="mutagenesis site" description="No effect on RNA-dependent DNA polymerase activity. No effect on RNA 5'-end and 3'-end cleavages." evidence="30">
    <original>L</original>
    <variation>A</variation>
    <location>
        <position position="827"/>
    </location>
</feature>
<feature type="mutagenesis site" description="Complete loss of RNA-dependent DNA polymerase activity. No effect on RNA 5'-end and 3'-end cleavages." evidence="30">
    <original>W</original>
    <variation>A</variation>
    <location>
        <position position="828"/>
    </location>
</feature>
<feature type="mutagenesis site" description="No effect on RNA-dependent DNA polymerase activity. No effect on RNA 5'-end and 3'-end cleavages." evidence="30">
    <original>M</original>
    <variation>A</variation>
    <location>
        <position position="829"/>
    </location>
</feature>
<feature type="mutagenesis site" description="Complete loss of RNA-dependent DNA polymerase activity. Complete loss of RNA 5'-end and 3'-end cleavages." evidence="30">
    <original>G</original>
    <variation>A</variation>
    <location>
        <position position="830"/>
    </location>
</feature>
<feature type="mutagenesis site" description="Complete loss of RNA-dependent DNA polymerase activity. Complete loss of RNA 5'-end and 3'-end cleavages." evidence="30">
    <original>Y</original>
    <variation>A</variation>
    <location>
        <position position="831"/>
    </location>
</feature>
<feature type="mutagenesis site" description="Complete loss of RNA-dependent DNA polymerase activity. Complete loss of RNA 5'-end and 3'-end cleavages." evidence="30">
    <original>E</original>
    <variation>A</variation>
    <location>
        <position position="832"/>
    </location>
</feature>
<feature type="mutagenesis site" description="Complete loss of RNA-dependent DNA polymerase activity. Complete loss of RNA 5'-end and 3'-end cleavages." evidence="30">
    <original>H</original>
    <variation>A</variation>
    <location>
        <position position="834"/>
    </location>
</feature>
<feature type="mutagenesis site" description="96% loss of polymerase activity. 45% loss of RNase H activity." evidence="31">
    <original>I</original>
    <variation>T</variation>
    <location>
        <position position="856"/>
    </location>
</feature>
<feature type="mutagenesis site" description="Complete loss of polymerase activity. 25% loss of RNase H activity." evidence="31">
    <original>G</original>
    <variation>A</variation>
    <location>
        <position position="861"/>
    </location>
</feature>
<feature type="mutagenesis site" description="17% loss of polymerase activity. 30% loss of RNase H activity." evidence="31">
    <original>L</original>
    <variation>S</variation>
    <location>
        <position position="863"/>
    </location>
</feature>
<feature type="mutagenesis site" description="Complete loss of polymerase activity. 87% loss of RNase H activity." evidence="31">
    <original>W</original>
    <variation>T</variation>
    <location>
        <position position="865"/>
    </location>
</feature>
<feature type="mutagenesis site" description="21% loss of polymerase activity. 16% loss of RNase H activity." evidence="31">
    <original>L</original>
    <variation>S</variation>
    <location>
        <position position="878"/>
    </location>
</feature>
<feature type="mutagenesis site" description="68% loss of polymerase activity. 10% loss of RNase H activity." evidence="31">
    <original>A</original>
    <variation>L</variation>
    <location>
        <position position="898"/>
    </location>
</feature>
<feature type="mutagenesis site" description="59% loss of polymerase activity. 8% loss of RNase H activity." evidence="31">
    <original>L</original>
    <variation>S</variation>
    <location>
        <position position="902"/>
    </location>
</feature>
<feature type="mutagenesis site" description="31% loss of polymerase activity. No loss of RNase H activity." evidence="31">
    <original>L</original>
    <variation>S</variation>
    <location>
        <position position="909"/>
    </location>
</feature>
<feature type="mutagenesis site" description="No effect on RT p66/p51 heterodimerization." evidence="19">
    <original>W</original>
    <variation>L</variation>
    <location>
        <position position="997"/>
    </location>
</feature>
<feature type="mutagenesis site" description="Almost complete loss of RT p66/p51 heterodimerization. Complete loss of polymerase activity." evidence="19 21">
    <original>W</original>
    <variation>A</variation>
    <location>
        <position position="1000"/>
    </location>
</feature>
<feature type="mutagenesis site" description="No effect on RT p66/p51 heterodimerization." evidence="19 21">
    <original>W</original>
    <variation>F</variation>
    <location>
        <position position="1000"/>
    </location>
</feature>
<feature type="mutagenesis site" description="Almost complete loss of RT p66/p51 heterodimerization. Complete loss of polymerase activity." evidence="19 21">
    <original>W</original>
    <variation>L</variation>
    <location>
        <position position="1000"/>
    </location>
</feature>
<feature type="mutagenesis site" description="No effect on RT p66/p51 heterodimerization." evidence="19">
    <original>W</original>
    <variation>L</variation>
    <location>
        <position position="1001"/>
    </location>
</feature>
<feature type="mutagenesis site" description="No effect on RT p66/p51 heterodimerization." evidence="19">
    <original>Y</original>
    <variation>L</variation>
    <location>
        <position position="1004"/>
    </location>
</feature>
<feature type="mutagenesis site" description="Decreased RT p66/p51 heterodimerization." evidence="19">
    <original>W</original>
    <variation>L</variation>
    <location>
        <position position="1005"/>
    </location>
</feature>
<feature type="mutagenesis site" description="No effect on RT p66/p51 heterodimerization." evidence="19">
    <original>W</original>
    <variation>L</variation>
    <location>
        <position position="1009"/>
    </location>
</feature>
<feature type="mutagenesis site" description="Almost complete loss of RT p66/p51 heterodimerization." evidence="19">
    <original>W</original>
    <variation>L</variation>
    <location>
        <position position="1013"/>
    </location>
</feature>
<feature type="mutagenesis site" description="Replication slightly delayed." evidence="22">
    <original>A</original>
    <variation>I</variation>
    <location>
        <position position="1036"/>
    </location>
</feature>
<feature type="mutagenesis site" description="Virions contain primarily p51 RT." evidence="22">
    <original>E</original>
    <variation>N</variation>
    <location>
        <position position="1037"/>
    </location>
</feature>
<feature type="mutagenesis site" description="Almost complete loss of virion production; when associated with G-1041." evidence="22">
    <original>T</original>
    <variation>S</variation>
    <location>
        <position position="1038"/>
    </location>
</feature>
<feature type="mutagenesis site" description="Virions contain primarily p51 RT." evidence="22 25">
    <original>F</original>
    <variation>A</variation>
    <location>
        <position position="1039"/>
    </location>
</feature>
<feature type="mutagenesis site" description="Loss of cleavage between p51 RT and p15." evidence="22 25">
    <original>F</original>
    <variation>I</variation>
    <location>
        <position position="1039"/>
    </location>
</feature>
<feature type="mutagenesis site" description="No effect on cleavage between p51 RT and p15." evidence="22 25">
    <original>F</original>
    <variation>L</variation>
    <location>
        <position position="1039"/>
    </location>
</feature>
<feature type="mutagenesis site" description="Slight delays in replication. Virions contain primarily p51 RT." evidence="22 25">
    <original>F</original>
    <variation>V</variation>
    <location>
        <position position="1039"/>
    </location>
</feature>
<feature type="mutagenesis site" description="Slight delays in replication. Virions contain primarily p51 RT." evidence="22 25">
    <original>F</original>
    <variation>W</variation>
    <location>
        <position position="1039"/>
    </location>
</feature>
<feature type="mutagenesis site" description="Virions contain primarily p51 RT; when associated with A-1039." evidence="22">
    <original>Y</original>
    <variation>A</variation>
    <location>
        <position position="1040"/>
    </location>
</feature>
<feature type="mutagenesis site" description="Almost complete loss of virion production; when associated with K-1041." evidence="22">
    <original>Y</original>
    <variation>I</variation>
    <location>
        <position position="1040"/>
    </location>
</feature>
<feature type="mutagenesis site" description="Virions contain primarily p51 RT; when associated with W-1039." evidence="22">
    <original>Y</original>
    <variation>W</variation>
    <location>
        <position position="1040"/>
    </location>
</feature>
<feature type="mutagenesis site" description="Almost complete loss of virion production; when associated with S-1038." evidence="22">
    <original>V</original>
    <variation>G</variation>
    <location>
        <position position="1041"/>
    </location>
</feature>
<feature type="mutagenesis site" description="Almost complete loss of virion production; when associated with I-1038." evidence="22">
    <original>V</original>
    <variation>K</variation>
    <location>
        <position position="1041"/>
    </location>
</feature>
<feature type="mutagenesis site" description="Slight delays in replication." evidence="22">
    <original>V</original>
    <variation>S</variation>
    <location>
        <position position="1041"/>
    </location>
</feature>
<feature type="mutagenesis site" description="No loss of polymerase activity. complete loss of RNase H activity." evidence="31">
    <original>E</original>
    <variation>Q</variation>
    <location>
        <position position="1077"/>
    </location>
</feature>
<feature type="mutagenesis site" description="Complete loss of RNAase H activity." evidence="17">
    <original>Y</original>
    <variation>A</variation>
    <variation>G</variation>
    <variation>H</variation>
    <variation>L</variation>
    <variation>S</variation>
    <variation>Q</variation>
    <location>
        <position position="1100"/>
    </location>
</feature>
<feature type="mutagenesis site" description="Almost complete loss of RNAase H activity." evidence="17">
    <original>Y</original>
    <variation>E</variation>
    <location>
        <position position="1100"/>
    </location>
</feature>
<feature type="mutagenesis site" description="Almost no effect on RNAase H activity and replication." evidence="17">
    <original>Y</original>
    <variation>F</variation>
    <location>
        <position position="1100"/>
    </location>
</feature>
<feature type="mutagenesis site" description="Almost no effect on RNAase H activity. Unable to replicate. Completely resistant to inhibition by BBNH." evidence="17">
    <original>Y</original>
    <variation>R</variation>
    <location>
        <position position="1100"/>
    </location>
</feature>
<feature type="mutagenesis site" description="Almost no effect on RNAase H activity and replication. 6-fold resistance to inhibition by BBNH." evidence="17">
    <original>Y</original>
    <variation>W</variation>
    <location>
        <position position="1100"/>
    </location>
</feature>
<feature type="mutagenesis site" description="Severely reduces exonuclease activity of RNase H. Probably also reduces substrate binding affinity. Modifies cleavage preferences of RNase H. No effect on the endonuclease activity." evidence="23">
    <original>H</original>
    <variation>D</variation>
    <variation>N</variation>
    <location>
        <position position="1138"/>
    </location>
</feature>
<feature type="mutagenesis site" description="Severely reduced exonuclease activity of RNase H, but no effect on endonucleonuclease activity." evidence="23">
    <original>H</original>
    <variation>D</variation>
    <location>
        <position position="1138"/>
    </location>
</feature>
<feature type="mutagenesis site" description="Severely reduced exonuclease activity of RNase H, but no effect on endonucleonuclease activity." evidence="23">
    <original>H</original>
    <variation>N</variation>
    <location>
        <position position="1138"/>
    </location>
</feature>
<feature type="mutagenesis site" description="No effect on cleavage between reverse transcriptase/ribonuclease H and integrase." evidence="25">
    <original>L</original>
    <variation>F</variation>
    <location>
        <position position="1159"/>
    </location>
</feature>
<feature type="mutagenesis site" description="Loss of cleavage between reverse transcriptase/ribonuclease H and integrase." evidence="25">
    <original>L</original>
    <variation>I</variation>
    <location>
        <position position="1159"/>
    </location>
</feature>
<feature type="strand" evidence="61">
    <location>
        <begin position="134"/>
        <end position="136"/>
    </location>
</feature>
<feature type="strand" evidence="61">
    <location>
        <begin position="138"/>
        <end position="140"/>
    </location>
</feature>
<feature type="strand" evidence="61">
    <location>
        <begin position="142"/>
        <end position="144"/>
    </location>
</feature>
<feature type="helix" evidence="61">
    <location>
        <begin position="149"/>
        <end position="162"/>
    </location>
</feature>
<feature type="helix" evidence="61">
    <location>
        <begin position="168"/>
        <end position="175"/>
    </location>
</feature>
<feature type="turn" evidence="61">
    <location>
        <begin position="176"/>
        <end position="178"/>
    </location>
</feature>
<feature type="helix" evidence="61">
    <location>
        <begin position="181"/>
        <end position="189"/>
    </location>
</feature>
<feature type="helix" evidence="61">
    <location>
        <begin position="195"/>
        <end position="215"/>
    </location>
</feature>
<feature type="helix" evidence="61">
    <location>
        <begin position="233"/>
        <end position="236"/>
    </location>
</feature>
<feature type="helix" evidence="61">
    <location>
        <begin position="243"/>
        <end position="250"/>
    </location>
</feature>
<feature type="strand" evidence="61">
    <location>
        <begin position="252"/>
        <end position="254"/>
    </location>
</feature>
<feature type="helix" evidence="61">
    <location>
        <begin position="258"/>
        <end position="277"/>
    </location>
</feature>
<feature type="helix" evidence="61">
    <location>
        <begin position="282"/>
        <end position="284"/>
    </location>
</feature>
<feature type="strand" evidence="60">
    <location>
        <begin position="289"/>
        <end position="291"/>
    </location>
</feature>
<feature type="helix" evidence="61">
    <location>
        <begin position="293"/>
        <end position="307"/>
    </location>
</feature>
<feature type="helix" evidence="61">
    <location>
        <begin position="320"/>
        <end position="324"/>
    </location>
</feature>
<feature type="helix" evidence="61">
    <location>
        <begin position="328"/>
        <end position="335"/>
    </location>
</feature>
<feature type="helix" evidence="61">
    <location>
        <begin position="343"/>
        <end position="349"/>
    </location>
</feature>
<feature type="turn" evidence="41">
    <location>
        <begin position="393"/>
        <end position="395"/>
    </location>
</feature>
<feature type="strand" evidence="41">
    <location>
        <begin position="398"/>
        <end position="400"/>
    </location>
</feature>
<feature type="turn" evidence="41">
    <location>
        <begin position="402"/>
        <end position="404"/>
    </location>
</feature>
<feature type="strand" evidence="41">
    <location>
        <begin position="414"/>
        <end position="416"/>
    </location>
</feature>
<feature type="strand" evidence="41">
    <location>
        <begin position="419"/>
        <end position="421"/>
    </location>
</feature>
<feature type="turn" evidence="41">
    <location>
        <begin position="423"/>
        <end position="425"/>
    </location>
</feature>
<feature type="strand" evidence="43">
    <location>
        <begin position="426"/>
        <end position="429"/>
    </location>
</feature>
<feature type="strand" evidence="35">
    <location>
        <begin position="502"/>
        <end position="504"/>
    </location>
</feature>
<feature type="strand" evidence="49">
    <location>
        <begin position="505"/>
        <end position="507"/>
    </location>
</feature>
<feature type="strand" evidence="49">
    <location>
        <begin position="510"/>
        <end position="515"/>
    </location>
</feature>
<feature type="strand" evidence="49">
    <location>
        <begin position="518"/>
        <end position="524"/>
    </location>
</feature>
<feature type="strand" evidence="49">
    <location>
        <begin position="529"/>
        <end position="533"/>
    </location>
</feature>
<feature type="strand" evidence="49">
    <location>
        <begin position="542"/>
        <end position="549"/>
    </location>
</feature>
<feature type="strand" evidence="49">
    <location>
        <begin position="552"/>
        <end position="566"/>
    </location>
</feature>
<feature type="strand" evidence="49">
    <location>
        <begin position="569"/>
        <end position="578"/>
    </location>
</feature>
<feature type="strand" evidence="54">
    <location>
        <begin position="581"/>
        <end position="585"/>
    </location>
</feature>
<feature type="helix" evidence="49">
    <location>
        <begin position="587"/>
        <end position="590"/>
    </location>
</feature>
<feature type="turn" evidence="49">
    <location>
        <begin position="591"/>
        <end position="594"/>
    </location>
</feature>
<feature type="strand" evidence="49">
    <location>
        <begin position="596"/>
        <end position="598"/>
    </location>
</feature>
<feature type="strand" evidence="39">
    <location>
        <begin position="602"/>
        <end position="604"/>
    </location>
</feature>
<feature type="strand" evidence="59">
    <location>
        <begin position="611"/>
        <end position="614"/>
    </location>
</feature>
<feature type="helix" evidence="50">
    <location>
        <begin position="627"/>
        <end position="642"/>
    </location>
</feature>
<feature type="strand" evidence="50">
    <location>
        <begin position="645"/>
        <end position="648"/>
    </location>
</feature>
<feature type="strand" evidence="38">
    <location>
        <begin position="651"/>
        <end position="653"/>
    </location>
</feature>
<feature type="strand" evidence="50">
    <location>
        <begin position="659"/>
        <end position="663"/>
    </location>
</feature>
<feature type="strand" evidence="50">
    <location>
        <begin position="665"/>
        <end position="668"/>
    </location>
</feature>
<feature type="strand" evidence="50">
    <location>
        <begin position="670"/>
        <end position="674"/>
    </location>
</feature>
<feature type="helix" evidence="50">
    <location>
        <begin position="677"/>
        <end position="682"/>
    </location>
</feature>
<feature type="helix" evidence="63">
    <location>
        <begin position="685"/>
        <end position="688"/>
    </location>
</feature>
<feature type="helix" evidence="51">
    <location>
        <begin position="689"/>
        <end position="691"/>
    </location>
</feature>
<feature type="helix" evidence="50">
    <location>
        <begin position="696"/>
        <end position="698"/>
    </location>
</feature>
<feature type="helix" evidence="50">
    <location>
        <begin position="699"/>
        <end position="701"/>
    </location>
</feature>
<feature type="strand" evidence="50">
    <location>
        <begin position="703"/>
        <end position="709"/>
    </location>
</feature>
<feature type="helix" evidence="48">
    <location>
        <begin position="710"/>
        <end position="712"/>
    </location>
</feature>
<feature type="helix" evidence="50">
    <location>
        <begin position="713"/>
        <end position="716"/>
    </location>
</feature>
<feature type="helix" evidence="50">
    <location>
        <begin position="721"/>
        <end position="727"/>
    </location>
</feature>
<feature type="strand" evidence="50">
    <location>
        <begin position="729"/>
        <end position="731"/>
    </location>
</feature>
<feature type="helix" evidence="50">
    <location>
        <begin position="734"/>
        <end position="736"/>
    </location>
</feature>
<feature type="strand" evidence="56">
    <location>
        <begin position="737"/>
        <end position="739"/>
    </location>
</feature>
<feature type="strand" evidence="50">
    <location>
        <begin position="741"/>
        <end position="747"/>
    </location>
</feature>
<feature type="strand" evidence="47">
    <location>
        <begin position="752"/>
        <end position="754"/>
    </location>
</feature>
<feature type="helix" evidence="50">
    <location>
        <begin position="755"/>
        <end position="773"/>
    </location>
</feature>
<feature type="strand" evidence="55">
    <location>
        <begin position="774"/>
        <end position="776"/>
    </location>
</feature>
<feature type="strand" evidence="50">
    <location>
        <begin position="777"/>
        <end position="782"/>
    </location>
</feature>
<feature type="strand" evidence="50">
    <location>
        <begin position="785"/>
        <end position="790"/>
    </location>
</feature>
<feature type="helix" evidence="50">
    <location>
        <begin position="794"/>
        <end position="808"/>
    </location>
</feature>
<feature type="helix" evidence="50">
    <location>
        <begin position="809"/>
        <end position="811"/>
    </location>
</feature>
<feature type="helix" evidence="63">
    <location>
        <begin position="817"/>
        <end position="819"/>
    </location>
</feature>
<feature type="strand" evidence="37">
    <location>
        <begin position="820"/>
        <end position="822"/>
    </location>
</feature>
<feature type="strand" evidence="50">
    <location>
        <begin position="824"/>
        <end position="828"/>
    </location>
</feature>
<feature type="strand" evidence="50">
    <location>
        <begin position="831"/>
        <end position="833"/>
    </location>
</feature>
<feature type="helix" evidence="50">
    <location>
        <begin position="835"/>
        <end position="837"/>
    </location>
</feature>
<feature type="strand" evidence="50">
    <location>
        <begin position="838"/>
        <end position="841"/>
    </location>
</feature>
<feature type="strand" evidence="44">
    <location>
        <begin position="849"/>
        <end position="852"/>
    </location>
</feature>
<feature type="helix" evidence="50">
    <location>
        <begin position="853"/>
        <end position="866"/>
    </location>
</feature>
<feature type="turn" evidence="50">
    <location>
        <begin position="867"/>
        <end position="869"/>
    </location>
</feature>
<feature type="strand" evidence="57">
    <location>
        <begin position="870"/>
        <end position="872"/>
    </location>
</feature>
<feature type="helix" evidence="50">
    <location>
        <begin position="876"/>
        <end position="879"/>
    </location>
</feature>
<feature type="helix" evidence="50">
    <location>
        <begin position="880"/>
        <end position="882"/>
    </location>
</feature>
<feature type="turn" evidence="52">
    <location>
        <begin position="883"/>
        <end position="885"/>
    </location>
</feature>
<feature type="strand" evidence="42">
    <location>
        <begin position="888"/>
        <end position="891"/>
    </location>
</feature>
<feature type="helix" evidence="50">
    <location>
        <begin position="896"/>
        <end position="908"/>
    </location>
</feature>
<feature type="strand" evidence="58">
    <location>
        <begin position="909"/>
        <end position="911"/>
    </location>
</feature>
<feature type="strand" evidence="57">
    <location>
        <begin position="913"/>
        <end position="915"/>
    </location>
</feature>
<feature type="strand" evidence="63">
    <location>
        <begin position="920"/>
        <end position="922"/>
    </location>
</feature>
<feature type="strand" evidence="50">
    <location>
        <begin position="925"/>
        <end position="932"/>
    </location>
</feature>
<feature type="strand" evidence="50">
    <location>
        <begin position="935"/>
        <end position="943"/>
    </location>
</feature>
<feature type="strand" evidence="50">
    <location>
        <begin position="946"/>
        <end position="954"/>
    </location>
</feature>
<feature type="strand" evidence="50">
    <location>
        <begin position="957"/>
        <end position="961"/>
    </location>
</feature>
<feature type="helix" evidence="50">
    <location>
        <begin position="963"/>
        <end position="982"/>
    </location>
</feature>
<feature type="strand" evidence="50">
    <location>
        <begin position="987"/>
        <end position="992"/>
    </location>
</feature>
<feature type="helix" evidence="50">
    <location>
        <begin position="994"/>
        <end position="1003"/>
    </location>
</feature>
<feature type="strand" evidence="57">
    <location>
        <begin position="1004"/>
        <end position="1006"/>
    </location>
</feature>
<feature type="strand" evidence="50">
    <location>
        <begin position="1012"/>
        <end position="1015"/>
    </location>
</feature>
<feature type="strand" evidence="46">
    <location>
        <begin position="1017"/>
        <end position="1019"/>
    </location>
</feature>
<feature type="helix" evidence="42">
    <location>
        <begin position="1020"/>
        <end position="1022"/>
    </location>
</feature>
<feature type="helix" evidence="50">
    <location>
        <begin position="1023"/>
        <end position="1026"/>
    </location>
</feature>
<feature type="strand" evidence="34">
    <location>
        <begin position="1029"/>
        <end position="1031"/>
    </location>
</feature>
<feature type="strand" evidence="50">
    <location>
        <begin position="1036"/>
        <end position="1045"/>
    </location>
</feature>
<feature type="turn" evidence="50">
    <location>
        <begin position="1047"/>
        <end position="1049"/>
    </location>
</feature>
<feature type="strand" evidence="50">
    <location>
        <begin position="1052"/>
        <end position="1058"/>
    </location>
</feature>
<feature type="strand" evidence="62">
    <location>
        <begin position="1059"/>
        <end position="1061"/>
    </location>
</feature>
<feature type="strand" evidence="50">
    <location>
        <begin position="1063"/>
        <end position="1070"/>
    </location>
</feature>
<feature type="helix" evidence="50">
    <location>
        <begin position="1073"/>
        <end position="1087"/>
    </location>
</feature>
<feature type="strand" evidence="50">
    <location>
        <begin position="1090"/>
        <end position="1096"/>
    </location>
</feature>
<feature type="helix" evidence="50">
    <location>
        <begin position="1099"/>
        <end position="1105"/>
    </location>
</feature>
<feature type="strand" evidence="50">
    <location>
        <begin position="1110"/>
        <end position="1114"/>
    </location>
</feature>
<feature type="helix" evidence="50">
    <location>
        <begin position="1115"/>
        <end position="1126"/>
    </location>
</feature>
<feature type="strand" evidence="50">
    <location>
        <begin position="1128"/>
        <end position="1134"/>
    </location>
</feature>
<feature type="strand" evidence="44">
    <location>
        <begin position="1137"/>
        <end position="1139"/>
    </location>
</feature>
<feature type="strand" evidence="40">
    <location>
        <begin position="1140"/>
        <end position="1142"/>
    </location>
</feature>
<feature type="helix" evidence="50">
    <location>
        <begin position="1144"/>
        <end position="1152"/>
    </location>
</feature>
<feature type="turn" evidence="53">
    <location>
        <begin position="1153"/>
        <end position="1155"/>
    </location>
</feature>
<feature type="strand" evidence="45">
    <location>
        <begin position="1219"/>
        <end position="1227"/>
    </location>
</feature>
<feature type="strand" evidence="45">
    <location>
        <begin position="1230"/>
        <end position="1237"/>
    </location>
</feature>
<feature type="turn" evidence="45">
    <location>
        <begin position="1238"/>
        <end position="1240"/>
    </location>
</feature>
<feature type="strand" evidence="45">
    <location>
        <begin position="1243"/>
        <end position="1250"/>
    </location>
</feature>
<feature type="helix" evidence="45">
    <location>
        <begin position="1253"/>
        <end position="1266"/>
    </location>
</feature>
<feature type="strand" evidence="45">
    <location>
        <begin position="1271"/>
        <end position="1273"/>
    </location>
</feature>
<feature type="helix" evidence="45">
    <location>
        <begin position="1277"/>
        <end position="1281"/>
    </location>
</feature>
<feature type="helix" evidence="45">
    <location>
        <begin position="1283"/>
        <end position="1292"/>
    </location>
</feature>
<feature type="strand" evidence="45">
    <location>
        <begin position="1295"/>
        <end position="1297"/>
    </location>
</feature>
<feature type="helix" evidence="45">
    <location>
        <begin position="1305"/>
        <end position="1324"/>
    </location>
</feature>
<feature type="helix" evidence="45">
    <location>
        <begin position="1325"/>
        <end position="1327"/>
    </location>
</feature>
<feature type="helix" evidence="45">
    <location>
        <begin position="1331"/>
        <end position="1344"/>
    </location>
</feature>
<feature type="helix" evidence="45">
    <location>
        <begin position="1355"/>
        <end position="1367"/>
    </location>
</feature>
<feature type="strand" evidence="36">
    <location>
        <begin position="1380"/>
        <end position="1386"/>
    </location>
</feature>
<feature type="strand" evidence="36">
    <location>
        <begin position="1395"/>
        <end position="1403"/>
    </location>
</feature>
<feature type="strand" evidence="36">
    <location>
        <begin position="1405"/>
        <end position="1420"/>
    </location>
</feature>
<feature type="helix" evidence="36">
    <location>
        <begin position="1421"/>
        <end position="1423"/>
    </location>
</feature>
<feature type="strand" evidence="36">
    <location>
        <begin position="1424"/>
        <end position="1428"/>
    </location>
</feature>
<reference key="1">
    <citation type="journal article" date="1985" name="Nature">
        <title>Complete nucleotide sequence of the AIDS virus, HTLV-III.</title>
        <authorList>
            <person name="Ratner L."/>
            <person name="Haseltine W.A."/>
            <person name="Patarca R."/>
            <person name="Livak K.J."/>
            <person name="Starcich B.R."/>
            <person name="Josephs S.F."/>
            <person name="Doran E.R."/>
            <person name="Rafalski J.A."/>
            <person name="Whitehorn E.A."/>
            <person name="Baumeister K."/>
            <person name="Ivanoff L."/>
            <person name="Petteway S.R. Jr."/>
            <person name="Pearson M.L."/>
            <person name="Lautenberger J.A."/>
            <person name="Papas T.S."/>
            <person name="Ghrayeb J."/>
            <person name="Chang N.T."/>
            <person name="Gallo R.C."/>
            <person name="Wong-Staal F."/>
        </authorList>
    </citation>
    <scope>NUCLEOTIDE SEQUENCE [GENOMIC RNA]</scope>
</reference>
<reference key="2">
    <citation type="journal article" date="1985" name="Nature">
        <title>Nucleic acid structure and expression of the human AIDS/lymphadenopathy retrovirus.</title>
        <authorList>
            <person name="Muesing M.A."/>
            <person name="Smith D.H."/>
            <person name="Cabradilla C.D."/>
            <person name="Benton C.V."/>
            <person name="Lasky L.A."/>
            <person name="Capon D.J."/>
        </authorList>
    </citation>
    <scope>NUCLEOTIDE SEQUENCE [GENOMIC DNA]</scope>
    <source>
        <strain>Isolate PV22</strain>
    </source>
</reference>
<reference key="3">
    <citation type="submission" date="1992-05" db="EMBL/GenBank/DDBJ databases">
        <authorList>
            <person name="Muesing M.A."/>
        </authorList>
    </citation>
    <scope>SEQUENCE REVISION</scope>
</reference>
<reference key="4">
    <citation type="journal article" date="1989" name="Arch. Biochem. Biophys.">
        <title>Recombinant HIV-1 reverse transcriptase: purification, primary structure, and polymerase/ribonuclease H activities.</title>
        <authorList>
            <person name="Mizrahi V."/>
            <person name="Lazarus G.M."/>
            <person name="Miles L.M."/>
            <person name="Meyers C.A."/>
            <person name="Debouck C."/>
        </authorList>
    </citation>
    <scope>PROTEIN SEQUENCE OF 600-607</scope>
    <scope>X-RAY CRYSTALLOGRAPHY (3.2 ANGSTROMS) OF 600-1159</scope>
    <scope>CATALYTIC ACTIVITY (REVERSE TRANSCRIPTASE/RIBONUCLEASE H)</scope>
    <scope>PROTEOLYTIC CLEAVAGE (GAG-POL POLYPROTEIN)</scope>
</reference>
<reference key="5">
    <citation type="journal article" date="1991" name="J. Biol. Chem.">
        <title>Human immunodeficiency virus reverse transcriptase displays a partially processive 3' to 5' endonuclease activity.</title>
        <authorList>
            <person name="DeStefano J.J."/>
            <person name="Buiser R.G."/>
            <person name="Mallaber L.M."/>
            <person name="Bambara R.A."/>
            <person name="Fay P.J."/>
        </authorList>
    </citation>
    <scope>CHARACTERIZATION OF RNASE H</scope>
</reference>
<reference key="6">
    <citation type="journal article" date="1991" name="FEBS Lett.">
        <title>Mutating P2 and P1 residues at cleavage junctions in the HIV-1 pol polyprotein. Effects on hydrolysis by HIV-1 proteinase.</title>
        <authorList>
            <person name="Jupp R.A."/>
            <person name="Phylip L.H."/>
            <person name="Mills J.S."/>
            <person name="Le Grice S.F.J."/>
            <person name="Kay J."/>
        </authorList>
    </citation>
    <scope>PROTEOLYTIC PROCESSING OF POLYPROTEIN</scope>
    <scope>MUTAGENESIS OF PHE-1039 AND LEU-1159</scope>
</reference>
<reference key="7">
    <citation type="journal article" date="1991" name="J. Mol. Biol.">
        <title>Mutations of a conserved residue within HIV-1 ribonuclease H affect its exo- and endonuclease activities.</title>
        <authorList>
            <person name="Wohrl B.M."/>
            <person name="Volkmann S."/>
            <person name="Moelling K."/>
        </authorList>
    </citation>
    <scope>MUTAGENESIS OF HIS-1138</scope>
</reference>
<reference key="8">
    <citation type="journal article" date="1996" name="Biochemistry">
        <title>Biochemical analysis of catalytically crucial aspartate mutants of human immunodeficiency virus type 1 reverse transcriptase.</title>
        <authorList>
            <person name="Kaushik N."/>
            <person name="Rege N."/>
            <person name="Yadav P.N.S."/>
            <person name="Sarafianos S.G."/>
            <person name="Modak M.J."/>
            <person name="Pandey V.N."/>
        </authorList>
    </citation>
    <scope>ACTIVE SITES OF REVERSE TRANSCRIPTASE</scope>
    <scope>MUTAGENESIS OF ASP-709; ASP-784 AND ASP-785</scope>
</reference>
<reference key="9">
    <citation type="journal article" date="1997" name="J. Biol. Chem.">
        <title>Mutations within the primer grip region of HIV-1 reverse transcriptase result in loss of RNase H function.</title>
        <authorList>
            <person name="Palaniappan C."/>
            <person name="Wisniewski M."/>
            <person name="Jacques P.S."/>
            <person name="Le Grice S.F."/>
            <person name="Fay P.J."/>
            <person name="Bambara R.A."/>
        </authorList>
    </citation>
    <scope>MUTAGENESIS OF GLU-823; PRO-824; PRO-825; PHE-826; LEU-827; TRP-828; MET-829; GLY-830; TYR-831; GLU-832 AND HIS-834</scope>
</reference>
<reference key="10">
    <citation type="journal article" date="1998" name="J. Mol. Biol.">
        <title>Effects of mutations in the polymerase domain on the polymerase, RNase H and strand transfer activities of human immunodeficiency virus type 1 reverse transcriptase.</title>
        <authorList>
            <person name="Gao H.-Q."/>
            <person name="Boyer P.L."/>
            <person name="Arnold E."/>
            <person name="Hughes S.H."/>
        </authorList>
    </citation>
    <scope>MUTAGENESIS OF PRO-651; PRO-654; LEU-673; SER-755; PRO-756; MET-783; ILE-856; GLY-861; LEU-863; TRP-865; LEU-878; ALA-898; LEU-902; LEU-909 AND GLU-1077</scope>
</reference>
<reference key="11">
    <citation type="journal article" date="1998" name="Biochemistry">
        <title>Loss of polymerase activity due to Tyr to Phe substitution in the YMDD motif of human immunodeficiency virus type-1 reverse transcriptase is compensated by Met to Val substitution within the same motif.</title>
        <authorList>
            <person name="Harris D."/>
            <person name="Yadav P.N.S."/>
            <person name="Pandey V.N."/>
        </authorList>
    </citation>
    <scope>MUTAGENESIS OF TYR-782; MET-783; ASP-784 AND ASP-785</scope>
</reference>
<reference key="12">
    <citation type="journal article" date="1998" name="J. Virol.">
        <title>Sequence requirements for removal of tRNA by an isolated human immunodeficiency virus type 1 RNase H domain.</title>
        <authorList>
            <person name="Smith C.M."/>
            <person name="Leon O."/>
            <person name="Smith J.S."/>
            <person name="Roth M.J."/>
        </authorList>
    </citation>
    <scope>FUNCTION OF RNASE H</scope>
</reference>
<reference key="13">
    <citation type="journal article" date="2000" name="Biochem. J.">
        <title>Mutational analysis of Lys65 of HIV-1 reverse transcriptase.</title>
        <authorList>
            <person name="Sluis-Cremer N."/>
            <person name="Arion D."/>
            <person name="Kaushik N."/>
            <person name="Lim H."/>
            <person name="Parniak M.A."/>
        </authorList>
    </citation>
    <scope>MUTAGENESIS OF LYS-664</scope>
</reference>
<reference key="14">
    <citation type="journal article" date="2000" name="Proc. Natl. Acad. Sci. U.S.A.">
        <title>Unique progressive cleavage mechanism of HIV reverse transcriptase RNase H.</title>
        <authorList>
            <person name="Wisniewski M."/>
            <person name="Balakrishnan M."/>
            <person name="Palaniappan C."/>
            <person name="Fay P.J."/>
            <person name="Bambara R.A."/>
        </authorList>
    </citation>
    <scope>CHARACTERIZATION OF RNASE H</scope>
</reference>
<reference key="15">
    <citation type="journal article" date="2001" name="J. Gen. Virol.">
        <title>Extended nucleocapsid protein is cleaved from the Gag-Pol precursor of human immunodeficiency virus type 1.</title>
        <authorList>
            <person name="Chen N."/>
            <person name="Morag A."/>
            <person name="Almog N."/>
            <person name="Blumenzweig I."/>
            <person name="Dreazin O."/>
            <person name="Kotler M."/>
        </authorList>
    </citation>
    <scope>RIBOSOMAL FRAMESHIFT</scope>
    <scope>PROTEOLYTIC PROCESSING OF POLYPROTEIN</scope>
    <scope>MUTAGENESIS OF PHE-440 AND PHE-500</scope>
</reference>
<reference key="16">
    <citation type="journal article" date="2001" name="J. Virol.">
        <title>Maintenance of the Gag/Gag-Pol ratio is important for human immunodeficiency virus type 1 RNA dimerization and viral infectivity.</title>
        <authorList>
            <person name="Shehu-Xhilaga M."/>
            <person name="Crowe S.M."/>
            <person name="Mak J."/>
        </authorList>
    </citation>
    <scope>GAG/GAG-POL RATIO</scope>
</reference>
<reference key="17">
    <citation type="journal article" date="2002" name="Ukr. Biokhim. Zh.">
        <title>Conformational changes in HIV-1 proteinase: effect of protonation of the active center on conformation of HIV-1 proteinase in water.</title>
        <authorList>
            <person name="Koval'skii D.B."/>
            <person name="Kanibolotskii D.S."/>
            <person name="Dubina V.N."/>
            <person name="Korneliuk A.I."/>
        </authorList>
    </citation>
    <scope>ACTIVE SITE OF PROTEASE</scope>
</reference>
<reference key="18">
    <citation type="journal article" date="2002" name="Biochemistry">
        <title>Substitution of conserved hydrophobic residues in motifs B and C of HIV-1 RT alters the geometry of its catalytic pocket.</title>
        <authorList>
            <person name="Sharma B."/>
            <person name="Kaushik N."/>
            <person name="Singh K."/>
            <person name="Kumar S."/>
            <person name="Pandey V.N."/>
        </authorList>
    </citation>
    <scope>MUTAGENESIS OF TRP-752; ILE-766; LEU-786 AND VAL-788</scope>
</reference>
<reference key="19">
    <citation type="journal article" date="2002" name="J. Biol. Chem.">
        <title>Mutational analysis of Tyr-501 of HIV-1 reverse transcriptase. Effects on ribonuclease H activity and inhibition of this activity by N-acylhydrazones.</title>
        <authorList>
            <person name="Arion D."/>
            <person name="Sluis-Cremer N."/>
            <person name="Min K.-L."/>
            <person name="Abram M.E."/>
            <person name="Fletcher R.S."/>
            <person name="Parniak M.A."/>
        </authorList>
    </citation>
    <scope>MUTAGENESIS OF TYR-1100</scope>
</reference>
<reference key="20">
    <citation type="journal article" date="2003" name="J. Mol. Biol.">
        <title>Role of residues in the tryptophan repeat motif for HIV-1 reverse transcriptase dimerization.</title>
        <authorList>
            <person name="Tachedjian G."/>
            <person name="Aronson H.-E."/>
            <person name="de los Santos M."/>
            <person name="Seehra J."/>
            <person name="McCoy J.M."/>
            <person name="Goff S.P."/>
        </authorList>
    </citation>
    <scope>DOMAIN TRYPTOPHAN REPEAT MOTIF</scope>
    <scope>MUTAGENESIS OF TRP-997; TRP-1000; TRP-1001; TYR-1004; TRP-1005; TRP-1009 AND TRP-1013</scope>
</reference>
<reference key="21">
    <citation type="journal article" date="2004" name="J. Mol. Biol.">
        <title>Recognition of internal cleavage sites by retroviral RNases H.</title>
        <authorList>
            <person name="Schultz S.J."/>
            <person name="Zhang M."/>
            <person name="Champoux J.J."/>
        </authorList>
    </citation>
    <scope>CHARACTERIZATION OF RNASE H</scope>
</reference>
<reference key="22">
    <citation type="journal article" date="2005" name="Proteins">
        <title>Relationship between enzyme activity and dimeric structure of recombinant HIV-1 reverse transcriptase.</title>
        <authorList>
            <person name="Tachedjian G."/>
            <person name="Radzio J."/>
            <person name="Sluis-Cremer N."/>
        </authorList>
    </citation>
    <scope>CHARACTERIZATION OF REVERSE TRANSCRIPTASE</scope>
    <scope>MUTAGENESIS OF TRP-1000</scope>
</reference>
<reference key="23">
    <citation type="journal article" date="2005" name="Nucleic Acids Res.">
        <title>Nucleotide modification at the gamma-phosphate leads to the improved fidelity of HIV-1 reverse transcriptase.</title>
        <authorList>
            <person name="Mulder B.A."/>
            <person name="Anaya S."/>
            <person name="Yu P."/>
            <person name="Lee K.W."/>
            <person name="Nguyen A."/>
            <person name="Murphy J."/>
            <person name="Willson R."/>
            <person name="Briggs J.M."/>
            <person name="Gao X."/>
            <person name="Hardin S.H."/>
        </authorList>
    </citation>
    <scope>CHARACTERIZATION OF RNASE H</scope>
</reference>
<reference key="24">
    <citation type="journal article" date="2005" name="J. Virol.">
        <title>Virion instability of human immunodeficiency virus type 1 reverse transcriptase (RT) mutated in the protease cleavage site between RT p51 and the RT RNase H domain.</title>
        <authorList>
            <person name="Abram M.E."/>
            <person name="Parniak M.A."/>
        </authorList>
    </citation>
    <scope>MUTAGENESIS OF ALA-1036; GLU-1037; THR-1038; PHE-1039; TYR-1040 AND VAL-1041</scope>
</reference>
<reference key="25">
    <citation type="journal article" date="2007" name="AIDS">
        <title>Arginine methylation of the HIV-1 nucleocapsid protein results in its diminished function.</title>
        <authorList>
            <person name="Invernizzi C.F."/>
            <person name="Xie B."/>
            <person name="Frankel F.A."/>
            <person name="Feldhammer M."/>
            <person name="Roy B.B."/>
            <person name="Richard S."/>
            <person name="Wainberg M.A."/>
        </authorList>
    </citation>
    <scope>METHYLATION AT ARG-387 AND ARG-409 BY HUMAN PRMT6</scope>
    <scope>INTERACTION WITH HUMAN PRMT6</scope>
</reference>
<reference key="26">
    <citation type="journal article" date="1996" name="Curr. Top. Microbiol. Immunol.">
        <title>Proteolytic processing and particle maturation.</title>
        <authorList>
            <person name="Vogt V.M."/>
        </authorList>
    </citation>
    <scope>REVIEW</scope>
</reference>
<reference key="27">
    <citation type="journal article" date="1999" name="J. Mol. Biol.">
        <title>Structural biology of HIV.</title>
        <authorList>
            <person name="Turner B.G."/>
            <person name="Summers M.F."/>
        </authorList>
    </citation>
    <scope>REVIEW</scope>
</reference>
<reference key="28">
    <citation type="journal article" date="2001" name="Annu. Rev. Genet.">
        <title>Mechanisms of retroviral recombination.</title>
        <authorList>
            <person name="Negroni M."/>
            <person name="Buc H."/>
        </authorList>
    </citation>
    <scope>REVIEW</scope>
</reference>
<reference key="29">
    <citation type="journal article" date="2002" name="Genome Biol.">
        <title>Retroviral proteases.</title>
        <authorList>
            <person name="Dunn B.M."/>
            <person name="Goodenow M.M."/>
            <person name="Gustchina A."/>
            <person name="Wlodawer A."/>
        </authorList>
    </citation>
    <scope>REVIEW</scope>
</reference>
<reference key="30">
    <citation type="journal article" date="2003" name="Biochim. Biophys. Acta">
        <title>Role of HIV-1 Gag domains in viral assembly.</title>
        <authorList>
            <person name="Scarlata S."/>
            <person name="Carter C."/>
        </authorList>
    </citation>
    <scope>REVIEW</scope>
</reference>
<reference key="31">
    <citation type="journal article" date="1989" name="Science">
        <title>Molecular modeling of the HIV-1 protease and its substrate binding site.</title>
        <authorList>
            <person name="Weber I.T."/>
            <person name="Miller M."/>
            <person name="Jaskolski M."/>
            <person name="Leis J."/>
            <person name="Skalka A.M."/>
            <person name="Wlodawer A."/>
        </authorList>
    </citation>
    <scope>3D-STRUCTURE MODELING OF PROTEASE DOMAIN</scope>
</reference>
<reference key="32">
    <citation type="journal article" date="1990" name="Science">
        <title>Design, activity, and 2.8 A crystal structure of a C2 symmetric inhibitor complexed to HIV-1 protease.</title>
        <authorList>
            <person name="Erickson J."/>
            <person name="Neidhart D.J."/>
            <person name="Vandrie J."/>
            <person name="Kempf D.J."/>
            <person name="Wang X.C."/>
            <person name="Norbeck D.W."/>
            <person name="Plattner J.J."/>
            <person name="Rittenhouse J.W."/>
            <person name="Turon M."/>
            <person name="Wideburg N.E."/>
            <person name="Kohlbrenner W.E."/>
            <person name="Simmer R."/>
            <person name="Helfrich R."/>
            <person name="Paul D.A."/>
            <person name="Knigge M."/>
        </authorList>
    </citation>
    <scope>X-RAY CRYSTALLOGRAPHY (2.8 ANGSTROMS) OF 501-599 IN COMPLEX WITH A C2 SYMMETRIC INHIBITOR</scope>
</reference>
<reference key="33">
    <citation type="journal article" date="1991" name="Science">
        <title>Crystal structure of the ribonuclease H domain of HIV-1 reverse transcriptase.</title>
        <authorList>
            <person name="Davies J.F. II"/>
            <person name="Hostomska Z."/>
            <person name="Hostomsky Z."/>
            <person name="Jordan S.R."/>
            <person name="Matthews D.A."/>
        </authorList>
    </citation>
    <scope>X-RAY CRYSTALLOGRAPHY (2.4 ANGSTROMS) OF 1026-1161</scope>
</reference>
<reference key="34">
    <citation type="journal article" date="1991" name="J. Biol. Chem.">
        <title>A recombinant ribonuclease H domain of HIV-1 reverse transcriptase that is enzymatically active.</title>
        <authorList>
            <person name="Evans D.B."/>
            <person name="Brawn K."/>
            <person name="Deibel M.R. Jr."/>
            <person name="Tarpley W.G."/>
            <person name="Sharma S.K."/>
        </authorList>
    </citation>
    <scope>X-RAY CRYSTALLOGRAPHY (2.8 ANGSTROMS) OF 1026-1159</scope>
</reference>
<reference key="35">
    <citation type="journal article" date="1991" name="J. Biol. Chem.">
        <title>Proteolytic release and crystallization of the RNase H domain of human immunodeficiency virus type 1 reverse transcriptase.</title>
        <authorList>
            <person name="Hostomska Z."/>
            <person name="Matthews D.A."/>
            <person name="Davies J.F. II"/>
            <person name="Nodes B.R."/>
            <person name="Hostomsky Z."/>
        </authorList>
    </citation>
    <scope>X-RAY CRYSTALLOGRAPHY (2.4 ANGSTROMS) OF 1026-1161</scope>
</reference>
<reference key="36">
    <citation type="journal article" date="1992" name="Science">
        <title>Crystal structure at 3.5-A resolution of HIV-1 reverse transcriptase complexed with an inhibitor.</title>
        <authorList>
            <person name="Kohlstaedt L.A."/>
            <person name="Wang J."/>
            <person name="Friedman J.M."/>
            <person name="Rice P.A."/>
            <person name="Steitz T.A."/>
        </authorList>
    </citation>
    <scope>X-RAY CRYSTALLOGRAPHY (3.5 ANGSTROMS) OF 600-1155 IN COMPLEX WITH AN INHIBITOR</scope>
</reference>
<reference key="37">
    <citation type="journal article" date="1992" name="Nature">
        <title>Structure of HIV-1 reverse transcriptase/DNA complex at 7 A resolution showing active site locations.</title>
        <authorList>
            <person name="Arnold E."/>
            <person name="Jacobo-Molina A."/>
            <person name="Nanni R.G."/>
            <person name="Williams R.L."/>
            <person name="Lu X."/>
            <person name="Ding J."/>
            <person name="Clark A.D. Jr."/>
            <person name="Zhang A."/>
            <person name="Ferris A.L."/>
            <person name="Clark P."/>
            <person name="Hizi A."/>
            <person name="Hughes S.H."/>
        </authorList>
    </citation>
    <scope>X-RAY CRYSTALLOGRAPHY (2.8 ANGSTROMS) OF 600-1157</scope>
</reference>
<reference key="38">
    <citation type="journal article" date="1993" name="J. Med. Chem.">
        <title>A series of penicillin-derived C2-symmetric inhibitors of HIV-1 proteinase: structural and modeling studies.</title>
        <authorList>
            <person name="Wonacott A."/>
            <person name="Cooke R."/>
            <person name="Hayes F.R."/>
            <person name="Hann M.M."/>
            <person name="Jhoti H."/>
            <person name="McMeekin P."/>
            <person name="Mistry A."/>
            <person name="Murray-Rust P."/>
            <person name="Singh O.M."/>
            <person name="Weir M.P."/>
        </authorList>
    </citation>
    <scope>X-RAY CRYSTALLOGRAPHY (2.8 ANGSTROMS) OF 501-599</scope>
</reference>
<reference key="39">
    <citation type="journal article" date="1993" name="J. Med. Chem.">
        <title>A novel constrained reduced-amide inhibitor of HIV-1 protease derived from the sequential incorporation of gamma-turn mimetics into a model substrate.</title>
        <authorList>
            <person name="Newlander K.A."/>
            <person name="Callahan J.F."/>
            <person name="Moore M.L."/>
            <person name="Tomaszek T.A. Jr."/>
            <person name="Huffman W.F."/>
        </authorList>
    </citation>
    <scope>X-RAY CRYSTALLOGRAPHY (2.3 ANGSTROMS) OF 501-599 IN COMPLEX WITH A NOVEL GAMMA-TURN MIMETIC INHIBITOR</scope>
</reference>
<reference key="40">
    <citation type="journal article" date="1993" name="Proc. Natl. Acad. Sci. U.S.A.">
        <title>Crystal structure of human immunodeficiency virus type 1 reverse transcriptase complexed with double-stranded DNA at 3.0-A resolution shows bent DNA.</title>
        <authorList>
            <person name="Jacobo-Molina A."/>
            <person name="Ding J."/>
            <person name="Nanni R.G."/>
            <person name="Clark A.D. Jr."/>
            <person name="Lu X."/>
            <person name="Tantillo C."/>
            <person name="Williams R.L."/>
            <person name="Kamer G."/>
            <person name="Ferris A.L."/>
            <person name="Clark P."/>
            <person name="Hizi A."/>
            <person name="Hughes S.H."/>
            <person name="Arnold E."/>
        </authorList>
    </citation>
    <scope>X-RAY CRYSTALLOGRAPHY (3.0 ANGSTROMS) OF 600-1155</scope>
    <scope>SUBUNIT (REVERSE TRANSCRIPTASE/RIBONUCLEASE H)</scope>
</reference>
<reference key="41">
    <citation type="journal article" date="1994" name="Proc. Natl. Acad. Sci. U.S.A.">
        <title>Structure of the binding site for nonnucleoside inhibitors of the reverse transcriptase of human immunodeficiency virus type 1.</title>
        <authorList>
            <person name="Smerdon S.J."/>
            <person name="Jager J."/>
            <person name="Wang J."/>
            <person name="Kohlstaedt L.A."/>
            <person name="Chirino A.J."/>
            <person name="Friedman J.M."/>
            <person name="Rice P.A."/>
            <person name="Steitz T.A."/>
        </authorList>
    </citation>
    <scope>X-RAY CRYSTALLOGRAPHY (2.8 ANGSTROMS) OF 600-1159</scope>
</reference>
<reference key="42">
    <citation type="journal article" date="1995" name="Structure">
        <title>Comparative analysis of the X-ray structures of HIV-1 and HIV-2 proteases in complex with CGP 53820, a novel pseudosymmetric inhibitor.</title>
        <authorList>
            <person name="Priestle J.P."/>
            <person name="Fassler A."/>
            <person name="Rosel J."/>
            <person name="Tintelnot-Blomley M."/>
            <person name="Strop P."/>
            <person name="Gruetter M.G."/>
        </authorList>
    </citation>
    <scope>X-RAY CRYSTALLOGRAPHY (2.2 ANGSTROMS) OF 501-599 IN COMPLEX WITH A NOVEL PSEUDOSYMMETRIC INHIBITOR</scope>
</reference>
<reference key="43">
    <citation type="journal article" date="1995" name="Nat. Struct. Biol.">
        <title>Structure of HIV-1 RT/TIBO R 86183 complex reveals similarity in the binding of diverse nonnucleoside inhibitors.</title>
        <authorList>
            <person name="Ding J."/>
            <person name="Das K."/>
            <person name="Moereels H."/>
            <person name="Koymans L."/>
            <person name="Andries K."/>
            <person name="Janssen P.A."/>
            <person name="Hughes S.H."/>
            <person name="Arnold E."/>
        </authorList>
    </citation>
    <scope>X-RAY CRYSTALLOGRAPHY (2.7 ANGSTROMS) OF 600-1155 IN COMPLEX WITH A NONNUCLEOSIDE INHIBITOR</scope>
</reference>
<reference key="44">
    <citation type="journal article" date="1995" name="Structure">
        <title>Structure of HIV-1 reverse transcriptase in a complex with the non-nucleoside inhibitor alpha-APA R 95845 at 2.8-A resolution.</title>
        <authorList>
            <person name="Ding J."/>
            <person name="Das K."/>
            <person name="Tantillo C."/>
            <person name="Zhang W."/>
            <person name="Clark A.D. Jr."/>
            <person name="Jessen S."/>
            <person name="Lu X."/>
            <person name="Hsiou Y."/>
            <person name="Jacobo-Molina A."/>
            <person name="Andries K."/>
            <person name="Et A.L."/>
        </authorList>
    </citation>
    <scope>X-RAY CRYSTALLOGRAPHY (2.8 ANGSTROMS) OF 600-1157 IN COMPLEX WITH A NON-NUCLEOSIDE INHIBITOR</scope>
</reference>
<reference key="45">
    <citation type="journal article" date="1995" name="Proc. Natl. Acad. Sci. U.S.A.">
        <title>The structure of unliganded reverse transcriptase from the human immunodeficiency virus type 1.</title>
        <authorList>
            <person name="Rodgers D.W."/>
            <person name="Gamblin S.J."/>
            <person name="Harris B.A."/>
            <person name="Ray S."/>
            <person name="Culp J.S."/>
            <person name="Hellmig B."/>
            <person name="Woolf D.J."/>
            <person name="Debouck C."/>
            <person name="Harrison S.C."/>
        </authorList>
    </citation>
    <scope>X-RAY CRYSTALLOGRAPHY (3.2 ANGSTROMS) OF 600-1159</scope>
</reference>
<reference key="46">
    <citation type="journal article" date="1995" name="Nat. Struct. Biol.">
        <title>The DNA-binding domain of HIV-1 integrase has an SH3-like fold.</title>
        <authorList>
            <person name="Eijkelenboom A.P.A.M."/>
            <person name="Lutzke R.A."/>
            <person name="Boelens R."/>
            <person name="Plasterk R.H.A."/>
            <person name="Kaptein R."/>
            <person name="Hard K."/>
        </authorList>
    </citation>
    <scope>STRUCTURE BY NMR OF 1379-1429</scope>
</reference>
<reference key="47">
    <citation type="journal article" date="1995" name="Biochemistry">
        <title>Effect of point mutations on the kinetics and the inhibition of human immunodeficiency virus type 1 protease: relationship to drug resistance.</title>
        <authorList>
            <person name="Lin Y.Z."/>
            <person name="Lin X.L."/>
            <person name="Hong L."/>
            <person name="Foundling S.I."/>
            <person name="Heinrikson R.L."/>
            <person name="Thaisrivongs S."/>
            <person name="Leelamanit W."/>
            <person name="Raterman D."/>
            <person name="Shah M."/>
            <person name="Dunn B.M."/>
            <person name="Tang J."/>
        </authorList>
    </citation>
    <scope>X-RAY CRYSTALLOGRAPHY (2.3 ANGSTROMS) OF 501-599 IN COMPLEX WITH THE PEPTIDIC INHIBITOR U-89360E</scope>
</reference>
<reference key="48">
    <citation type="journal article" date="1996" name="Structure">
        <title>Structure of unliganded HIV-1 reverse transcriptase at 2.7-A resolution: implications of conformational changes for polymerization and inhibition mechanisms.</title>
        <authorList>
            <person name="Hsiou Y."/>
            <person name="Ding J."/>
            <person name="Das K."/>
            <person name="Clark A.D. Jr."/>
            <person name="Hughes S.H."/>
            <person name="Arnold E."/>
        </authorList>
    </citation>
    <scope>X-RAY CRYSTALLOGRAPHY (2.7 ANGSTROMS) OF 600-1155</scope>
    <scope>SUBUNIT (REVERSE TRANSCRIPTASE/RIBONUCLEASE H)</scope>
</reference>
<reference key="49">
    <citation type="journal article" date="1997" name="J. Med. Chem.">
        <title>Unexpected binding mode of a cyclic sulfamide HIV-1 protease inhibitor.</title>
        <authorList>
            <person name="Backbro K."/>
            <person name="Lowgren S."/>
            <person name="Osterlund K."/>
            <person name="Atepo J."/>
            <person name="Unge T."/>
            <person name="Hulten J."/>
            <person name="Bonham N.M."/>
            <person name="Schaal W."/>
            <person name="Karlen A."/>
            <person name="Hallberg A."/>
        </authorList>
    </citation>
    <scope>X-RAY CRYSTALLOGRAPHY (2.0 ANGSTROMS) OF 501-599 IN COMPLEX WITH A SULFAMIDE AND A UREA DERIVATIVE</scope>
</reference>
<reference key="50">
    <citation type="journal article" date="1997" name="Biochemistry">
        <title>Molecular basis of HIV-1 protease drug resistance: structural analysis of mutant proteases complexed with cyclic urea inhibitors.</title>
        <authorList>
            <person name="Ala P.J."/>
            <person name="Huston E.E."/>
            <person name="Klabe R.M."/>
            <person name="McCabe D.D."/>
            <person name="Duke J.L."/>
            <person name="Rizzo C.J."/>
            <person name="Korant B.D."/>
            <person name="DeLoskey R.J."/>
            <person name="Lam P.Y.S."/>
            <person name="Hodge C.N."/>
            <person name="Chang C.-H."/>
        </authorList>
    </citation>
    <scope>X-RAY CRYSTALLOGRAPHY (1.9 ANGSTROMS) OF 502-599 IN COMPLEX WITH A CYCLIC UREA INHIBITOR</scope>
</reference>
<reference key="51">
    <citation type="journal article" date="1997" name="FEBS Lett.">
        <title>Structure of a G48H mutant of HIV-1 protease explains how glycine-48 replacements produce mutants resistant to inhibitor drugs.</title>
        <authorList>
            <person name="Hong L."/>
            <person name="Zhang X.-J."/>
            <person name="Foundling S.I."/>
            <person name="Hartsuck J.A."/>
            <person name="Tang J."/>
        </authorList>
    </citation>
    <scope>X-RAY CRYSTALLOGRAPHY (2.3 ANGSTROMS) OF 501-599 IN COMPLEX WITH THE PEPTIDIC INHIBITOR U-89360E</scope>
</reference>
<reference key="52">
    <citation type="journal article" date="1997" name="J. Med. Chem.">
        <title>An orally bioavailable pyrrolinone inhibitor of HIV-1 protease: computational analysis and X-ray crystal structure of the enzyme complex.</title>
        <authorList>
            <person name="Smith A.B. III"/>
            <person name="Hirschmann R."/>
            <person name="Pasternak A."/>
            <person name="Yao W."/>
            <person name="Sprengeler P.A."/>
            <person name="Holloway M.K."/>
            <person name="Kuo L.C."/>
            <person name="Chen Z."/>
            <person name="Darke P.L."/>
            <person name="Schleif W.A."/>
        </authorList>
    </citation>
    <scope>X-RAY CRYSTALLOGRAPHY (2.0 ANGSTROMS) OF 501-599</scope>
</reference>
<reference key="53">
    <citation type="journal article" date="1998" name="Protein Sci.">
        <title>Active-site mobility in human immunodeficiency virus, type 1, protease as demonstrated by crystal structure of A28S mutant.</title>
        <authorList>
            <person name="Hong L."/>
            <person name="Hartsuck J.A."/>
            <person name="Foundling S.I."/>
            <person name="Ermolieff J."/>
            <person name="Tang J."/>
        </authorList>
    </citation>
    <scope>X-RAY CRYSTALLOGRAPHY (2.0 ANGSTROMS) OF 501-599 IN COMPLEX WITH A PEPTIDIC INHIBITOR</scope>
</reference>
<reference key="54">
    <citation type="journal article" date="1998" name="Science">
        <title>Structure of a covalently trapped catalytic complex of HIV-1 reverse transcriptase: implications for drug resistance.</title>
        <authorList>
            <person name="Huang H."/>
            <person name="Chopra R."/>
            <person name="Verdine G.L."/>
            <person name="Harrison S.C."/>
        </authorList>
    </citation>
    <scope>X-RAY CRYSTALLOGRAPHY (3.2 ANGSTROMS) OF 588-1027</scope>
</reference>
<reference key="55">
    <citation type="journal article" date="1998" name="EMBO J.">
        <title>The structure of HIV-1 reverse transcriptase complexed with an RNA pseudoknot inhibitor.</title>
        <authorList>
            <person name="Jaeger J."/>
            <person name="Restle T."/>
            <person name="Steitz T.A."/>
        </authorList>
    </citation>
    <scope>X-RAY CRYSTALLOGRAPHY (4.75 ANGSTROMS) OF 600-1153 IN COMPLEX WITH AN RNA PSEUDOKNOT INHIBITOR</scope>
</reference>
<reference key="56">
    <citation type="journal article" date="1998" name="J. Mol. Biol.">
        <title>Structures of Tyr188Leu mutant and wild-type HIV-1 reverse transcriptase complexed with the non-nucleoside inhibitor HBY 097: inhibitor flexibility is a useful design feature for reducing drug resistance.</title>
        <authorList>
            <person name="Hsiou Y."/>
            <person name="Das K."/>
            <person name="Ding J."/>
            <person name="Clark A.D. Jr."/>
            <person name="Kleim J.P."/>
            <person name="Rosner M."/>
            <person name="Winkler I."/>
            <person name="Riess G."/>
            <person name="Hughes S.H."/>
            <person name="Arnold E."/>
        </authorList>
    </citation>
    <scope>X-RAY CRYSTALLOGRAPHY (3.1 ANGSTROMS) OF 600-1155 IN COMPLEX WITH A NON-NUCLEOSIDE INHIBITOR</scope>
</reference>
<reference key="57">
    <citation type="journal article" date="1999" name="Proc. Natl. Acad. Sci. U.S.A.">
        <title>Lamivudine (3TC) resistance in HIV-1 reverse transcriptase involves steric hindrance with beta-branched amino acids.</title>
        <authorList>
            <person name="Sarafianos S.G."/>
            <person name="Das K."/>
            <person name="Clark A.D. Jr."/>
            <person name="Ding J."/>
            <person name="Boyer P.L."/>
            <person name="Hughes S.H."/>
            <person name="Arnold E."/>
        </authorList>
    </citation>
    <scope>X-RAY CRYSTALLOGRAPHY (3.5 ANGSTROMS) OF 600-1157</scope>
</reference>
<reference key="58">
    <citation type="journal article" date="2000" name="J. Med. Chem.">
        <title>Urea-PETT compounds as a new class of HIV-1 reverse transcriptase inhibitors. 3. Synthesis and further structure-activity relationship studies of PETT analogues.</title>
        <authorList>
            <person name="Hogberg M."/>
            <person name="Sahlberg C."/>
            <person name="Engelhardt P."/>
            <person name="Noreen R."/>
            <person name="Kangasmetsa J."/>
            <person name="Johansson N.G."/>
            <person name="Oberg B."/>
            <person name="Vrang L."/>
            <person name="Zhang H."/>
            <person name="Sahlberg B.L."/>
            <person name="Unge T."/>
            <person name="Lovgren S."/>
            <person name="Fridborg K."/>
            <person name="Backbro K."/>
        </authorList>
    </citation>
    <scope>X-RAY CRYSTALLOGRAPHY (2.73 ANGSTROMS) OF 600-1156</scope>
</reference>
<reference key="59">
    <citation type="journal article" date="2001" name="EMBO J.">
        <title>Crystal structure of HIV-1 reverse transcriptase in complex with a polypurine tract RNA:DNA.</title>
        <authorList>
            <person name="Sarafianos S.G."/>
            <person name="Das K."/>
            <person name="Tantillo C."/>
            <person name="Clark A.D. Jr."/>
            <person name="Ding J."/>
            <person name="Whitcomb J.M."/>
            <person name="Boyer P.L."/>
            <person name="Hughes S.H."/>
            <person name="Arnold E."/>
        </authorList>
    </citation>
    <scope>X-RAY CRYSTALLOGRAPHY (3.0 ANGSTROMS) OF 600-1152 IN COMPLEX WITH AN OLIGONUCLEOTIDE</scope>
    <scope>ACTIVE SITES OF RNASE H</scope>
</reference>
<reference key="60">
    <citation type="journal article" date="2001" name="J. Mol. Biol.">
        <title>The Lys103Asn mutation of HIV-1 RT: a novel mechanism of drug resistance.</title>
        <authorList>
            <person name="Hsiou Y."/>
            <person name="Ding J."/>
            <person name="Das K."/>
            <person name="Clark A.D. Jr."/>
            <person name="Boyer P.L."/>
            <person name="Lewi P."/>
            <person name="Janssen P.A."/>
            <person name="Kleim J.P."/>
            <person name="Rosner M."/>
            <person name="Hughes S.H."/>
            <person name="Arnold E."/>
        </authorList>
    </citation>
    <scope>X-RAY CRYSTALLOGRAPHY (3.0 ANGSTROMS) OF 600-1159</scope>
</reference>
<reference key="61">
    <citation type="journal article" date="2002" name="EMBO J.">
        <title>Structures of HIV-1 reverse transcriptase with pre- and post-translocation AZTMP-terminated DNA.</title>
        <authorList>
            <person name="Sarafianos S.G."/>
            <person name="Clark A.D. Jr."/>
            <person name="Das K."/>
            <person name="Tuske S."/>
            <person name="Birktoft J.J."/>
            <person name="Ilankumaran P."/>
            <person name="Ramesha A.R."/>
            <person name="Sayer J.M."/>
            <person name="Jerina D.M."/>
            <person name="Boyer P.L."/>
            <person name="Hughes S.H."/>
            <person name="Arnold E."/>
        </authorList>
    </citation>
    <scope>X-RAY CRYSTALLOGRAPHY (3.1 ANGSTROMS) OF 600-1157</scope>
</reference>
<reference key="62">
    <citation type="journal article" date="2002" name="Eur. J. Biochem.">
        <title>Structural basis for the inhibitory efficacy of efavirenz (DMP-266), MSC194 and PNU142721 towards the HIV-1 RT K103N mutant.</title>
        <authorList>
            <person name="Lindberg J."/>
            <person name="Sigurdsson S."/>
            <person name="Lowgren S."/>
            <person name="Andersson H.O."/>
            <person name="Sahlberg C."/>
            <person name="Noreen R."/>
            <person name="Fridborg K."/>
            <person name="Zhang H."/>
            <person name="Unge T."/>
        </authorList>
    </citation>
    <scope>X-RAY CRYSTALLOGRAPHY (3.0 ANGSTROMS) OF 600-1159 IN COMPLEX WITH EFIVARENZ</scope>
</reference>
<reference key="63">
    <citation type="journal article" date="2003" name="Eur. J. Biochem.">
        <title>Optimization of P1-P3 groups in symmetric and asymmetric HIV-1 protease inhibitors.</title>
        <authorList>
            <person name="Andersson H.O."/>
            <person name="Fridborg K."/>
            <person name="Lowgren S."/>
            <person name="Alterman M."/>
            <person name="Muhlman A."/>
            <person name="Bjorsne M."/>
            <person name="Garg N."/>
            <person name="Kvarnstrom I."/>
            <person name="Schaal W."/>
            <person name="Classon B."/>
            <person name="Karlen A."/>
            <person name="Danielsson U.H."/>
            <person name="Ahlsen G."/>
            <person name="Nillroth U."/>
            <person name="Vrang L."/>
            <person name="Oberg B."/>
            <person name="Samuelsson B."/>
            <person name="Hallberg A."/>
            <person name="Unge T."/>
        </authorList>
    </citation>
    <scope>X-RAY CRYSTALLOGRAPHY (1.81 ANGSTROMS) OF 501-599</scope>
</reference>
<reference key="64">
    <citation type="journal article" date="2003" name="J. Med. Chem.">
        <title>Design, synthesis, and biological evaluation of monopyrrolinone-based HIV-1 protease inhibitors.</title>
        <authorList>
            <person name="Smith A.B. III"/>
            <person name="Cantin L.D."/>
            <person name="Pasternak A."/>
            <person name="Guise-Zawacki L."/>
            <person name="Yao W."/>
            <person name="Charnley A.K."/>
            <person name="Barbosa J."/>
            <person name="Sprengeler P.A."/>
            <person name="Hirschmann R."/>
            <person name="Munshi S."/>
            <person name="Olsen D.B."/>
            <person name="Schleif W.A."/>
            <person name="Kuo L.C."/>
        </authorList>
    </citation>
    <scope>X-RAY CRYSTALLOGRAPHY (2.0 ANGSTROMS) OF 501-599 IN COMPLEX WITH MONOPYRROLINONE-BASED INHIBITORS LDC271 AND LGZ479</scope>
</reference>
<reference key="65">
    <citation type="journal article" date="2004" name="Eur. J. Biochem.">
        <title>Symmetric fluoro-substituted diol-based HIV protease inhibitors. Ortho-fluorinated and meta-fluorinated P1/P1'-benzyloxy side groups significantly improve the antiviral activity and preserve binding efficacy.</title>
        <authorList>
            <person name="Lindberg J."/>
            <person name="Pyring D."/>
            <person name="Lowgren S."/>
            <person name="Rosenquist A."/>
            <person name="Zuccarello G."/>
            <person name="Kvarnstrom I."/>
            <person name="Zhang H."/>
            <person name="Vrang L."/>
            <person name="Classon B."/>
            <person name="Hallberg A."/>
            <person name="Samuelsson B."/>
            <person name="Unge T."/>
        </authorList>
    </citation>
    <scope>X-RAY CRYSTALLOGRAPHY (1.79 ANGSTROMS) OF 501-599</scope>
</reference>
<reference key="66">
    <citation type="journal article" date="2004" name="J. Virol.">
        <title>Nonnucleoside inhibitor binding affects the interactions of the fingers subdomain of human immunodeficiency virus type 1 reverse transcriptase with DNA.</title>
        <authorList>
            <person name="Peletskaya E.N."/>
            <person name="Kogon A.A."/>
            <person name="Tuske S."/>
            <person name="Arnold E."/>
            <person name="Hughes S.H."/>
        </authorList>
    </citation>
    <scope>X-RAY CRYSTALLOGRAPHY (2.8 ANGSTROMS) OF 600-1157</scope>
</reference>
<reference key="67">
    <citation type="journal article" date="2004" name="Nat. Struct. Mol. Biol.">
        <title>Structures of HIV-1 RT-DNA complexes before and after incorporation of the anti-AIDS drug tenofovir.</title>
        <authorList>
            <person name="Tuske S."/>
            <person name="Sarafianos S.G."/>
            <person name="Clark A.D. Jr."/>
            <person name="Ding J."/>
            <person name="Naeger L.K."/>
            <person name="White K.L."/>
            <person name="Miller M.D."/>
            <person name="Gibbs C.S."/>
            <person name="Boyer P.L."/>
            <person name="Clark P."/>
            <person name="Wang G."/>
            <person name="Gaffney B.L."/>
            <person name="Jones R.A."/>
            <person name="Jerina D.M."/>
            <person name="Hughes S.H."/>
            <person name="Arnold E."/>
        </authorList>
    </citation>
    <scope>X-RAY CRYSTALLOGRAPHY (3.1 ANGSTROMS) OF 600-1157 IN COMPLEX WITH DNA BOUND TO TENOFOVIR</scope>
</reference>
<reference key="68">
    <citation type="journal article" date="2004" name="Bioorg. Med. Chem. Lett.">
        <title>Synthesis and antiviral activity of P1' arylsulfonamide azacyclic urea HIV protease inhibitors.</title>
        <authorList>
            <person name="Huang P.P."/>
            <person name="Randolph J.T."/>
            <person name="Klein L.L."/>
            <person name="Vasavanonda S."/>
            <person name="Dekhtyar T."/>
            <person name="Stoll V.S."/>
            <person name="Kempf D.J."/>
        </authorList>
    </citation>
    <scope>X-RAY CRYSTALLOGRAPHY (1.3 ANGSTROMS) OF 501-599 IN COMPLEX WITH ARYLSULFONAMIDE AZACYCLIC UREA INHIBITORS</scope>
</reference>
<reference key="69">
    <citation type="journal article" date="2005" name="Bioorg. Med. Chem. Lett.">
        <title>Oximinoarylsulfonamides as potent HIV protease inhibitors.</title>
        <authorList>
            <person name="Yeung C.M."/>
            <person name="Klein L.L."/>
            <person name="Flentge C.A."/>
            <person name="Randolph J.T."/>
            <person name="Zhao C."/>
            <person name="Sun M."/>
            <person name="Dekhtyar T."/>
            <person name="Stoll V.S."/>
            <person name="Kempf D.J."/>
        </authorList>
    </citation>
    <scope>X-RAY CRYSTALLOGRAPHY (3.0 ANGSTROMS) OF 501-599 IN COMPLEX WITH OXIMINOARYLSULFONAMIDE INHIBITOR</scope>
</reference>
<sequence>MGARASVLSGGELDRWEKIRLRPGGKKKYKLKHIVWASRELERFAVNPGLLETSEGCRQILGQLQPSLQTGSEELRSLYNTVATLYCVHQRIEIKDTKEALDKIEEEQNKSKKKAQQAAADTGHSSQVSQNYPIVQNIQGQMVHQAISPRTLNAWVKVVEEKAFSPEVIPMFSALSEGATPQDLNTMLNTVGGHQAAMQMLKETINEEAAEWDRVHPVHAGPIAPGQMREPRGSDIAGTTSTLQEQIGWMTNNPPIPVGEIYKRWIILGLNKIVRMYSPTSILDIRQGPKEPFRDYVDRFYKTLRAEQASQEVKNWMTETLLVQNANPDCKTILKALGPAATLEEMMTACQGVGGPGHKARVLAEAMSQVTNTATIMMQRGNFRNQRKMVKCFNCGKEGHTARNCRAPRKKGCWKCGKEGHQMKDCTERQANFLREDLAFLQGKAREFSSEQTRANSPTISSEQTRANSPTRRELQVWGRDNNSPSEAGADRQGTVSFNFPQITLWQRPLVTIKIGGQLKEALLDTGADDTVLEEMSLPGRWKPKMIGGIGGFIKVRQYDQILIEICGHKAIGTVLVGPTPVNIIGRNLLTQIGCTLNFPISPIETVPVKLKPGMDGPKVKQWPLTEEKIKALVEICTEMEKEGKISKIGPENPYNTPVFAIKKKDSTKWRKLVDFRELNKRTQDFWEVQLGIPHPAGLKKKKSVTVLDVGDAYFSVPLDEDFRKYTAFTIPSINNETPGIRYQYNVLPQGWKGSPAIFQSSMTKILEPFKKQNPDIVIYQYMDDLYVGSDLEIGQHRTKIEELRQHLLRWGLTTPDKKHQKEPPFLWMGYELHPDKWTVQPIVLPEKDSWTVNDIQKLVGKLNWASQIYPGIKVRQLCKLLRGTKALTEVIPLTEEAELELAENREILKEPVHGVYYDPSKDLIAEIQKQGQGQWTYQIYQEPFKNLKTGKYARMRGAHTNDVKQLTEAVQKITTESIVIWGKTPKFKLPIQKETWETWWTEYWQATWIPEWEFVNTPPLVKLWYQLEKEPIVGAETFYVDGAANRETKLGKAGYVTNKGRQKVVPLTNTTNQKTELQAIYLALQDSGLEVNIVTDSQYALGIIQAQPDKSESELVNQIIEQLIKKEKVYLAWVPAHKGIGGNEQVDKLVSAGIRKILFLDGIDKAQDEHEKYHSNWRAMASDFNLPPVVAKEIVASCDKCQLKGEAMHGQVDCSPGIWQLDCTHLEGKVILVAVHVASGYIEAEVIPAETGQETAYFLLKLAGRWPVKTIHTDNGSNFTSATVKAACWWAGIKQEFGIPYNPQSQGVVESMNKELKKIIGQVRDQAEHLKTAVQMAVFIHNFKRKGGIGGYSAGERIVDIIATDIQTKELQKQITKIQNFRVYYRDSRNPLWKGPAKLLWKGEGAVVIQDNSDIKVVPRRKAKIIRDYGKQMAGDDCVASRQDED</sequence>
<accession>P03366</accession>
<accession>P03368</accession>
<protein>
    <recommendedName>
        <fullName>Gag-Pol polyprotein</fullName>
    </recommendedName>
    <alternativeName>
        <fullName>Pr160Gag-Pol</fullName>
    </alternativeName>
    <component>
        <recommendedName>
            <fullName>Matrix protein p17</fullName>
            <shortName>MA</shortName>
        </recommendedName>
    </component>
    <component>
        <recommendedName>
            <fullName>Capsid protein p24</fullName>
            <shortName>CA</shortName>
        </recommendedName>
    </component>
    <component>
        <recommendedName>
            <fullName evidence="4">Spacer peptide 1</fullName>
            <shortName>SP1</shortName>
        </recommendedName>
        <alternativeName>
            <fullName>p2</fullName>
        </alternativeName>
    </component>
    <component>
        <recommendedName>
            <fullName>Nucleocapsid protein p7</fullName>
            <shortName>NC</shortName>
        </recommendedName>
    </component>
    <component>
        <recommendedName>
            <fullName>Transframe peptide</fullName>
            <shortName>TF</shortName>
        </recommendedName>
    </component>
    <component>
        <recommendedName>
            <fullName>p6-pol</fullName>
            <shortName>p6*</shortName>
        </recommendedName>
    </component>
    <component>
        <recommendedName>
            <fullName>Protease</fullName>
            <ecNumber>3.4.23.16</ecNumber>
        </recommendedName>
        <alternativeName>
            <fullName>PR</fullName>
        </alternativeName>
        <alternativeName>
            <fullName>Retropepsin</fullName>
        </alternativeName>
    </component>
    <component>
        <recommendedName>
            <fullName>Reverse transcriptase/ribonuclease H</fullName>
            <ecNumber evidence="26">2.7.7.49</ecNumber>
            <ecNumber evidence="26">2.7.7.7</ecNumber>
            <ecNumber evidence="26">3.1.26.13</ecNumber>
        </recommendedName>
        <alternativeName>
            <fullName>Exoribonuclease H</fullName>
            <ecNumber>3.1.13.2</ecNumber>
        </alternativeName>
        <alternativeName>
            <fullName>p66 RT</fullName>
        </alternativeName>
    </component>
    <component>
        <recommendedName>
            <fullName>p51 RT</fullName>
        </recommendedName>
    </component>
    <component>
        <recommendedName>
            <fullName>p15</fullName>
        </recommendedName>
    </component>
    <component>
        <recommendedName>
            <fullName>Integrase</fullName>
            <shortName>IN</shortName>
            <ecNumber evidence="3">2.7.7.-</ecNumber>
            <ecNumber evidence="3">3.1.-.-</ecNumber>
        </recommendedName>
    </component>
</protein>
<organism>
    <name type="scientific">Human immunodeficiency virus type 1 group M subtype B (isolate BH10)</name>
    <name type="common">HIV-1</name>
    <dbReference type="NCBI Taxonomy" id="11678"/>
    <lineage>
        <taxon>Viruses</taxon>
        <taxon>Riboviria</taxon>
        <taxon>Pararnavirae</taxon>
        <taxon>Artverviricota</taxon>
        <taxon>Revtraviricetes</taxon>
        <taxon>Ortervirales</taxon>
        <taxon>Retroviridae</taxon>
        <taxon>Orthoretrovirinae</taxon>
        <taxon>Lentivirus</taxon>
        <taxon>Human immunodeficiency virus type 1</taxon>
    </lineage>
</organism>
<name>POL_HV1B1</name>
<organismHost>
    <name type="scientific">Homo sapiens</name>
    <name type="common">Human</name>
    <dbReference type="NCBI Taxonomy" id="9606"/>
</organismHost>